<dbReference type="EC" id="3.6.5.2" evidence="17 40"/>
<dbReference type="EMBL" id="L00049">
    <property type="protein sequence ID" value="AAB59444.1"/>
    <property type="molecule type" value="Genomic_DNA"/>
</dbReference>
<dbReference type="EMBL" id="L00045">
    <property type="protein sequence ID" value="AAB59444.1"/>
    <property type="status" value="JOINED"/>
    <property type="molecule type" value="Genomic_DNA"/>
</dbReference>
<dbReference type="EMBL" id="L00046">
    <property type="protein sequence ID" value="AAB59444.1"/>
    <property type="status" value="JOINED"/>
    <property type="molecule type" value="Genomic_DNA"/>
</dbReference>
<dbReference type="EMBL" id="L00047">
    <property type="protein sequence ID" value="AAB59444.1"/>
    <property type="status" value="JOINED"/>
    <property type="molecule type" value="Genomic_DNA"/>
</dbReference>
<dbReference type="EMBL" id="L00048">
    <property type="protein sequence ID" value="AAB59445.1"/>
    <property type="molecule type" value="Genomic_DNA"/>
</dbReference>
<dbReference type="EMBL" id="L00045">
    <property type="protein sequence ID" value="AAB59445.1"/>
    <property type="status" value="JOINED"/>
    <property type="molecule type" value="Genomic_DNA"/>
</dbReference>
<dbReference type="EMBL" id="L00046">
    <property type="protein sequence ID" value="AAB59445.1"/>
    <property type="status" value="JOINED"/>
    <property type="molecule type" value="Genomic_DNA"/>
</dbReference>
<dbReference type="EMBL" id="L00047">
    <property type="protein sequence ID" value="AAB59445.1"/>
    <property type="status" value="JOINED"/>
    <property type="molecule type" value="Genomic_DNA"/>
</dbReference>
<dbReference type="EMBL" id="M54968">
    <property type="protein sequence ID" value="AAB41942.1"/>
    <property type="molecule type" value="mRNA"/>
</dbReference>
<dbReference type="EMBL" id="AF493917">
    <property type="protein sequence ID" value="AAM12631.1"/>
    <property type="molecule type" value="mRNA"/>
</dbReference>
<dbReference type="EMBL" id="BT007153">
    <property type="protein sequence ID" value="AAP35817.1"/>
    <property type="molecule type" value="mRNA"/>
</dbReference>
<dbReference type="EMBL" id="AK292510">
    <property type="protein sequence ID" value="BAF85199.1"/>
    <property type="molecule type" value="mRNA"/>
</dbReference>
<dbReference type="EMBL" id="CH471094">
    <property type="protein sequence ID" value="EAW96511.1"/>
    <property type="molecule type" value="Genomic_DNA"/>
</dbReference>
<dbReference type="EMBL" id="CH471094">
    <property type="protein sequence ID" value="EAW96512.1"/>
    <property type="molecule type" value="Genomic_DNA"/>
</dbReference>
<dbReference type="EMBL" id="EU332849">
    <property type="protein sequence ID" value="ABY87538.1"/>
    <property type="molecule type" value="Genomic_DNA"/>
</dbReference>
<dbReference type="EMBL" id="BC013572">
    <property type="protein sequence ID" value="AAH13572.1"/>
    <property type="molecule type" value="mRNA"/>
</dbReference>
<dbReference type="EMBL" id="K01519">
    <property type="status" value="NOT_ANNOTATED_CDS"/>
    <property type="molecule type" value="Genomic_DNA"/>
</dbReference>
<dbReference type="EMBL" id="K01520">
    <property type="status" value="NOT_ANNOTATED_CDS"/>
    <property type="molecule type" value="Genomic_DNA"/>
</dbReference>
<dbReference type="EMBL" id="M25876">
    <property type="protein sequence ID" value="AAA35683.1"/>
    <property type="molecule type" value="Genomic_DNA"/>
</dbReference>
<dbReference type="EMBL" id="M34904">
    <property type="protein sequence ID" value="AAA36149.1"/>
    <property type="molecule type" value="Genomic_DNA"/>
</dbReference>
<dbReference type="EMBL" id="M30539">
    <property type="protein sequence ID" value="AAA36557.1"/>
    <property type="molecule type" value="Genomic_DNA"/>
</dbReference>
<dbReference type="EMBL" id="X01669">
    <property type="protein sequence ID" value="CAA25828.1"/>
    <property type="molecule type" value="Genomic_DNA"/>
</dbReference>
<dbReference type="EMBL" id="X02825">
    <property type="protein sequence ID" value="CAA26593.1"/>
    <property type="molecule type" value="Genomic_DNA"/>
</dbReference>
<dbReference type="EMBL" id="K03210">
    <property type="protein sequence ID" value="AAA36554.1"/>
    <property type="molecule type" value="Genomic_DNA"/>
</dbReference>
<dbReference type="EMBL" id="K03209">
    <property type="protein sequence ID" value="AAA36554.1"/>
    <property type="status" value="JOINED"/>
    <property type="molecule type" value="Genomic_DNA"/>
</dbReference>
<dbReference type="CCDS" id="CCDS8702.1">
    <molecule id="P01116-2"/>
</dbReference>
<dbReference type="CCDS" id="CCDS8703.1">
    <molecule id="P01116-1"/>
</dbReference>
<dbReference type="PIR" id="A93311">
    <property type="entry name" value="TVHUK"/>
</dbReference>
<dbReference type="PIR" id="B93311">
    <property type="entry name" value="TVHU2K"/>
</dbReference>
<dbReference type="RefSeq" id="NP_001356715.1">
    <molecule id="P01116-1"/>
    <property type="nucleotide sequence ID" value="NM_001369786.1"/>
</dbReference>
<dbReference type="RefSeq" id="NP_001356716.1">
    <molecule id="P01116-2"/>
    <property type="nucleotide sequence ID" value="NM_001369787.1"/>
</dbReference>
<dbReference type="RefSeq" id="NP_004976.2">
    <molecule id="P01116-2"/>
    <property type="nucleotide sequence ID" value="NM_004985.4"/>
</dbReference>
<dbReference type="RefSeq" id="NP_203524.1">
    <molecule id="P01116-1"/>
    <property type="nucleotide sequence ID" value="NM_033360.4"/>
</dbReference>
<dbReference type="RefSeq" id="XP_006719132.1">
    <property type="nucleotide sequence ID" value="XM_006719069.3"/>
</dbReference>
<dbReference type="RefSeq" id="XP_011518955.1">
    <property type="nucleotide sequence ID" value="XM_011520653.2"/>
</dbReference>
<dbReference type="PDB" id="1D8D">
    <property type="method" value="X-ray"/>
    <property type="resolution" value="2.00 A"/>
    <property type="chains" value="P=178-188"/>
</dbReference>
<dbReference type="PDB" id="1D8E">
    <property type="method" value="X-ray"/>
    <property type="resolution" value="3.00 A"/>
    <property type="chains" value="P=178-188"/>
</dbReference>
<dbReference type="PDB" id="1KZO">
    <property type="method" value="X-ray"/>
    <property type="resolution" value="2.20 A"/>
    <property type="chains" value="C=169-173"/>
</dbReference>
<dbReference type="PDB" id="1KZP">
    <property type="method" value="X-ray"/>
    <property type="resolution" value="2.10 A"/>
    <property type="chains" value="C=169-173"/>
</dbReference>
<dbReference type="PDB" id="1N4P">
    <property type="method" value="X-ray"/>
    <property type="resolution" value="2.65 A"/>
    <property type="chains" value="M/N=185-189"/>
</dbReference>
<dbReference type="PDB" id="1N4Q">
    <property type="method" value="X-ray"/>
    <property type="resolution" value="2.40 A"/>
    <property type="chains" value="M/N/O/P/Q/R=185-189"/>
</dbReference>
<dbReference type="PDB" id="1N4R">
    <property type="method" value="X-ray"/>
    <property type="resolution" value="2.80 A"/>
    <property type="chains" value="M/N/O/P/Q/R=185-189"/>
</dbReference>
<dbReference type="PDB" id="1N4S">
    <property type="method" value="X-ray"/>
    <property type="resolution" value="2.60 A"/>
    <property type="chains" value="M/N/O/P/Q/R=185-189"/>
</dbReference>
<dbReference type="PDB" id="2MSC">
    <property type="method" value="NMR"/>
    <property type="chains" value="B=1-186"/>
</dbReference>
<dbReference type="PDB" id="2MSD">
    <property type="method" value="NMR"/>
    <property type="chains" value="B=1-186"/>
</dbReference>
<dbReference type="PDB" id="2MSE">
    <property type="method" value="NMR"/>
    <property type="chains" value="B=1-186"/>
</dbReference>
<dbReference type="PDB" id="3GFT">
    <property type="method" value="X-ray"/>
    <property type="resolution" value="2.27 A"/>
    <property type="chains" value="A/B/C/D/E/F=1-164"/>
</dbReference>
<dbReference type="PDB" id="4DSN">
    <property type="method" value="X-ray"/>
    <property type="resolution" value="2.03 A"/>
    <property type="chains" value="A=2-164"/>
</dbReference>
<dbReference type="PDB" id="4DSO">
    <property type="method" value="X-ray"/>
    <property type="resolution" value="1.85 A"/>
    <property type="chains" value="A=2-164"/>
</dbReference>
<dbReference type="PDB" id="4EPR">
    <property type="method" value="X-ray"/>
    <property type="resolution" value="2.00 A"/>
    <property type="chains" value="A=1-164"/>
</dbReference>
<dbReference type="PDB" id="4EPT">
    <property type="method" value="X-ray"/>
    <property type="resolution" value="2.00 A"/>
    <property type="chains" value="A=1-164"/>
</dbReference>
<dbReference type="PDB" id="4EPV">
    <property type="method" value="X-ray"/>
    <property type="resolution" value="1.35 A"/>
    <property type="chains" value="A=1-164"/>
</dbReference>
<dbReference type="PDB" id="4EPW">
    <property type="method" value="X-ray"/>
    <property type="resolution" value="1.70 A"/>
    <property type="chains" value="A=1-164"/>
</dbReference>
<dbReference type="PDB" id="4EPX">
    <property type="method" value="X-ray"/>
    <property type="resolution" value="1.76 A"/>
    <property type="chains" value="A=1-164"/>
</dbReference>
<dbReference type="PDB" id="4EPY">
    <property type="method" value="X-ray"/>
    <property type="resolution" value="1.80 A"/>
    <property type="chains" value="A=1-164"/>
</dbReference>
<dbReference type="PDB" id="4L8G">
    <property type="method" value="X-ray"/>
    <property type="resolution" value="1.52 A"/>
    <property type="chains" value="A=1-169"/>
</dbReference>
<dbReference type="PDB" id="4LDJ">
    <property type="method" value="X-ray"/>
    <property type="resolution" value="1.15 A"/>
    <property type="chains" value="A=1-164"/>
</dbReference>
<dbReference type="PDB" id="4LPK">
    <property type="method" value="X-ray"/>
    <property type="resolution" value="1.50 A"/>
    <property type="chains" value="A/B=1-169"/>
</dbReference>
<dbReference type="PDB" id="4LRW">
    <property type="method" value="X-ray"/>
    <property type="resolution" value="2.15 A"/>
    <property type="chains" value="A/B=1-169"/>
</dbReference>
<dbReference type="PDB" id="4LUC">
    <property type="method" value="X-ray"/>
    <property type="resolution" value="1.29 A"/>
    <property type="chains" value="A/B=1-169"/>
</dbReference>
<dbReference type="PDB" id="4LV6">
    <property type="method" value="X-ray"/>
    <property type="resolution" value="1.50 A"/>
    <property type="chains" value="A/B=1-169"/>
</dbReference>
<dbReference type="PDB" id="4LYF">
    <property type="method" value="X-ray"/>
    <property type="resolution" value="1.57 A"/>
    <property type="chains" value="A/B/C=1-169"/>
</dbReference>
<dbReference type="PDB" id="4LYH">
    <property type="method" value="X-ray"/>
    <property type="resolution" value="1.37 A"/>
    <property type="chains" value="A/B/C=1-169"/>
</dbReference>
<dbReference type="PDB" id="4LYJ">
    <property type="method" value="X-ray"/>
    <property type="resolution" value="1.93 A"/>
    <property type="chains" value="A=1-169"/>
</dbReference>
<dbReference type="PDB" id="4M1O">
    <property type="method" value="X-ray"/>
    <property type="resolution" value="1.57 A"/>
    <property type="chains" value="A/B/C=1-169"/>
</dbReference>
<dbReference type="PDB" id="4M1S">
    <property type="method" value="X-ray"/>
    <property type="resolution" value="1.55 A"/>
    <property type="chains" value="A/B/C=1-169"/>
</dbReference>
<dbReference type="PDB" id="4M1T">
    <property type="method" value="X-ray"/>
    <property type="resolution" value="1.70 A"/>
    <property type="chains" value="A/B/C=1-169"/>
</dbReference>
<dbReference type="PDB" id="4M1W">
    <property type="method" value="X-ray"/>
    <property type="resolution" value="1.58 A"/>
    <property type="chains" value="A/B/C=1-169"/>
</dbReference>
<dbReference type="PDB" id="4M1Y">
    <property type="method" value="X-ray"/>
    <property type="resolution" value="1.49 A"/>
    <property type="chains" value="A/B/C=1-169"/>
</dbReference>
<dbReference type="PDB" id="4M21">
    <property type="method" value="X-ray"/>
    <property type="resolution" value="1.94 A"/>
    <property type="chains" value="A/B/C=1-169"/>
</dbReference>
<dbReference type="PDB" id="4M22">
    <property type="method" value="X-ray"/>
    <property type="resolution" value="2.09 A"/>
    <property type="chains" value="A/B/C=1-169"/>
</dbReference>
<dbReference type="PDB" id="4NMM">
    <property type="method" value="X-ray"/>
    <property type="resolution" value="1.89 A"/>
    <property type="chains" value="A=1-164"/>
</dbReference>
<dbReference type="PDB" id="4OBE">
    <property type="method" value="X-ray"/>
    <property type="resolution" value="1.24 A"/>
    <property type="chains" value="A/B=1-164"/>
</dbReference>
<dbReference type="PDB" id="4PZY">
    <property type="method" value="X-ray"/>
    <property type="resolution" value="1.88 A"/>
    <property type="chains" value="A/B=1-164"/>
</dbReference>
<dbReference type="PDB" id="4PZZ">
    <property type="method" value="X-ray"/>
    <property type="resolution" value="1.40 A"/>
    <property type="chains" value="A=1-164"/>
</dbReference>
<dbReference type="PDB" id="4Q01">
    <property type="method" value="X-ray"/>
    <property type="resolution" value="1.29 A"/>
    <property type="chains" value="A/B=1-164"/>
</dbReference>
<dbReference type="PDB" id="4Q02">
    <property type="method" value="X-ray"/>
    <property type="resolution" value="1.70 A"/>
    <property type="chains" value="A=1-164"/>
</dbReference>
<dbReference type="PDB" id="4Q03">
    <property type="method" value="X-ray"/>
    <property type="resolution" value="1.20 A"/>
    <property type="chains" value="A=1-164"/>
</dbReference>
<dbReference type="PDB" id="4QL3">
    <property type="method" value="X-ray"/>
    <property type="resolution" value="1.04 A"/>
    <property type="chains" value="A=1-11, A=13-164"/>
</dbReference>
<dbReference type="PDB" id="4TQ9">
    <property type="method" value="X-ray"/>
    <property type="resolution" value="1.49 A"/>
    <property type="chains" value="A/B=1-164"/>
</dbReference>
<dbReference type="PDB" id="4TQA">
    <property type="method" value="X-ray"/>
    <property type="resolution" value="1.13 A"/>
    <property type="chains" value="A/B=1-164"/>
</dbReference>
<dbReference type="PDB" id="4WA7">
    <property type="method" value="X-ray"/>
    <property type="resolution" value="1.99 A"/>
    <property type="chains" value="A=1-164"/>
</dbReference>
<dbReference type="PDB" id="5F2E">
    <property type="method" value="X-ray"/>
    <property type="resolution" value="1.40 A"/>
    <property type="chains" value="A=1-169"/>
</dbReference>
<dbReference type="PDB" id="5KYK">
    <property type="method" value="X-ray"/>
    <property type="resolution" value="2.70 A"/>
    <property type="chains" value="A/B/C=1-167"/>
</dbReference>
<dbReference type="PDB" id="5MLA">
    <property type="method" value="X-ray"/>
    <property type="resolution" value="2.19 A"/>
    <property type="chains" value="A=1-166"/>
</dbReference>
<dbReference type="PDB" id="5MLB">
    <property type="method" value="X-ray"/>
    <property type="resolution" value="3.22 A"/>
    <property type="chains" value="A/C/E/G=1-166"/>
</dbReference>
<dbReference type="PDB" id="5O2S">
    <property type="method" value="X-ray"/>
    <property type="resolution" value="3.22 A"/>
    <property type="chains" value="A/C/E/G=1-166"/>
</dbReference>
<dbReference type="PDB" id="5O2T">
    <property type="method" value="X-ray"/>
    <property type="resolution" value="2.19 A"/>
    <property type="chains" value="A=1-166"/>
</dbReference>
<dbReference type="PDB" id="5OCG">
    <property type="method" value="X-ray"/>
    <property type="resolution" value="1.48 A"/>
    <property type="chains" value="A=2-189"/>
</dbReference>
<dbReference type="PDB" id="5OCO">
    <property type="method" value="X-ray"/>
    <property type="resolution" value="1.66 A"/>
    <property type="chains" value="A/B/C/D/E/F=1-169"/>
</dbReference>
<dbReference type="PDB" id="5OCT">
    <property type="method" value="X-ray"/>
    <property type="resolution" value="2.07 A"/>
    <property type="chains" value="A/B/C/D/E/F=1-169"/>
</dbReference>
<dbReference type="PDB" id="5TAR">
    <property type="method" value="X-ray"/>
    <property type="resolution" value="1.90 A"/>
    <property type="chains" value="A=2-164"/>
</dbReference>
<dbReference type="PDB" id="5TB5">
    <property type="method" value="X-ray"/>
    <property type="resolution" value="2.00 A"/>
    <property type="chains" value="A/C=2-164"/>
</dbReference>
<dbReference type="PDB" id="5UFE">
    <property type="method" value="X-ray"/>
    <property type="resolution" value="2.30 A"/>
    <property type="chains" value="A=1-166"/>
</dbReference>
<dbReference type="PDB" id="5UFQ">
    <property type="method" value="X-ray"/>
    <property type="resolution" value="2.20 A"/>
    <property type="chains" value="A/B=1-166"/>
</dbReference>
<dbReference type="PDB" id="5UK9">
    <property type="method" value="X-ray"/>
    <property type="resolution" value="1.89 A"/>
    <property type="chains" value="A/B=1-166"/>
</dbReference>
<dbReference type="PDB" id="5UQW">
    <property type="method" value="X-ray"/>
    <property type="resolution" value="1.50 A"/>
    <property type="chains" value="A/B=1-164"/>
</dbReference>
<dbReference type="PDB" id="5US4">
    <property type="method" value="X-ray"/>
    <property type="resolution" value="1.83 A"/>
    <property type="chains" value="A/B=1-164"/>
</dbReference>
<dbReference type="PDB" id="5USJ">
    <property type="method" value="X-ray"/>
    <property type="resolution" value="1.94 A"/>
    <property type="chains" value="A/B/C/D/E/F=1-164"/>
</dbReference>
<dbReference type="PDB" id="5V6S">
    <property type="method" value="X-ray"/>
    <property type="resolution" value="1.70 A"/>
    <property type="chains" value="A=1-169"/>
</dbReference>
<dbReference type="PDB" id="5V6V">
    <property type="method" value="X-ray"/>
    <property type="resolution" value="1.72 A"/>
    <property type="chains" value="A/B=1-169"/>
</dbReference>
<dbReference type="PDB" id="5V71">
    <property type="method" value="X-ray"/>
    <property type="resolution" value="2.23 A"/>
    <property type="chains" value="A/B/C/D/E/F=1-167"/>
</dbReference>
<dbReference type="PDB" id="5V9L">
    <property type="method" value="X-ray"/>
    <property type="resolution" value="1.98 A"/>
    <property type="chains" value="A/B/C=1-167"/>
</dbReference>
<dbReference type="PDB" id="5V9O">
    <property type="method" value="X-ray"/>
    <property type="resolution" value="1.56 A"/>
    <property type="chains" value="A=1-167"/>
</dbReference>
<dbReference type="PDB" id="5V9U">
    <property type="method" value="X-ray"/>
    <property type="resolution" value="1.38 A"/>
    <property type="chains" value="A/B=1-169"/>
</dbReference>
<dbReference type="PDB" id="5VBM">
    <property type="method" value="X-ray"/>
    <property type="resolution" value="1.49 A"/>
    <property type="chains" value="A=1-169"/>
</dbReference>
<dbReference type="PDB" id="5VP7">
    <property type="method" value="X-ray"/>
    <property type="resolution" value="1.70 A"/>
    <property type="chains" value="A/F=1-169"/>
</dbReference>
<dbReference type="PDB" id="5VPI">
    <property type="method" value="X-ray"/>
    <property type="resolution" value="1.62 A"/>
    <property type="chains" value="A/B=1-169"/>
</dbReference>
<dbReference type="PDB" id="5VPY">
    <property type="method" value="X-ray"/>
    <property type="resolution" value="2.00 A"/>
    <property type="chains" value="A/B=1-169"/>
</dbReference>
<dbReference type="PDB" id="5VPZ">
    <property type="method" value="X-ray"/>
    <property type="resolution" value="1.85 A"/>
    <property type="chains" value="A/B=1-169"/>
</dbReference>
<dbReference type="PDB" id="5VQ0">
    <property type="method" value="X-ray"/>
    <property type="resolution" value="2.30 A"/>
    <property type="chains" value="A/B=1-169"/>
</dbReference>
<dbReference type="PDB" id="5VQ1">
    <property type="method" value="X-ray"/>
    <property type="resolution" value="1.78 A"/>
    <property type="chains" value="A/B=1-169"/>
</dbReference>
<dbReference type="PDB" id="5VQ2">
    <property type="method" value="X-ray"/>
    <property type="resolution" value="1.96 A"/>
    <property type="chains" value="A/B=1-169"/>
</dbReference>
<dbReference type="PDB" id="5VQ6">
    <property type="method" value="X-ray"/>
    <property type="resolution" value="1.99 A"/>
    <property type="chains" value="A/B=1-169"/>
</dbReference>
<dbReference type="PDB" id="5VQ8">
    <property type="method" value="X-ray"/>
    <property type="resolution" value="2.30 A"/>
    <property type="chains" value="A/B=1-169"/>
</dbReference>
<dbReference type="PDB" id="5W22">
    <property type="method" value="X-ray"/>
    <property type="resolution" value="1.76 A"/>
    <property type="chains" value="A/B=1-169"/>
</dbReference>
<dbReference type="PDB" id="5WHA">
    <property type="method" value="X-ray"/>
    <property type="resolution" value="2.04 A"/>
    <property type="chains" value="A/D/G/J=1-166"/>
</dbReference>
<dbReference type="PDB" id="5WHB">
    <property type="method" value="X-ray"/>
    <property type="resolution" value="2.18 A"/>
    <property type="chains" value="A/D/G/J=1-166"/>
</dbReference>
<dbReference type="PDB" id="5WHD">
    <property type="method" value="X-ray"/>
    <property type="resolution" value="1.64 A"/>
    <property type="chains" value="A/B/C/D=1-166"/>
</dbReference>
<dbReference type="PDB" id="5WHE">
    <property type="method" value="X-ray"/>
    <property type="resolution" value="1.91 A"/>
    <property type="chains" value="A/D/G/J=1-166"/>
</dbReference>
<dbReference type="PDB" id="5WLB">
    <property type="method" value="X-ray"/>
    <property type="resolution" value="1.72 A"/>
    <property type="chains" value="A/D=1-166"/>
</dbReference>
<dbReference type="PDB" id="5WPM">
    <property type="method" value="X-ray"/>
    <property type="resolution" value="1.72 A"/>
    <property type="chains" value="A=1-166"/>
</dbReference>
<dbReference type="PDB" id="5XCO">
    <property type="method" value="X-ray"/>
    <property type="resolution" value="1.25 A"/>
    <property type="chains" value="A=1-169"/>
</dbReference>
<dbReference type="PDB" id="5YXZ">
    <property type="method" value="X-ray"/>
    <property type="resolution" value="1.70 A"/>
    <property type="chains" value="A=1-169"/>
</dbReference>
<dbReference type="PDB" id="5YY1">
    <property type="method" value="X-ray"/>
    <property type="resolution" value="1.69 A"/>
    <property type="chains" value="A=1-169"/>
</dbReference>
<dbReference type="PDB" id="6ARK">
    <property type="method" value="X-ray"/>
    <property type="resolution" value="1.75 A"/>
    <property type="chains" value="A=1-169"/>
</dbReference>
<dbReference type="PDB" id="6ASA">
    <property type="method" value="X-ray"/>
    <property type="resolution" value="2.54 A"/>
    <property type="chains" value="A=1-167"/>
</dbReference>
<dbReference type="PDB" id="6ASE">
    <property type="method" value="X-ray"/>
    <property type="resolution" value="1.55 A"/>
    <property type="chains" value="A=1-169"/>
</dbReference>
<dbReference type="PDB" id="6B0V">
    <property type="method" value="X-ray"/>
    <property type="resolution" value="1.29 A"/>
    <property type="chains" value="A/B=1-169"/>
</dbReference>
<dbReference type="PDB" id="6B0Y">
    <property type="method" value="X-ray"/>
    <property type="resolution" value="1.43 A"/>
    <property type="chains" value="A/B=1-169"/>
</dbReference>
<dbReference type="PDB" id="6BOF">
    <property type="method" value="X-ray"/>
    <property type="resolution" value="1.40 A"/>
    <property type="chains" value="A/B=2-169"/>
</dbReference>
<dbReference type="PDB" id="6BP1">
    <property type="method" value="X-ray"/>
    <property type="resolution" value="2.00 A"/>
    <property type="chains" value="A=1-169"/>
</dbReference>
<dbReference type="PDB" id="6CC9">
    <property type="method" value="NMR"/>
    <property type="chains" value="B=1-186"/>
</dbReference>
<dbReference type="PDB" id="6CCH">
    <property type="method" value="NMR"/>
    <property type="chains" value="B=1-186"/>
</dbReference>
<dbReference type="PDB" id="6CCX">
    <property type="method" value="NMR"/>
    <property type="chains" value="B=1-186"/>
</dbReference>
<dbReference type="PDB" id="6CU6">
    <property type="method" value="X-ray"/>
    <property type="resolution" value="1.50 A"/>
    <property type="chains" value="A/B/C=1-169"/>
</dbReference>
<dbReference type="PDB" id="6E6F">
    <property type="method" value="X-ray"/>
    <property type="resolution" value="3.40 A"/>
    <property type="chains" value="A/B=1-166"/>
</dbReference>
<dbReference type="PDB" id="6E6G">
    <property type="method" value="X-ray"/>
    <property type="resolution" value="1.93 A"/>
    <property type="chains" value="A=1-166"/>
</dbReference>
<dbReference type="PDB" id="6EPL">
    <property type="method" value="X-ray"/>
    <property type="resolution" value="2.55 A"/>
    <property type="chains" value="R=1-169"/>
</dbReference>
<dbReference type="PDB" id="6EPM">
    <property type="method" value="X-ray"/>
    <property type="resolution" value="2.50 A"/>
    <property type="chains" value="R=1-169"/>
</dbReference>
<dbReference type="PDB" id="6EPN">
    <property type="method" value="X-ray"/>
    <property type="resolution" value="2.50 A"/>
    <property type="chains" value="R=1-169"/>
</dbReference>
<dbReference type="PDB" id="6EPO">
    <property type="method" value="X-ray"/>
    <property type="resolution" value="2.40 A"/>
    <property type="chains" value="R=1-169"/>
</dbReference>
<dbReference type="PDB" id="6EPP">
    <property type="method" value="X-ray"/>
    <property type="resolution" value="2.40 A"/>
    <property type="chains" value="R=1-169"/>
</dbReference>
<dbReference type="PDB" id="6F76">
    <property type="method" value="X-ray"/>
    <property type="resolution" value="2.20 A"/>
    <property type="chains" value="A/B/C/D/E/F=1-169"/>
</dbReference>
<dbReference type="PDB" id="6FA1">
    <property type="method" value="X-ray"/>
    <property type="resolution" value="1.97 A"/>
    <property type="chains" value="A/C/D/F=1-167, B/E=1-169"/>
</dbReference>
<dbReference type="PDB" id="6FA2">
    <property type="method" value="X-ray"/>
    <property type="resolution" value="2.60 A"/>
    <property type="chains" value="A/B/C/D/E/F=1-167"/>
</dbReference>
<dbReference type="PDB" id="6FA3">
    <property type="method" value="X-ray"/>
    <property type="resolution" value="1.82 A"/>
    <property type="chains" value="A/B/C/D/E/F=1-167"/>
</dbReference>
<dbReference type="PDB" id="6FA4">
    <property type="method" value="X-ray"/>
    <property type="resolution" value="2.02 A"/>
    <property type="chains" value="A/B/C/D/E/F=1-169"/>
</dbReference>
<dbReference type="PDB" id="6GJ5">
    <property type="method" value="X-ray"/>
    <property type="resolution" value="1.50 A"/>
    <property type="chains" value="A/B=1-169"/>
</dbReference>
<dbReference type="PDB" id="6GJ6">
    <property type="method" value="X-ray"/>
    <property type="resolution" value="1.76 A"/>
    <property type="chains" value="A=1-169"/>
</dbReference>
<dbReference type="PDB" id="6GJ7">
    <property type="method" value="X-ray"/>
    <property type="resolution" value="1.67 A"/>
    <property type="chains" value="A=1-169"/>
</dbReference>
<dbReference type="PDB" id="6GJ8">
    <property type="method" value="X-ray"/>
    <property type="resolution" value="1.65 A"/>
    <property type="chains" value="A=1-167"/>
</dbReference>
<dbReference type="PDB" id="6GOD">
    <property type="method" value="X-ray"/>
    <property type="resolution" value="1.71 A"/>
    <property type="chains" value="A=2-173"/>
</dbReference>
<dbReference type="PDB" id="6GOE">
    <property type="method" value="X-ray"/>
    <property type="resolution" value="1.60 A"/>
    <property type="chains" value="A=2-169"/>
</dbReference>
<dbReference type="PDB" id="6GOF">
    <property type="method" value="X-ray"/>
    <property type="resolution" value="1.98 A"/>
    <property type="chains" value="A=2-173"/>
</dbReference>
<dbReference type="PDB" id="6GOG">
    <property type="method" value="X-ray"/>
    <property type="resolution" value="2.05 A"/>
    <property type="chains" value="A/B/C/D/E/F=1-169"/>
</dbReference>
<dbReference type="PDB" id="6GOM">
    <property type="method" value="X-ray"/>
    <property type="resolution" value="1.63 A"/>
    <property type="chains" value="A/B/C/D/E/F=1-167"/>
</dbReference>
<dbReference type="PDB" id="6GQT">
    <property type="method" value="X-ray"/>
    <property type="resolution" value="1.69 A"/>
    <property type="chains" value="A/B/C/D/E/F=1-167"/>
</dbReference>
<dbReference type="PDB" id="6GQW">
    <property type="method" value="X-ray"/>
    <property type="resolution" value="2.80 A"/>
    <property type="chains" value="A/B/C/D/E/F=1-167"/>
</dbReference>
<dbReference type="PDB" id="6GQX">
    <property type="method" value="X-ray"/>
    <property type="resolution" value="2.20 A"/>
    <property type="chains" value="A/B/C/D/E/F=1-167"/>
</dbReference>
<dbReference type="PDB" id="6GQY">
    <property type="method" value="X-ray"/>
    <property type="resolution" value="2.75 A"/>
    <property type="chains" value="A/B/C/D/E/F=1-167"/>
</dbReference>
<dbReference type="PDB" id="6H46">
    <property type="method" value="X-ray"/>
    <property type="resolution" value="2.22 A"/>
    <property type="chains" value="A=1-166"/>
</dbReference>
<dbReference type="PDB" id="6H47">
    <property type="method" value="X-ray"/>
    <property type="resolution" value="1.70 A"/>
    <property type="chains" value="A=1-166"/>
</dbReference>
<dbReference type="PDB" id="6JTN">
    <property type="method" value="X-ray"/>
    <property type="resolution" value="1.90 A"/>
    <property type="chains" value="C=10-19"/>
</dbReference>
<dbReference type="PDB" id="6JTO">
    <property type="method" value="X-ray"/>
    <property type="resolution" value="1.70 A"/>
    <property type="chains" value="C=10-19"/>
</dbReference>
<dbReference type="PDB" id="6JTP">
    <property type="method" value="X-ray"/>
    <property type="resolution" value="1.90 A"/>
    <property type="chains" value="C=10-18"/>
</dbReference>
<dbReference type="PDB" id="6M9W">
    <property type="method" value="X-ray"/>
    <property type="resolution" value="1.50 A"/>
    <property type="chains" value="A=2-169"/>
</dbReference>
<dbReference type="PDB" id="6MBQ">
    <property type="method" value="X-ray"/>
    <property type="resolution" value="1.35 A"/>
    <property type="chains" value="A=2-166"/>
</dbReference>
<dbReference type="PDB" id="6MBT">
    <property type="method" value="X-ray"/>
    <property type="resolution" value="1.45 A"/>
    <property type="chains" value="A/B=1-169"/>
</dbReference>
<dbReference type="PDB" id="6MBU">
    <property type="method" value="X-ray"/>
    <property type="resolution" value="1.45 A"/>
    <property type="chains" value="A/B=1-169"/>
</dbReference>
<dbReference type="PDB" id="6MNX">
    <property type="method" value="X-ray"/>
    <property type="resolution" value="2.20 A"/>
    <property type="chains" value="A/B/C/D/E/F=1-169"/>
</dbReference>
<dbReference type="PDB" id="6MQG">
    <property type="method" value="X-ray"/>
    <property type="resolution" value="1.50 A"/>
    <property type="chains" value="A=3-169"/>
</dbReference>
<dbReference type="PDB" id="6MQN">
    <property type="method" value="X-ray"/>
    <property type="resolution" value="1.60 A"/>
    <property type="chains" value="A/B/C=1-169"/>
</dbReference>
<dbReference type="PDB" id="6MS9">
    <property type="method" value="X-ray"/>
    <property type="resolution" value="1.49 A"/>
    <property type="chains" value="A/B/C=1-169"/>
</dbReference>
<dbReference type="PDB" id="6MTA">
    <property type="method" value="X-ray"/>
    <property type="resolution" value="2.15 A"/>
    <property type="chains" value="A/B/C=1-169"/>
</dbReference>
<dbReference type="PDB" id="6N2J">
    <property type="method" value="X-ray"/>
    <property type="resolution" value="1.80 A"/>
    <property type="chains" value="A=1-169"/>
</dbReference>
<dbReference type="PDB" id="6N2K">
    <property type="method" value="X-ray"/>
    <property type="resolution" value="1.72 A"/>
    <property type="chains" value="A=1-169"/>
</dbReference>
<dbReference type="PDB" id="6O36">
    <property type="method" value="X-ray"/>
    <property type="resolution" value="2.00 A"/>
    <property type="chains" value="A/B/C=1-167"/>
</dbReference>
<dbReference type="PDB" id="6O46">
    <property type="method" value="X-ray"/>
    <property type="resolution" value="1.90 A"/>
    <property type="chains" value="A/B/C=1-167"/>
</dbReference>
<dbReference type="PDB" id="6O4Y">
    <property type="method" value="X-ray"/>
    <property type="resolution" value="1.58 A"/>
    <property type="chains" value="C=7-14"/>
</dbReference>
<dbReference type="PDB" id="6O4Z">
    <property type="method" value="X-ray"/>
    <property type="resolution" value="1.50 A"/>
    <property type="chains" value="C=5-12"/>
</dbReference>
<dbReference type="PDB" id="6O51">
    <property type="method" value="X-ray"/>
    <property type="resolution" value="1.55 A"/>
    <property type="chains" value="C=6-14"/>
</dbReference>
<dbReference type="PDB" id="6O53">
    <property type="method" value="X-ray"/>
    <property type="resolution" value="1.40 A"/>
    <property type="chains" value="C=5-14"/>
</dbReference>
<dbReference type="PDB" id="6OB2">
    <property type="method" value="X-ray"/>
    <property type="resolution" value="2.85 A"/>
    <property type="chains" value="A/C=1-169"/>
</dbReference>
<dbReference type="PDB" id="6OB3">
    <property type="method" value="X-ray"/>
    <property type="resolution" value="2.10 A"/>
    <property type="chains" value="A/C=1-169"/>
</dbReference>
<dbReference type="PDB" id="6OIM">
    <property type="method" value="X-ray"/>
    <property type="resolution" value="1.65 A"/>
    <property type="chains" value="A=1-169"/>
</dbReference>
<dbReference type="PDB" id="6P0Z">
    <property type="method" value="X-ray"/>
    <property type="resolution" value="1.01 A"/>
    <property type="chains" value="A/B=2-169"/>
</dbReference>
<dbReference type="PDB" id="6P8W">
    <property type="method" value="X-ray"/>
    <property type="resolution" value="2.10 A"/>
    <property type="chains" value="A/B=1-169"/>
</dbReference>
<dbReference type="PDB" id="6P8X">
    <property type="method" value="X-ray"/>
    <property type="resolution" value="2.11 A"/>
    <property type="chains" value="A/B/C/D=1-169"/>
</dbReference>
<dbReference type="PDB" id="6P8Y">
    <property type="method" value="X-ray"/>
    <property type="resolution" value="2.31 A"/>
    <property type="chains" value="A/B=1-169"/>
</dbReference>
<dbReference type="PDB" id="6P8Z">
    <property type="method" value="X-ray"/>
    <property type="resolution" value="1.65 A"/>
    <property type="chains" value="A/B=1-169"/>
</dbReference>
<dbReference type="PDB" id="6PGO">
    <property type="method" value="X-ray"/>
    <property type="resolution" value="1.60 A"/>
    <property type="chains" value="A/B=1-169"/>
</dbReference>
<dbReference type="PDB" id="6PGP">
    <property type="method" value="X-ray"/>
    <property type="resolution" value="1.50 A"/>
    <property type="chains" value="A/B=1-169"/>
</dbReference>
<dbReference type="PDB" id="6PQ3">
    <property type="method" value="X-ray"/>
    <property type="resolution" value="1.75 A"/>
    <property type="chains" value="A=1-169"/>
</dbReference>
<dbReference type="PDB" id="6PTS">
    <property type="method" value="NMR"/>
    <property type="chains" value="B=1-186"/>
</dbReference>
<dbReference type="PDB" id="6PTW">
    <property type="method" value="NMR"/>
    <property type="chains" value="B=1-186"/>
</dbReference>
<dbReference type="PDB" id="6QUU">
    <property type="method" value="X-ray"/>
    <property type="resolution" value="1.48 A"/>
    <property type="chains" value="A/B=1-169"/>
</dbReference>
<dbReference type="PDB" id="6QUV">
    <property type="method" value="X-ray"/>
    <property type="resolution" value="1.48 A"/>
    <property type="chains" value="A/B=1-169"/>
</dbReference>
<dbReference type="PDB" id="6QUW">
    <property type="method" value="X-ray"/>
    <property type="resolution" value="1.24 A"/>
    <property type="chains" value="A/B=1-169"/>
</dbReference>
<dbReference type="PDB" id="6QUX">
    <property type="method" value="X-ray"/>
    <property type="resolution" value="1.62 A"/>
    <property type="chains" value="A/B=1-169"/>
</dbReference>
<dbReference type="PDB" id="6T5B">
    <property type="method" value="X-ray"/>
    <property type="resolution" value="1.37 A"/>
    <property type="chains" value="A=1-169"/>
</dbReference>
<dbReference type="PDB" id="6T5U">
    <property type="method" value="X-ray"/>
    <property type="resolution" value="1.72 A"/>
    <property type="chains" value="B=1-166"/>
</dbReference>
<dbReference type="PDB" id="6T5V">
    <property type="method" value="X-ray"/>
    <property type="resolution" value="1.31 A"/>
    <property type="chains" value="A=1-169"/>
</dbReference>
<dbReference type="PDB" id="6TAM">
    <property type="method" value="X-ray"/>
    <property type="resolution" value="1.64 A"/>
    <property type="chains" value="A=1-169"/>
</dbReference>
<dbReference type="PDB" id="6TAN">
    <property type="method" value="X-ray"/>
    <property type="resolution" value="1.16 A"/>
    <property type="chains" value="A=1-169"/>
</dbReference>
<dbReference type="PDB" id="6USX">
    <property type="method" value="X-ray"/>
    <property type="resolution" value="2.27 A"/>
    <property type="chains" value="A/B=1-169"/>
</dbReference>
<dbReference type="PDB" id="6USZ">
    <property type="method" value="X-ray"/>
    <property type="resolution" value="2.03 A"/>
    <property type="chains" value="A=1-169"/>
</dbReference>
<dbReference type="PDB" id="6UT0">
    <property type="method" value="X-ray"/>
    <property type="resolution" value="1.94 A"/>
    <property type="chains" value="A/B/C/D=1-169"/>
</dbReference>
<dbReference type="PDB" id="6V5L">
    <property type="method" value="NMR"/>
    <property type="chains" value="A=1-169"/>
</dbReference>
<dbReference type="PDB" id="6V65">
    <property type="method" value="X-ray"/>
    <property type="resolution" value="2.76 A"/>
    <property type="chains" value="C=1-169"/>
</dbReference>
<dbReference type="PDB" id="6V6F">
    <property type="method" value="X-ray"/>
    <property type="resolution" value="2.54 A"/>
    <property type="chains" value="C=1-169"/>
</dbReference>
<dbReference type="PDB" id="6VC8">
    <property type="method" value="X-ray"/>
    <property type="resolution" value="2.50 A"/>
    <property type="chains" value="A/B/C=1-169"/>
</dbReference>
<dbReference type="PDB" id="6VJJ">
    <property type="method" value="X-ray"/>
    <property type="resolution" value="1.40 A"/>
    <property type="chains" value="A=1-169"/>
</dbReference>
<dbReference type="PDB" id="6W4E">
    <property type="method" value="NMR"/>
    <property type="chains" value="B/C=2-186"/>
</dbReference>
<dbReference type="PDB" id="6W4F">
    <property type="method" value="NMR"/>
    <property type="chains" value="B/C=2-186"/>
</dbReference>
<dbReference type="PDB" id="6WGN">
    <property type="method" value="X-ray"/>
    <property type="resolution" value="1.60 A"/>
    <property type="chains" value="A/B/C=1-169"/>
</dbReference>
<dbReference type="PDB" id="6WS2">
    <property type="method" value="X-ray"/>
    <property type="resolution" value="1.59 A"/>
    <property type="chains" value="A/B/C/D=1-169"/>
</dbReference>
<dbReference type="PDB" id="6WS4">
    <property type="method" value="X-ray"/>
    <property type="resolution" value="1.84 A"/>
    <property type="chains" value="A/B/C/D=1-169"/>
</dbReference>
<dbReference type="PDB" id="6XGU">
    <property type="method" value="X-ray"/>
    <property type="resolution" value="2.70 A"/>
    <property type="chains" value="A=1-169"/>
</dbReference>
<dbReference type="PDB" id="6XGV">
    <property type="method" value="X-ray"/>
    <property type="resolution" value="2.11 A"/>
    <property type="chains" value="A=1-169"/>
</dbReference>
<dbReference type="PDB" id="6XHA">
    <property type="method" value="X-ray"/>
    <property type="resolution" value="2.87 A"/>
    <property type="chains" value="A=1-169"/>
</dbReference>
<dbReference type="PDB" id="6XHB">
    <property type="method" value="X-ray"/>
    <property type="resolution" value="2.50 A"/>
    <property type="chains" value="A=1-169"/>
</dbReference>
<dbReference type="PDB" id="6YR8">
    <property type="method" value="X-ray"/>
    <property type="resolution" value="1.90 A"/>
    <property type="chains" value="A=1-166"/>
</dbReference>
<dbReference type="PDB" id="6YXW">
    <property type="method" value="X-ray"/>
    <property type="resolution" value="2.06 A"/>
    <property type="chains" value="A/C=1-167"/>
</dbReference>
<dbReference type="PDB" id="6ZL5">
    <property type="method" value="X-ray"/>
    <property type="resolution" value="1.65 A"/>
    <property type="chains" value="A=1-169"/>
</dbReference>
<dbReference type="PDB" id="6ZLI">
    <property type="method" value="X-ray"/>
    <property type="resolution" value="1.73 A"/>
    <property type="chains" value="A/B=1-169"/>
</dbReference>
<dbReference type="PDB" id="7A1W">
    <property type="method" value="X-ray"/>
    <property type="resolution" value="1.76 A"/>
    <property type="chains" value="A=1-169"/>
</dbReference>
<dbReference type="PDB" id="7A1X">
    <property type="method" value="X-ray"/>
    <property type="resolution" value="1.32 A"/>
    <property type="chains" value="A=1-164"/>
</dbReference>
<dbReference type="PDB" id="7A1Y">
    <property type="method" value="X-ray"/>
    <property type="resolution" value="2.00 A"/>
    <property type="chains" value="A=1-164"/>
</dbReference>
<dbReference type="PDB" id="7A47">
    <property type="method" value="X-ray"/>
    <property type="resolution" value="2.16 A"/>
    <property type="chains" value="A/C/E=1-169"/>
</dbReference>
<dbReference type="PDB" id="7ACA">
    <property type="method" value="X-ray"/>
    <property type="resolution" value="1.57 A"/>
    <property type="chains" value="A/B/C/D=1-169"/>
</dbReference>
<dbReference type="PDB" id="7ACF">
    <property type="method" value="X-ray"/>
    <property type="resolution" value="1.91 A"/>
    <property type="chains" value="A/B/C/D=1-169"/>
</dbReference>
<dbReference type="PDB" id="7ACH">
    <property type="method" value="X-ray"/>
    <property type="resolution" value="1.90 A"/>
    <property type="chains" value="A/B=1-169"/>
</dbReference>
<dbReference type="PDB" id="7ACQ">
    <property type="method" value="X-ray"/>
    <property type="resolution" value="1.86 A"/>
    <property type="chains" value="A/B/C=1-169"/>
</dbReference>
<dbReference type="PDB" id="7C40">
    <property type="method" value="X-ray"/>
    <property type="resolution" value="2.52 A"/>
    <property type="chains" value="A=1-167"/>
</dbReference>
<dbReference type="PDB" id="7C41">
    <property type="method" value="X-ray"/>
    <property type="resolution" value="2.28 A"/>
    <property type="chains" value="A/G/J/M=1-167"/>
</dbReference>
<dbReference type="PDB" id="7EW9">
    <property type="method" value="X-ray"/>
    <property type="resolution" value="2.13 A"/>
    <property type="chains" value="A/B/C=1-169"/>
</dbReference>
<dbReference type="PDB" id="7EWA">
    <property type="method" value="X-ray"/>
    <property type="resolution" value="2.25 A"/>
    <property type="chains" value="A/B/C=1-169"/>
</dbReference>
<dbReference type="PDB" id="7EWB">
    <property type="method" value="X-ray"/>
    <property type="resolution" value="1.99 A"/>
    <property type="chains" value="A/B/C=1-169"/>
</dbReference>
<dbReference type="PDB" id="7EYX">
    <property type="method" value="X-ray"/>
    <property type="resolution" value="1.82 A"/>
    <property type="chains" value="A=2-169"/>
</dbReference>
<dbReference type="PDB" id="7F0W">
    <property type="method" value="X-ray"/>
    <property type="resolution" value="1.39 A"/>
    <property type="chains" value="A=2-169"/>
</dbReference>
<dbReference type="PDB" id="7KFZ">
    <property type="method" value="EM"/>
    <property type="resolution" value="3.47 A"/>
    <property type="chains" value="A/C=1-169"/>
</dbReference>
<dbReference type="PDB" id="7KMR">
    <property type="method" value="X-ray"/>
    <property type="resolution" value="1.51 A"/>
    <property type="chains" value="A=1-186"/>
</dbReference>
<dbReference type="PDB" id="7KYZ">
    <property type="method" value="NMR"/>
    <property type="chains" value="A=1-189"/>
</dbReference>
<dbReference type="PDB" id="7LC1">
    <property type="method" value="X-ray"/>
    <property type="resolution" value="2.35 A"/>
    <property type="chains" value="A/C=1-169"/>
</dbReference>
<dbReference type="PDB" id="7LC2">
    <property type="method" value="X-ray"/>
    <property type="resolution" value="2.70 A"/>
    <property type="chains" value="A/B=1-169"/>
</dbReference>
<dbReference type="PDB" id="7LGI">
    <property type="method" value="NMR"/>
    <property type="chains" value="A=1-169"/>
</dbReference>
<dbReference type="PDB" id="7LZ5">
    <property type="method" value="X-ray"/>
    <property type="resolution" value="1.50 A"/>
    <property type="chains" value="A=1-164"/>
</dbReference>
<dbReference type="PDB" id="7MDP">
    <property type="method" value="X-ray"/>
    <property type="resolution" value="1.96 A"/>
    <property type="chains" value="A=1-169"/>
</dbReference>
<dbReference type="PDB" id="7MQU">
    <property type="method" value="NMR"/>
    <property type="chains" value="A=1-169"/>
</dbReference>
<dbReference type="PDB" id="7NY8">
    <property type="method" value="X-ray"/>
    <property type="resolution" value="1.80 A"/>
    <property type="chains" value="A/B=1-167"/>
</dbReference>
<dbReference type="PDB" id="7O70">
    <property type="method" value="X-ray"/>
    <property type="resolution" value="1.18 A"/>
    <property type="chains" value="A/D=1-169"/>
</dbReference>
<dbReference type="PDB" id="7OK3">
    <property type="method" value="X-ray"/>
    <property type="resolution" value="1.60 A"/>
    <property type="chains" value="A=1-169"/>
</dbReference>
<dbReference type="PDB" id="7OK4">
    <property type="method" value="X-ray"/>
    <property type="resolution" value="1.70 A"/>
    <property type="chains" value="A=1-169"/>
</dbReference>
<dbReference type="PDB" id="7OO7">
    <property type="method" value="X-ray"/>
    <property type="resolution" value="1.48 A"/>
    <property type="chains" value="A/D=1-164"/>
</dbReference>
<dbReference type="PDB" id="7Q9U">
    <property type="method" value="X-ray"/>
    <property type="resolution" value="2.24 A"/>
    <property type="chains" value="AAA/BBB=1-176"/>
</dbReference>
<dbReference type="PDB" id="7R0M">
    <property type="method" value="X-ray"/>
    <property type="resolution" value="1.61 A"/>
    <property type="chains" value="A/B=1-169"/>
</dbReference>
<dbReference type="PDB" id="7R0N">
    <property type="method" value="X-ray"/>
    <property type="resolution" value="1.20 A"/>
    <property type="chains" value="A=1-169"/>
</dbReference>
<dbReference type="PDB" id="7R0Q">
    <property type="method" value="X-ray"/>
    <property type="resolution" value="1.95 A"/>
    <property type="chains" value="A/B=1-169"/>
</dbReference>
<dbReference type="PDB" id="7ROV">
    <property type="method" value="X-ray"/>
    <property type="resolution" value="1.32 A"/>
    <property type="chains" value="A/B=1-189"/>
</dbReference>
<dbReference type="PDB" id="7RP2">
    <property type="method" value="X-ray"/>
    <property type="resolution" value="2.20 A"/>
    <property type="chains" value="A=1-169"/>
</dbReference>
<dbReference type="PDB" id="7RP3">
    <property type="method" value="X-ray"/>
    <property type="resolution" value="2.00 A"/>
    <property type="chains" value="A=2-169"/>
</dbReference>
<dbReference type="PDB" id="7RP4">
    <property type="method" value="X-ray"/>
    <property type="resolution" value="2.15 A"/>
    <property type="chains" value="A/B=2-169"/>
</dbReference>
<dbReference type="PDB" id="7RPZ">
    <property type="method" value="X-ray"/>
    <property type="resolution" value="1.30 A"/>
    <property type="chains" value="A=1-169"/>
</dbReference>
<dbReference type="PDB" id="7RSC">
    <property type="method" value="NMR"/>
    <property type="chains" value="A/B=2-186"/>
</dbReference>
<dbReference type="PDB" id="7RSE">
    <property type="method" value="NMR"/>
    <property type="chains" value="A/B=2-186"/>
</dbReference>
<dbReference type="PDB" id="7RT1">
    <property type="method" value="X-ray"/>
    <property type="resolution" value="1.27 A"/>
    <property type="chains" value="A=1-169"/>
</dbReference>
<dbReference type="PDB" id="7RT2">
    <property type="method" value="X-ray"/>
    <property type="resolution" value="1.59 A"/>
    <property type="chains" value="A=1-169"/>
</dbReference>
<dbReference type="PDB" id="7RT3">
    <property type="method" value="X-ray"/>
    <property type="resolution" value="1.56 A"/>
    <property type="chains" value="A=1-169"/>
</dbReference>
<dbReference type="PDB" id="7RT4">
    <property type="method" value="X-ray"/>
    <property type="resolution" value="2.10 A"/>
    <property type="chains" value="A=1-169"/>
</dbReference>
<dbReference type="PDB" id="7RT5">
    <property type="method" value="X-ray"/>
    <property type="resolution" value="1.29 A"/>
    <property type="chains" value="A=1-169"/>
</dbReference>
<dbReference type="PDB" id="7SCW">
    <property type="method" value="X-ray"/>
    <property type="resolution" value="1.98 A"/>
    <property type="chains" value="A=1-189"/>
</dbReference>
<dbReference type="PDB" id="7SCX">
    <property type="method" value="X-ray"/>
    <property type="resolution" value="1.96 A"/>
    <property type="chains" value="A=1-189"/>
</dbReference>
<dbReference type="PDB" id="7STF">
    <property type="method" value="EM"/>
    <property type="resolution" value="3.14 A"/>
    <property type="chains" value="C=7-16"/>
</dbReference>
<dbReference type="PDB" id="7T1F">
    <property type="method" value="X-ray"/>
    <property type="resolution" value="2.20 A"/>
    <property type="chains" value="A/B/C=1-169"/>
</dbReference>
<dbReference type="PDB" id="7T47">
    <property type="method" value="X-ray"/>
    <property type="resolution" value="1.27 A"/>
    <property type="chains" value="A=1-164"/>
</dbReference>
<dbReference type="PDB" id="7TLE">
    <property type="method" value="X-ray"/>
    <property type="resolution" value="1.99 A"/>
    <property type="chains" value="A=1-164"/>
</dbReference>
<dbReference type="PDB" id="7TLG">
    <property type="method" value="X-ray"/>
    <property type="resolution" value="1.80 A"/>
    <property type="chains" value="A/B=1-164"/>
</dbReference>
<dbReference type="PDB" id="7TLK">
    <property type="method" value="X-ray"/>
    <property type="resolution" value="1.71 A"/>
    <property type="chains" value="A/B=1-164"/>
</dbReference>
<dbReference type="PDB" id="7U8H">
    <property type="method" value="X-ray"/>
    <property type="resolution" value="1.70 A"/>
    <property type="chains" value="A/B/C/D=1-169"/>
</dbReference>
<dbReference type="PDB" id="7VVB">
    <property type="method" value="X-ray"/>
    <property type="resolution" value="1.70 A"/>
    <property type="chains" value="A=1-189"/>
</dbReference>
<dbReference type="PDB" id="7W5R">
    <property type="method" value="X-ray"/>
    <property type="resolution" value="3.87 A"/>
    <property type="chains" value="A/E/I/M/Q/U=1-167"/>
</dbReference>
<dbReference type="PDB" id="7YCC">
    <property type="method" value="X-ray"/>
    <property type="resolution" value="1.79 A"/>
    <property type="chains" value="A/B/C=1-169"/>
</dbReference>
<dbReference type="PDB" id="7YCE">
    <property type="method" value="X-ray"/>
    <property type="resolution" value="1.80 A"/>
    <property type="chains" value="A=1-169"/>
</dbReference>
<dbReference type="PDB" id="7YUZ">
    <property type="method" value="X-ray"/>
    <property type="resolution" value="1.88 A"/>
    <property type="chains" value="A=2-174"/>
</dbReference>
<dbReference type="PDB" id="7YV1">
    <property type="method" value="X-ray"/>
    <property type="resolution" value="1.45 A"/>
    <property type="chains" value="A=2-174"/>
</dbReference>
<dbReference type="PDB" id="8AFB">
    <property type="method" value="X-ray"/>
    <property type="resolution" value="1.12 A"/>
    <property type="chains" value="A=1-164"/>
</dbReference>
<dbReference type="PDB" id="8AFC">
    <property type="method" value="X-ray"/>
    <property type="resolution" value="2.41 A"/>
    <property type="chains" value="A/B=1-164"/>
</dbReference>
<dbReference type="PDB" id="8AFD">
    <property type="method" value="X-ray"/>
    <property type="resolution" value="1.63 A"/>
    <property type="chains" value="A/B/C/D=1-164"/>
</dbReference>
<dbReference type="PDB" id="8AQ5">
    <property type="method" value="X-ray"/>
    <property type="resolution" value="1.80 A"/>
    <property type="chains" value="A=1-169"/>
</dbReference>
<dbReference type="PDB" id="8AQ7">
    <property type="method" value="X-ray"/>
    <property type="resolution" value="1.65 A"/>
    <property type="chains" value="A/B=1-169"/>
</dbReference>
<dbReference type="PDB" id="8AZR">
    <property type="method" value="X-ray"/>
    <property type="resolution" value="1.60 A"/>
    <property type="chains" value="A=1-164"/>
</dbReference>
<dbReference type="PDB" id="8AZV">
    <property type="method" value="X-ray"/>
    <property type="resolution" value="1.05 A"/>
    <property type="chains" value="A=1-164"/>
</dbReference>
<dbReference type="PDB" id="8AZX">
    <property type="method" value="X-ray"/>
    <property type="resolution" value="1.04 A"/>
    <property type="chains" value="A=1-164"/>
</dbReference>
<dbReference type="PDB" id="8AZY">
    <property type="method" value="X-ray"/>
    <property type="resolution" value="1.09 A"/>
    <property type="chains" value="A=1-169"/>
</dbReference>
<dbReference type="PDB" id="8AZZ">
    <property type="method" value="X-ray"/>
    <property type="resolution" value="1.02 A"/>
    <property type="chains" value="A=1-164"/>
</dbReference>
<dbReference type="PDB" id="8B00">
    <property type="method" value="X-ray"/>
    <property type="resolution" value="1.04 A"/>
    <property type="chains" value="A=1-164"/>
</dbReference>
<dbReference type="PDB" id="8B69">
    <property type="method" value="X-ray"/>
    <property type="resolution" value="3.07 A"/>
    <property type="chains" value="B/D=1-169"/>
</dbReference>
<dbReference type="PDB" id="8B6I">
    <property type="method" value="X-ray"/>
    <property type="resolution" value="1.70 A"/>
    <property type="chains" value="A/B=1-169"/>
</dbReference>
<dbReference type="PDB" id="8B78">
    <property type="method" value="X-ray"/>
    <property type="resolution" value="1.11 A"/>
    <property type="chains" value="A=1-164"/>
</dbReference>
<dbReference type="PDB" id="8BE3">
    <property type="method" value="X-ray"/>
    <property type="resolution" value="1.85 A"/>
    <property type="chains" value="A/R=1-169"/>
</dbReference>
<dbReference type="PDB" id="8BE4">
    <property type="method" value="X-ray"/>
    <property type="resolution" value="1.90 A"/>
    <property type="chains" value="R=1-169"/>
</dbReference>
<dbReference type="PDB" id="8BE5">
    <property type="method" value="X-ray"/>
    <property type="resolution" value="3.13 A"/>
    <property type="chains" value="R=1-169"/>
</dbReference>
<dbReference type="PDB" id="8BLR">
    <property type="method" value="X-ray"/>
    <property type="resolution" value="1.40 A"/>
    <property type="chains" value="A=2-169"/>
</dbReference>
<dbReference type="PDB" id="8CPR">
    <property type="method" value="X-ray"/>
    <property type="resolution" value="2.00 A"/>
    <property type="chains" value="A=2-169"/>
</dbReference>
<dbReference type="PDB" id="8CX5">
    <property type="method" value="X-ray"/>
    <property type="resolution" value="1.72 A"/>
    <property type="chains" value="A/B=1-169"/>
</dbReference>
<dbReference type="PDB" id="8DGS">
    <property type="method" value="EM"/>
    <property type="resolution" value="4.30 A"/>
    <property type="chains" value="E=1-169"/>
</dbReference>
<dbReference type="PDB" id="8DGT">
    <property type="method" value="EM"/>
    <property type="resolution" value="3.90 A"/>
    <property type="chains" value="F=1-169"/>
</dbReference>
<dbReference type="PDB" id="8DNI">
    <property type="method" value="X-ray"/>
    <property type="resolution" value="1.50 A"/>
    <property type="chains" value="A=1-169"/>
</dbReference>
<dbReference type="PDB" id="8DNJ">
    <property type="method" value="X-ray"/>
    <property type="resolution" value="1.81 A"/>
    <property type="chains" value="A/B/C=1-169"/>
</dbReference>
<dbReference type="PDB" id="8DNK">
    <property type="method" value="X-ray"/>
    <property type="resolution" value="2.23 A"/>
    <property type="chains" value="A=1-169"/>
</dbReference>
<dbReference type="PDB" id="8DVG">
    <property type="method" value="X-ray"/>
    <property type="resolution" value="2.59 A"/>
    <property type="chains" value="C=7-16"/>
</dbReference>
<dbReference type="PDB" id="8EBZ">
    <property type="method" value="X-ray"/>
    <property type="resolution" value="1.20 A"/>
    <property type="chains" value="A=1-169"/>
</dbReference>
<dbReference type="PDB" id="8ECR">
    <property type="method" value="X-ray"/>
    <property type="resolution" value="1.42 A"/>
    <property type="chains" value="A/B=1-186"/>
</dbReference>
<dbReference type="PDB" id="8EDY">
    <property type="method" value="X-ray"/>
    <property type="resolution" value="1.18 A"/>
    <property type="chains" value="A=1-186"/>
</dbReference>
<dbReference type="PDB" id="8EER">
    <property type="method" value="X-ray"/>
    <property type="resolution" value="1.18 A"/>
    <property type="chains" value="A=1-186"/>
</dbReference>
<dbReference type="PDB" id="8EIE">
    <property type="method" value="X-ray"/>
    <property type="resolution" value="1.41 A"/>
    <property type="chains" value="A=1-186"/>
</dbReference>
<dbReference type="PDB" id="8EPW">
    <property type="method" value="X-ray"/>
    <property type="resolution" value="2.00 A"/>
    <property type="chains" value="A=1-169"/>
</dbReference>
<dbReference type="PDB" id="8EZG">
    <property type="method" value="X-ray"/>
    <property type="resolution" value="2.52 A"/>
    <property type="chains" value="A=1-167"/>
</dbReference>
<dbReference type="PDB" id="8F0M">
    <property type="method" value="X-ray"/>
    <property type="resolution" value="2.44 A"/>
    <property type="chains" value="A/C=1-169"/>
</dbReference>
<dbReference type="PDB" id="8FMI">
    <property type="method" value="X-ray"/>
    <property type="resolution" value="1.12 A"/>
    <property type="chains" value="A=1-169"/>
</dbReference>
<dbReference type="PDB" id="8FMJ">
    <property type="method" value="X-ray"/>
    <property type="resolution" value="1.33 A"/>
    <property type="chains" value="A=1-169"/>
</dbReference>
<dbReference type="PDB" id="8FMK">
    <property type="method" value="X-ray"/>
    <property type="resolution" value="1.48 A"/>
    <property type="chains" value="A=1-169"/>
</dbReference>
<dbReference type="PDB" id="8G42">
    <property type="method" value="EM"/>
    <property type="resolution" value="3.02 A"/>
    <property type="chains" value="B=1-169"/>
</dbReference>
<dbReference type="PDB" id="8G47">
    <property type="method" value="EM"/>
    <property type="resolution" value="3.19 A"/>
    <property type="chains" value="B=1-169"/>
</dbReference>
<dbReference type="PDB" id="8G4F">
    <property type="method" value="EM"/>
    <property type="resolution" value="2.91 A"/>
    <property type="chains" value="B=1-166"/>
</dbReference>
<dbReference type="PDB" id="8G4H">
    <property type="method" value="EM"/>
    <property type="resolution" value="2.87 A"/>
    <property type="chains" value="B=1-169"/>
</dbReference>
<dbReference type="PDB" id="8G9P">
    <property type="method" value="X-ray"/>
    <property type="resolution" value="1.50 A"/>
    <property type="chains" value="A/B=1-169"/>
</dbReference>
<dbReference type="PDB" id="8G9Q">
    <property type="method" value="X-ray"/>
    <property type="resolution" value="1.40 A"/>
    <property type="chains" value="A=1-169"/>
</dbReference>
<dbReference type="PDB" id="8I5C">
    <property type="method" value="X-ray"/>
    <property type="resolution" value="3.34 A"/>
    <property type="chains" value="C/H/M/R/W/b/g/l/q/v=8-16"/>
</dbReference>
<dbReference type="PDB" id="8I5D">
    <property type="method" value="X-ray"/>
    <property type="resolution" value="3.30 A"/>
    <property type="chains" value="P=8-16"/>
</dbReference>
<dbReference type="PDB" id="8I5E">
    <property type="method" value="X-ray"/>
    <property type="resolution" value="2.20 A"/>
    <property type="chains" value="P=8-16"/>
</dbReference>
<dbReference type="PDB" id="8JGD">
    <property type="method" value="X-ray"/>
    <property type="resolution" value="1.60 A"/>
    <property type="chains" value="A=1-169"/>
</dbReference>
<dbReference type="PDB" id="8JHL">
    <property type="method" value="X-ray"/>
    <property type="resolution" value="2.10 A"/>
    <property type="chains" value="A=1-169"/>
</dbReference>
<dbReference type="PDB" id="8JJS">
    <property type="method" value="X-ray"/>
    <property type="resolution" value="1.53 A"/>
    <property type="chains" value="A=2-174"/>
</dbReference>
<dbReference type="PDB" id="8K4T">
    <property type="method" value="X-ray"/>
    <property type="resolution" value="2.30 A"/>
    <property type="chains" value="C/F=7-16"/>
</dbReference>
<dbReference type="PDB" id="8K4V">
    <property type="method" value="X-ray"/>
    <property type="resolution" value="3.10 A"/>
    <property type="chains" value="C/F/I/L=7-16"/>
</dbReference>
<dbReference type="PDB" id="8K50">
    <property type="method" value="X-ray"/>
    <property type="resolution" value="2.80 A"/>
    <property type="chains" value="C/F/I/L=7-16"/>
</dbReference>
<dbReference type="PDB" id="8ONV">
    <property type="method" value="X-ray"/>
    <property type="resolution" value="1.01 A"/>
    <property type="chains" value="A=1-164"/>
</dbReference>
<dbReference type="PDB" id="8PI0">
    <property type="method" value="NMR"/>
    <property type="chains" value="A=1-167"/>
</dbReference>
<dbReference type="PDB" id="8PIY">
    <property type="method" value="NMR"/>
    <property type="chains" value="A=1-169"/>
</dbReference>
<dbReference type="PDB" id="8QU8">
    <property type="method" value="EM"/>
    <property type="resolution" value="3.50 A"/>
    <property type="chains" value="F=1-164"/>
</dbReference>
<dbReference type="PDB" id="8QUG">
    <property type="method" value="X-ray"/>
    <property type="resolution" value="1.56 A"/>
    <property type="chains" value="A=1-164"/>
</dbReference>
<dbReference type="PDB" id="8QVU">
    <property type="method" value="X-ray"/>
    <property type="resolution" value="2.24 A"/>
    <property type="chains" value="A/E=1-189"/>
</dbReference>
<dbReference type="PDB" id="8QW6">
    <property type="method" value="X-ray"/>
    <property type="resolution" value="2.20 A"/>
    <property type="chains" value="A/E=1-169"/>
</dbReference>
<dbReference type="PDB" id="8QW7">
    <property type="method" value="X-ray"/>
    <property type="resolution" value="2.36 A"/>
    <property type="chains" value="A/E=1-169"/>
</dbReference>
<dbReference type="PDB" id="8R7W">
    <property type="method" value="X-ray"/>
    <property type="resolution" value="1.16 A"/>
    <property type="chains" value="A/B=1-169"/>
</dbReference>
<dbReference type="PDB" id="8R7X">
    <property type="method" value="X-ray"/>
    <property type="resolution" value="1.31 A"/>
    <property type="chains" value="A/B=1-169"/>
</dbReference>
<dbReference type="PDB" id="8RNI">
    <property type="method" value="X-ray"/>
    <property type="resolution" value="2.49 A"/>
    <property type="chains" value="C=7-16"/>
</dbReference>
<dbReference type="PDB" id="8RRO">
    <property type="method" value="X-ray"/>
    <property type="resolution" value="3.50 A"/>
    <property type="chains" value="E/J/O/T/Y/d/i/n=7-16"/>
</dbReference>
<dbReference type="PDB" id="8S8C">
    <property type="method" value="X-ray"/>
    <property type="resolution" value="1.90 A"/>
    <property type="chains" value="A=1-169"/>
</dbReference>
<dbReference type="PDB" id="8STM">
    <property type="method" value="X-ray"/>
    <property type="resolution" value="2.00 A"/>
    <property type="chains" value="A/B/C/D=1-169"/>
</dbReference>
<dbReference type="PDB" id="8STN">
    <property type="method" value="X-ray"/>
    <property type="resolution" value="2.03 A"/>
    <property type="chains" value="A/B=1-169"/>
</dbReference>
<dbReference type="PDB" id="8T4V">
    <property type="method" value="X-ray"/>
    <property type="resolution" value="1.47 A"/>
    <property type="chains" value="A/B=1-169"/>
</dbReference>
<dbReference type="PDB" id="8T71">
    <property type="method" value="X-ray"/>
    <property type="resolution" value="1.80 A"/>
    <property type="chains" value="A/B=1-177"/>
</dbReference>
<dbReference type="PDB" id="8T72">
    <property type="method" value="X-ray"/>
    <property type="resolution" value="1.60 A"/>
    <property type="chains" value="A/B/C=1-177"/>
</dbReference>
<dbReference type="PDB" id="8T73">
    <property type="method" value="X-ray"/>
    <property type="resolution" value="1.50 A"/>
    <property type="chains" value="A/B=1-169"/>
</dbReference>
<dbReference type="PDB" id="8T74">
    <property type="method" value="X-ray"/>
    <property type="resolution" value="1.65 A"/>
    <property type="chains" value="A=1-177"/>
</dbReference>
<dbReference type="PDB" id="8T75">
    <property type="method" value="X-ray"/>
    <property type="resolution" value="2.65 A"/>
    <property type="chains" value="A/C/E/G=1-177"/>
</dbReference>
<dbReference type="PDB" id="8TBF">
    <property type="method" value="X-ray"/>
    <property type="resolution" value="1.50 A"/>
    <property type="chains" value="A/B=1-169"/>
</dbReference>
<dbReference type="PDB" id="8TBH">
    <property type="method" value="X-ray"/>
    <property type="resolution" value="1.50 A"/>
    <property type="chains" value="A/B=1-169"/>
</dbReference>
<dbReference type="PDB" id="8TBJ">
    <property type="method" value="X-ray"/>
    <property type="resolution" value="1.45 A"/>
    <property type="chains" value="A/B=1-169"/>
</dbReference>
<dbReference type="PDB" id="8TBK">
    <property type="method" value="X-ray"/>
    <property type="resolution" value="1.26 A"/>
    <property type="chains" value="A/B=1-169"/>
</dbReference>
<dbReference type="PDB" id="8TBL">
    <property type="method" value="X-ray"/>
    <property type="resolution" value="1.88 A"/>
    <property type="chains" value="A/B=1-169"/>
</dbReference>
<dbReference type="PDB" id="8TBM">
    <property type="method" value="X-ray"/>
    <property type="resolution" value="1.57 A"/>
    <property type="chains" value="A/B=1-169"/>
</dbReference>
<dbReference type="PDB" id="8TBN">
    <property type="method" value="X-ray"/>
    <property type="resolution" value="1.46 A"/>
    <property type="chains" value="A/B=1-169"/>
</dbReference>
<dbReference type="PDB" id="8TVK">
    <property type="method" value="X-ray"/>
    <property type="resolution" value="1.04 A"/>
    <property type="chains" value="A=1-169"/>
</dbReference>
<dbReference type="PDB" id="8TXE">
    <property type="method" value="X-ray"/>
    <property type="resolution" value="1.35 A"/>
    <property type="chains" value="A/B=1-169"/>
</dbReference>
<dbReference type="PDB" id="8TXG">
    <property type="method" value="X-ray"/>
    <property type="resolution" value="1.50 A"/>
    <property type="chains" value="A=1-169"/>
</dbReference>
<dbReference type="PDB" id="8TXH">
    <property type="method" value="X-ray"/>
    <property type="resolution" value="1.20 A"/>
    <property type="chains" value="A/B=1-169"/>
</dbReference>
<dbReference type="PDB" id="8TXJ">
    <property type="method" value="X-ray"/>
    <property type="resolution" value="1.40 A"/>
    <property type="chains" value="A=1-169"/>
</dbReference>
<dbReference type="PDB" id="8TXK">
    <property type="method" value="X-ray"/>
    <property type="resolution" value="1.38 A"/>
    <property type="chains" value="A=1-169"/>
</dbReference>
<dbReference type="PDB" id="8TY2">
    <property type="method" value="X-ray"/>
    <property type="resolution" value="1.41 A"/>
    <property type="chains" value="A=1-169"/>
</dbReference>
<dbReference type="PDB" id="8TY8">
    <property type="method" value="X-ray"/>
    <property type="resolution" value="1.40 A"/>
    <property type="chains" value="A=1-169"/>
</dbReference>
<dbReference type="PDB" id="8TY9">
    <property type="method" value="X-ray"/>
    <property type="resolution" value="1.43 A"/>
    <property type="chains" value="A=1-169"/>
</dbReference>
<dbReference type="PDB" id="8UDR">
    <property type="method" value="EM"/>
    <property type="resolution" value="3.10 A"/>
    <property type="chains" value="C=7-16"/>
</dbReference>
<dbReference type="PDB" id="8UN3">
    <property type="method" value="X-ray"/>
    <property type="resolution" value="2.07 A"/>
    <property type="chains" value="A/B/C/D=2-167"/>
</dbReference>
<dbReference type="PDB" id="8UN4">
    <property type="method" value="X-ray"/>
    <property type="resolution" value="1.57 A"/>
    <property type="chains" value="A=2-169"/>
</dbReference>
<dbReference type="PDB" id="8UN5">
    <property type="method" value="X-ray"/>
    <property type="resolution" value="1.31 A"/>
    <property type="chains" value="A/B=2-167"/>
</dbReference>
<dbReference type="PDB" id="8V39">
    <property type="method" value="X-ray"/>
    <property type="resolution" value="2.10 A"/>
    <property type="chains" value="A/B/C=1-169"/>
</dbReference>
<dbReference type="PDB" id="8V3A">
    <property type="method" value="X-ray"/>
    <property type="resolution" value="1.67 A"/>
    <property type="chains" value="A/B=1-169"/>
</dbReference>
<dbReference type="PDB" id="8VGQ">
    <property type="method" value="EM"/>
    <property type="resolution" value="2.80 A"/>
    <property type="chains" value="A=1-169"/>
</dbReference>
<dbReference type="PDB" id="8VJZ">
    <property type="method" value="X-ray"/>
    <property type="resolution" value="1.90 A"/>
    <property type="chains" value="C=7-16"/>
</dbReference>
<dbReference type="PDB" id="8VR9">
    <property type="method" value="EM"/>
    <property type="resolution" value="3.06 A"/>
    <property type="chains" value="C=8-16"/>
</dbReference>
<dbReference type="PDB" id="8VRA">
    <property type="method" value="EM"/>
    <property type="resolution" value="3.12 A"/>
    <property type="chains" value="C=7-16"/>
</dbReference>
<dbReference type="PDB" id="8VRB">
    <property type="method" value="EM"/>
    <property type="resolution" value="3.25 A"/>
    <property type="chains" value="C=7-16"/>
</dbReference>
<dbReference type="PDB" id="8WTE">
    <property type="method" value="X-ray"/>
    <property type="resolution" value="2.17 A"/>
    <property type="chains" value="G/J=8-16"/>
</dbReference>
<dbReference type="PDB" id="8WUL">
    <property type="method" value="X-ray"/>
    <property type="resolution" value="2.36 A"/>
    <property type="chains" value="K/N/Q/T=8-16"/>
</dbReference>
<dbReference type="PDB" id="8X6R">
    <property type="method" value="X-ray"/>
    <property type="resolution" value="1.85 A"/>
    <property type="chains" value="A/B/C/D/E/F=1-169"/>
</dbReference>
<dbReference type="PDB" id="8YIV">
    <property type="method" value="X-ray"/>
    <property type="resolution" value="2.10 A"/>
    <property type="chains" value="C=55-64"/>
</dbReference>
<dbReference type="PDB" id="8YJ2">
    <property type="method" value="X-ray"/>
    <property type="resolution" value="2.26 A"/>
    <property type="chains" value="C=55-64"/>
</dbReference>
<dbReference type="PDB" id="9AX6">
    <property type="method" value="X-ray"/>
    <property type="resolution" value="1.65 A"/>
    <property type="chains" value="A/B=1-169"/>
</dbReference>
<dbReference type="PDB" id="9BFW">
    <property type="method" value="X-ray"/>
    <property type="resolution" value="1.20 A"/>
    <property type="chains" value="A=1-169"/>
</dbReference>
<dbReference type="PDB" id="9BFY">
    <property type="method" value="X-ray"/>
    <property type="resolution" value="1.26 A"/>
    <property type="chains" value="A/B=1-169"/>
</dbReference>
<dbReference type="PDB" id="9BFZ">
    <property type="method" value="X-ray"/>
    <property type="resolution" value="1.80 A"/>
    <property type="chains" value="A/B=1-169"/>
</dbReference>
<dbReference type="PDB" id="9BG1">
    <property type="method" value="X-ray"/>
    <property type="resolution" value="1.51 A"/>
    <property type="chains" value="A/B=1-169"/>
</dbReference>
<dbReference type="PDB" id="9BHO">
    <property type="method" value="X-ray"/>
    <property type="resolution" value="1.89 A"/>
    <property type="chains" value="A/C=1-169"/>
</dbReference>
<dbReference type="PDB" id="9BHP">
    <property type="method" value="X-ray"/>
    <property type="resolution" value="2.10 A"/>
    <property type="chains" value="A/C=1-169"/>
</dbReference>
<dbReference type="PDB" id="9BHQ">
    <property type="method" value="X-ray"/>
    <property type="resolution" value="1.90 A"/>
    <property type="chains" value="A/C=1-169"/>
</dbReference>
<dbReference type="PDB" id="9BI1">
    <property type="method" value="X-ray"/>
    <property type="resolution" value="1.65 A"/>
    <property type="chains" value="A/C=1-169"/>
</dbReference>
<dbReference type="PDB" id="9BI2">
    <property type="method" value="X-ray"/>
    <property type="resolution" value="2.15 A"/>
    <property type="chains" value="A/C=1-169"/>
</dbReference>
<dbReference type="PDB" id="9C15">
    <property type="method" value="X-ray"/>
    <property type="resolution" value="2.81 A"/>
    <property type="chains" value="B=1-169"/>
</dbReference>
<dbReference type="PDB" id="9E5D">
    <property type="method" value="X-ray"/>
    <property type="resolution" value="1.36 A"/>
    <property type="chains" value="A=1-169"/>
</dbReference>
<dbReference type="PDB" id="9E5F">
    <property type="method" value="X-ray"/>
    <property type="resolution" value="1.35 A"/>
    <property type="chains" value="A=1-169"/>
</dbReference>
<dbReference type="PDB" id="9E9H">
    <property type="method" value="X-ray"/>
    <property type="resolution" value="1.65 A"/>
    <property type="chains" value="A=1-169"/>
</dbReference>
<dbReference type="PDB" id="9E9I">
    <property type="method" value="X-ray"/>
    <property type="resolution" value="1.18 A"/>
    <property type="chains" value="A=1-169"/>
</dbReference>
<dbReference type="PDB" id="9KPM">
    <property type="method" value="X-ray"/>
    <property type="resolution" value="1.41 A"/>
    <property type="chains" value="A=1-169"/>
</dbReference>
<dbReference type="PDB" id="9KPN">
    <property type="method" value="X-ray"/>
    <property type="resolution" value="1.29 A"/>
    <property type="chains" value="A/B=1-169"/>
</dbReference>
<dbReference type="PDBsum" id="1D8D"/>
<dbReference type="PDBsum" id="1D8E"/>
<dbReference type="PDBsum" id="1KZO"/>
<dbReference type="PDBsum" id="1KZP"/>
<dbReference type="PDBsum" id="1N4P"/>
<dbReference type="PDBsum" id="1N4Q"/>
<dbReference type="PDBsum" id="1N4R"/>
<dbReference type="PDBsum" id="1N4S"/>
<dbReference type="PDBsum" id="2MSC"/>
<dbReference type="PDBsum" id="2MSD"/>
<dbReference type="PDBsum" id="2MSE"/>
<dbReference type="PDBsum" id="3GFT"/>
<dbReference type="PDBsum" id="4DSN"/>
<dbReference type="PDBsum" id="4DSO"/>
<dbReference type="PDBsum" id="4EPR"/>
<dbReference type="PDBsum" id="4EPT"/>
<dbReference type="PDBsum" id="4EPV"/>
<dbReference type="PDBsum" id="4EPW"/>
<dbReference type="PDBsum" id="4EPX"/>
<dbReference type="PDBsum" id="4EPY"/>
<dbReference type="PDBsum" id="4L8G"/>
<dbReference type="PDBsum" id="4LDJ"/>
<dbReference type="PDBsum" id="4LPK"/>
<dbReference type="PDBsum" id="4LRW"/>
<dbReference type="PDBsum" id="4LUC"/>
<dbReference type="PDBsum" id="4LV6"/>
<dbReference type="PDBsum" id="4LYF"/>
<dbReference type="PDBsum" id="4LYH"/>
<dbReference type="PDBsum" id="4LYJ"/>
<dbReference type="PDBsum" id="4M1O"/>
<dbReference type="PDBsum" id="4M1S"/>
<dbReference type="PDBsum" id="4M1T"/>
<dbReference type="PDBsum" id="4M1W"/>
<dbReference type="PDBsum" id="4M1Y"/>
<dbReference type="PDBsum" id="4M21"/>
<dbReference type="PDBsum" id="4M22"/>
<dbReference type="PDBsum" id="4NMM"/>
<dbReference type="PDBsum" id="4OBE"/>
<dbReference type="PDBsum" id="4PZY"/>
<dbReference type="PDBsum" id="4PZZ"/>
<dbReference type="PDBsum" id="4Q01"/>
<dbReference type="PDBsum" id="4Q02"/>
<dbReference type="PDBsum" id="4Q03"/>
<dbReference type="PDBsum" id="4QL3"/>
<dbReference type="PDBsum" id="4TQ9"/>
<dbReference type="PDBsum" id="4TQA"/>
<dbReference type="PDBsum" id="4WA7"/>
<dbReference type="PDBsum" id="5F2E"/>
<dbReference type="PDBsum" id="5KYK"/>
<dbReference type="PDBsum" id="5MLA"/>
<dbReference type="PDBsum" id="5MLB"/>
<dbReference type="PDBsum" id="5O2S"/>
<dbReference type="PDBsum" id="5O2T"/>
<dbReference type="PDBsum" id="5OCG"/>
<dbReference type="PDBsum" id="5OCO"/>
<dbReference type="PDBsum" id="5OCT"/>
<dbReference type="PDBsum" id="5TAR"/>
<dbReference type="PDBsum" id="5TB5"/>
<dbReference type="PDBsum" id="5UFE"/>
<dbReference type="PDBsum" id="5UFQ"/>
<dbReference type="PDBsum" id="5UK9"/>
<dbReference type="PDBsum" id="5UQW"/>
<dbReference type="PDBsum" id="5US4"/>
<dbReference type="PDBsum" id="5USJ"/>
<dbReference type="PDBsum" id="5V6S"/>
<dbReference type="PDBsum" id="5V6V"/>
<dbReference type="PDBsum" id="5V71"/>
<dbReference type="PDBsum" id="5V9L"/>
<dbReference type="PDBsum" id="5V9O"/>
<dbReference type="PDBsum" id="5V9U"/>
<dbReference type="PDBsum" id="5VBM"/>
<dbReference type="PDBsum" id="5VP7"/>
<dbReference type="PDBsum" id="5VPI"/>
<dbReference type="PDBsum" id="5VPY"/>
<dbReference type="PDBsum" id="5VPZ"/>
<dbReference type="PDBsum" id="5VQ0"/>
<dbReference type="PDBsum" id="5VQ1"/>
<dbReference type="PDBsum" id="5VQ2"/>
<dbReference type="PDBsum" id="5VQ6"/>
<dbReference type="PDBsum" id="5VQ8"/>
<dbReference type="PDBsum" id="5W22"/>
<dbReference type="PDBsum" id="5WHA"/>
<dbReference type="PDBsum" id="5WHB"/>
<dbReference type="PDBsum" id="5WHD"/>
<dbReference type="PDBsum" id="5WHE"/>
<dbReference type="PDBsum" id="5WLB"/>
<dbReference type="PDBsum" id="5WPM"/>
<dbReference type="PDBsum" id="5XCO"/>
<dbReference type="PDBsum" id="5YXZ"/>
<dbReference type="PDBsum" id="5YY1"/>
<dbReference type="PDBsum" id="6ARK"/>
<dbReference type="PDBsum" id="6ASA"/>
<dbReference type="PDBsum" id="6ASE"/>
<dbReference type="PDBsum" id="6B0V"/>
<dbReference type="PDBsum" id="6B0Y"/>
<dbReference type="PDBsum" id="6BOF"/>
<dbReference type="PDBsum" id="6BP1"/>
<dbReference type="PDBsum" id="6CC9"/>
<dbReference type="PDBsum" id="6CCH"/>
<dbReference type="PDBsum" id="6CCX"/>
<dbReference type="PDBsum" id="6CU6"/>
<dbReference type="PDBsum" id="6E6F"/>
<dbReference type="PDBsum" id="6E6G"/>
<dbReference type="PDBsum" id="6EPL"/>
<dbReference type="PDBsum" id="6EPM"/>
<dbReference type="PDBsum" id="6EPN"/>
<dbReference type="PDBsum" id="6EPO"/>
<dbReference type="PDBsum" id="6EPP"/>
<dbReference type="PDBsum" id="6F76"/>
<dbReference type="PDBsum" id="6FA1"/>
<dbReference type="PDBsum" id="6FA2"/>
<dbReference type="PDBsum" id="6FA3"/>
<dbReference type="PDBsum" id="6FA4"/>
<dbReference type="PDBsum" id="6GJ5"/>
<dbReference type="PDBsum" id="6GJ6"/>
<dbReference type="PDBsum" id="6GJ7"/>
<dbReference type="PDBsum" id="6GJ8"/>
<dbReference type="PDBsum" id="6GOD"/>
<dbReference type="PDBsum" id="6GOE"/>
<dbReference type="PDBsum" id="6GOF"/>
<dbReference type="PDBsum" id="6GOG"/>
<dbReference type="PDBsum" id="6GOM"/>
<dbReference type="PDBsum" id="6GQT"/>
<dbReference type="PDBsum" id="6GQW"/>
<dbReference type="PDBsum" id="6GQX"/>
<dbReference type="PDBsum" id="6GQY"/>
<dbReference type="PDBsum" id="6H46"/>
<dbReference type="PDBsum" id="6H47"/>
<dbReference type="PDBsum" id="6JTN"/>
<dbReference type="PDBsum" id="6JTO"/>
<dbReference type="PDBsum" id="6JTP"/>
<dbReference type="PDBsum" id="6M9W"/>
<dbReference type="PDBsum" id="6MBQ"/>
<dbReference type="PDBsum" id="6MBT"/>
<dbReference type="PDBsum" id="6MBU"/>
<dbReference type="PDBsum" id="6MNX"/>
<dbReference type="PDBsum" id="6MQG"/>
<dbReference type="PDBsum" id="6MQN"/>
<dbReference type="PDBsum" id="6MS9"/>
<dbReference type="PDBsum" id="6MTA"/>
<dbReference type="PDBsum" id="6N2J"/>
<dbReference type="PDBsum" id="6N2K"/>
<dbReference type="PDBsum" id="6O36"/>
<dbReference type="PDBsum" id="6O46"/>
<dbReference type="PDBsum" id="6O4Y"/>
<dbReference type="PDBsum" id="6O4Z"/>
<dbReference type="PDBsum" id="6O51"/>
<dbReference type="PDBsum" id="6O53"/>
<dbReference type="PDBsum" id="6OB2"/>
<dbReference type="PDBsum" id="6OB3"/>
<dbReference type="PDBsum" id="6OIM"/>
<dbReference type="PDBsum" id="6P0Z"/>
<dbReference type="PDBsum" id="6P8W"/>
<dbReference type="PDBsum" id="6P8X"/>
<dbReference type="PDBsum" id="6P8Y"/>
<dbReference type="PDBsum" id="6P8Z"/>
<dbReference type="PDBsum" id="6PGO"/>
<dbReference type="PDBsum" id="6PGP"/>
<dbReference type="PDBsum" id="6PQ3"/>
<dbReference type="PDBsum" id="6PTS"/>
<dbReference type="PDBsum" id="6PTW"/>
<dbReference type="PDBsum" id="6QUU"/>
<dbReference type="PDBsum" id="6QUV"/>
<dbReference type="PDBsum" id="6QUW"/>
<dbReference type="PDBsum" id="6QUX"/>
<dbReference type="PDBsum" id="6T5B"/>
<dbReference type="PDBsum" id="6T5U"/>
<dbReference type="PDBsum" id="6T5V"/>
<dbReference type="PDBsum" id="6TAM"/>
<dbReference type="PDBsum" id="6TAN"/>
<dbReference type="PDBsum" id="6USX"/>
<dbReference type="PDBsum" id="6USZ"/>
<dbReference type="PDBsum" id="6UT0"/>
<dbReference type="PDBsum" id="6V5L"/>
<dbReference type="PDBsum" id="6V65"/>
<dbReference type="PDBsum" id="6V6F"/>
<dbReference type="PDBsum" id="6VC8"/>
<dbReference type="PDBsum" id="6VJJ"/>
<dbReference type="PDBsum" id="6W4E"/>
<dbReference type="PDBsum" id="6W4F"/>
<dbReference type="PDBsum" id="6WGN"/>
<dbReference type="PDBsum" id="6WS2"/>
<dbReference type="PDBsum" id="6WS4"/>
<dbReference type="PDBsum" id="6XGU"/>
<dbReference type="PDBsum" id="6XGV"/>
<dbReference type="PDBsum" id="6XHA"/>
<dbReference type="PDBsum" id="6XHB"/>
<dbReference type="PDBsum" id="6YR8"/>
<dbReference type="PDBsum" id="6YXW"/>
<dbReference type="PDBsum" id="6ZL5"/>
<dbReference type="PDBsum" id="6ZLI"/>
<dbReference type="PDBsum" id="7A1W"/>
<dbReference type="PDBsum" id="7A1X"/>
<dbReference type="PDBsum" id="7A1Y"/>
<dbReference type="PDBsum" id="7A47"/>
<dbReference type="PDBsum" id="7ACA"/>
<dbReference type="PDBsum" id="7ACF"/>
<dbReference type="PDBsum" id="7ACH"/>
<dbReference type="PDBsum" id="7ACQ"/>
<dbReference type="PDBsum" id="7C40"/>
<dbReference type="PDBsum" id="7C41"/>
<dbReference type="PDBsum" id="7EW9"/>
<dbReference type="PDBsum" id="7EWA"/>
<dbReference type="PDBsum" id="7EWB"/>
<dbReference type="PDBsum" id="7EYX"/>
<dbReference type="PDBsum" id="7F0W"/>
<dbReference type="PDBsum" id="7KFZ"/>
<dbReference type="PDBsum" id="7KMR"/>
<dbReference type="PDBsum" id="7KYZ"/>
<dbReference type="PDBsum" id="7LC1"/>
<dbReference type="PDBsum" id="7LC2"/>
<dbReference type="PDBsum" id="7LGI"/>
<dbReference type="PDBsum" id="7LZ5"/>
<dbReference type="PDBsum" id="7MDP"/>
<dbReference type="PDBsum" id="7MQU"/>
<dbReference type="PDBsum" id="7NY8"/>
<dbReference type="PDBsum" id="7O70"/>
<dbReference type="PDBsum" id="7OK3"/>
<dbReference type="PDBsum" id="7OK4"/>
<dbReference type="PDBsum" id="7OO7"/>
<dbReference type="PDBsum" id="7Q9U"/>
<dbReference type="PDBsum" id="7R0M"/>
<dbReference type="PDBsum" id="7R0N"/>
<dbReference type="PDBsum" id="7R0Q"/>
<dbReference type="PDBsum" id="7ROV"/>
<dbReference type="PDBsum" id="7RP2"/>
<dbReference type="PDBsum" id="7RP3"/>
<dbReference type="PDBsum" id="7RP4"/>
<dbReference type="PDBsum" id="7RPZ"/>
<dbReference type="PDBsum" id="7RSC"/>
<dbReference type="PDBsum" id="7RSE"/>
<dbReference type="PDBsum" id="7RT1"/>
<dbReference type="PDBsum" id="7RT2"/>
<dbReference type="PDBsum" id="7RT3"/>
<dbReference type="PDBsum" id="7RT4"/>
<dbReference type="PDBsum" id="7RT5"/>
<dbReference type="PDBsum" id="7SCW"/>
<dbReference type="PDBsum" id="7SCX"/>
<dbReference type="PDBsum" id="7STF"/>
<dbReference type="PDBsum" id="7T1F"/>
<dbReference type="PDBsum" id="7T47"/>
<dbReference type="PDBsum" id="7TLE"/>
<dbReference type="PDBsum" id="7TLG"/>
<dbReference type="PDBsum" id="7TLK"/>
<dbReference type="PDBsum" id="7U8H"/>
<dbReference type="PDBsum" id="7VVB"/>
<dbReference type="PDBsum" id="7W5R"/>
<dbReference type="PDBsum" id="7YCC"/>
<dbReference type="PDBsum" id="7YCE"/>
<dbReference type="PDBsum" id="7YUZ"/>
<dbReference type="PDBsum" id="7YV1"/>
<dbReference type="PDBsum" id="8AFB"/>
<dbReference type="PDBsum" id="8AFC"/>
<dbReference type="PDBsum" id="8AFD"/>
<dbReference type="PDBsum" id="8AQ5"/>
<dbReference type="PDBsum" id="8AQ7"/>
<dbReference type="PDBsum" id="8AZR"/>
<dbReference type="PDBsum" id="8AZV"/>
<dbReference type="PDBsum" id="8AZX"/>
<dbReference type="PDBsum" id="8AZY"/>
<dbReference type="PDBsum" id="8AZZ"/>
<dbReference type="PDBsum" id="8B00"/>
<dbReference type="PDBsum" id="8B69"/>
<dbReference type="PDBsum" id="8B6I"/>
<dbReference type="PDBsum" id="8B78"/>
<dbReference type="PDBsum" id="8BE3"/>
<dbReference type="PDBsum" id="8BE4"/>
<dbReference type="PDBsum" id="8BE5"/>
<dbReference type="PDBsum" id="8BLR"/>
<dbReference type="PDBsum" id="8CPR"/>
<dbReference type="PDBsum" id="8CX5"/>
<dbReference type="PDBsum" id="8DGS"/>
<dbReference type="PDBsum" id="8DGT"/>
<dbReference type="PDBsum" id="8DNI"/>
<dbReference type="PDBsum" id="8DNJ"/>
<dbReference type="PDBsum" id="8DNK"/>
<dbReference type="PDBsum" id="8DVG"/>
<dbReference type="PDBsum" id="8EBZ"/>
<dbReference type="PDBsum" id="8ECR"/>
<dbReference type="PDBsum" id="8EDY"/>
<dbReference type="PDBsum" id="8EER"/>
<dbReference type="PDBsum" id="8EIE"/>
<dbReference type="PDBsum" id="8EPW"/>
<dbReference type="PDBsum" id="8EZG"/>
<dbReference type="PDBsum" id="8F0M"/>
<dbReference type="PDBsum" id="8FMI"/>
<dbReference type="PDBsum" id="8FMJ"/>
<dbReference type="PDBsum" id="8FMK"/>
<dbReference type="PDBsum" id="8G42"/>
<dbReference type="PDBsum" id="8G47"/>
<dbReference type="PDBsum" id="8G4F"/>
<dbReference type="PDBsum" id="8G4H"/>
<dbReference type="PDBsum" id="8G9P"/>
<dbReference type="PDBsum" id="8G9Q"/>
<dbReference type="PDBsum" id="8I5C"/>
<dbReference type="PDBsum" id="8I5D"/>
<dbReference type="PDBsum" id="8I5E"/>
<dbReference type="PDBsum" id="8JGD"/>
<dbReference type="PDBsum" id="8JHL"/>
<dbReference type="PDBsum" id="8JJS"/>
<dbReference type="PDBsum" id="8K4T"/>
<dbReference type="PDBsum" id="8K4V"/>
<dbReference type="PDBsum" id="8K50"/>
<dbReference type="PDBsum" id="8ONV"/>
<dbReference type="PDBsum" id="8PI0"/>
<dbReference type="PDBsum" id="8PIY"/>
<dbReference type="PDBsum" id="8QU8"/>
<dbReference type="PDBsum" id="8QUG"/>
<dbReference type="PDBsum" id="8QVU"/>
<dbReference type="PDBsum" id="8QW6"/>
<dbReference type="PDBsum" id="8QW7"/>
<dbReference type="PDBsum" id="8R7W"/>
<dbReference type="PDBsum" id="8R7X"/>
<dbReference type="PDBsum" id="8RNI"/>
<dbReference type="PDBsum" id="8RRO"/>
<dbReference type="PDBsum" id="8S8C"/>
<dbReference type="PDBsum" id="8STM"/>
<dbReference type="PDBsum" id="8STN"/>
<dbReference type="PDBsum" id="8T4V"/>
<dbReference type="PDBsum" id="8T71"/>
<dbReference type="PDBsum" id="8T72"/>
<dbReference type="PDBsum" id="8T73"/>
<dbReference type="PDBsum" id="8T74"/>
<dbReference type="PDBsum" id="8T75"/>
<dbReference type="PDBsum" id="8TBF"/>
<dbReference type="PDBsum" id="8TBH"/>
<dbReference type="PDBsum" id="8TBJ"/>
<dbReference type="PDBsum" id="8TBK"/>
<dbReference type="PDBsum" id="8TBL"/>
<dbReference type="PDBsum" id="8TBM"/>
<dbReference type="PDBsum" id="8TBN"/>
<dbReference type="PDBsum" id="8TVK"/>
<dbReference type="PDBsum" id="8TXE"/>
<dbReference type="PDBsum" id="8TXG"/>
<dbReference type="PDBsum" id="8TXH"/>
<dbReference type="PDBsum" id="8TXJ"/>
<dbReference type="PDBsum" id="8TXK"/>
<dbReference type="PDBsum" id="8TY2"/>
<dbReference type="PDBsum" id="8TY8"/>
<dbReference type="PDBsum" id="8TY9"/>
<dbReference type="PDBsum" id="8UDR"/>
<dbReference type="PDBsum" id="8UN3"/>
<dbReference type="PDBsum" id="8UN4"/>
<dbReference type="PDBsum" id="8UN5"/>
<dbReference type="PDBsum" id="8V39"/>
<dbReference type="PDBsum" id="8V3A"/>
<dbReference type="PDBsum" id="8VGQ"/>
<dbReference type="PDBsum" id="8VJZ"/>
<dbReference type="PDBsum" id="8VR9"/>
<dbReference type="PDBsum" id="8VRA"/>
<dbReference type="PDBsum" id="8VRB"/>
<dbReference type="PDBsum" id="8WTE"/>
<dbReference type="PDBsum" id="8WUL"/>
<dbReference type="PDBsum" id="8X6R"/>
<dbReference type="PDBsum" id="8YIV"/>
<dbReference type="PDBsum" id="8YJ2"/>
<dbReference type="PDBsum" id="9AX6"/>
<dbReference type="PDBsum" id="9BFW"/>
<dbReference type="PDBsum" id="9BFY"/>
<dbReference type="PDBsum" id="9BFZ"/>
<dbReference type="PDBsum" id="9BG1"/>
<dbReference type="PDBsum" id="9BHO"/>
<dbReference type="PDBsum" id="9BHP"/>
<dbReference type="PDBsum" id="9BHQ"/>
<dbReference type="PDBsum" id="9BI1"/>
<dbReference type="PDBsum" id="9BI2"/>
<dbReference type="PDBsum" id="9C15"/>
<dbReference type="PDBsum" id="9E5D"/>
<dbReference type="PDBsum" id="9E5F"/>
<dbReference type="PDBsum" id="9E9H"/>
<dbReference type="PDBsum" id="9E9I"/>
<dbReference type="PDBsum" id="9KPM"/>
<dbReference type="PDBsum" id="9KPN"/>
<dbReference type="BMRB" id="P01116"/>
<dbReference type="EMDB" id="EMD-18657"/>
<dbReference type="EMDB" id="EMD-22857"/>
<dbReference type="EMDB" id="EMD-29713"/>
<dbReference type="EMDB" id="EMD-29715"/>
<dbReference type="EMDB" id="EMD-29719"/>
<dbReference type="EMDB" id="EMD-29720"/>
<dbReference type="EMDB" id="EMD-42151"/>
<dbReference type="EMDB" id="EMD-43221"/>
<dbReference type="EMDB" id="EMD-43478"/>
<dbReference type="EMDB" id="EMD-43479"/>
<dbReference type="EMDB" id="EMD-43480"/>
<dbReference type="SASBDB" id="P01116"/>
<dbReference type="SMR" id="P01116"/>
<dbReference type="BioGRID" id="110043">
    <property type="interactions" value="2902"/>
</dbReference>
<dbReference type="CORUM" id="P01116"/>
<dbReference type="DIP" id="DIP-33951N"/>
<dbReference type="FunCoup" id="P01116">
    <property type="interactions" value="3194"/>
</dbReference>
<dbReference type="IntAct" id="P01116">
    <property type="interactions" value="543"/>
</dbReference>
<dbReference type="MINT" id="P01116"/>
<dbReference type="STRING" id="9606.ENSP00000256078"/>
<dbReference type="BindingDB" id="P01116"/>
<dbReference type="ChEMBL" id="CHEMBL2189121"/>
<dbReference type="DrugBank" id="DB07771">
    <property type="generic name" value="[(3,7,11-TRIMETHYL-DODECA-2,6,10-TRIENYLOXYCARBAMOYL)-METHYL]-PHOSPHONIC ACID"/>
</dbReference>
<dbReference type="DrugBank" id="DB15568">
    <property type="generic name" value="Adagrasib"/>
</dbReference>
<dbReference type="DrugBank" id="DB07780">
    <property type="generic name" value="Farnesyl diphosphate"/>
</dbReference>
<dbReference type="DrugBank" id="DB15569">
    <property type="generic name" value="Sotorasib"/>
</dbReference>
<dbReference type="DrugCentral" id="P01116"/>
<dbReference type="GuidetoPHARMACOLOGY" id="2824"/>
<dbReference type="GlyCosmos" id="P01116">
    <property type="glycosylation" value="1 site, No reported glycans"/>
</dbReference>
<dbReference type="GlyGen" id="P01116">
    <property type="glycosylation" value="2 sites"/>
</dbReference>
<dbReference type="iPTMnet" id="P01116"/>
<dbReference type="PhosphoSitePlus" id="P01116"/>
<dbReference type="SwissPalm" id="P01116"/>
<dbReference type="BioMuta" id="KRAS"/>
<dbReference type="DMDM" id="131875"/>
<dbReference type="CPTAC" id="CPTAC-1550"/>
<dbReference type="jPOST" id="P01116"/>
<dbReference type="MassIVE" id="P01116"/>
<dbReference type="PaxDb" id="9606-ENSP00000256078"/>
<dbReference type="PeptideAtlas" id="P01116"/>
<dbReference type="ProteomicsDB" id="51323">
    <molecule id="P01116-1"/>
</dbReference>
<dbReference type="ProteomicsDB" id="51324">
    <molecule id="P01116-2"/>
</dbReference>
<dbReference type="Pumba" id="P01116"/>
<dbReference type="TopDownProteomics" id="P01116-2">
    <molecule id="P01116-2"/>
</dbReference>
<dbReference type="ABCD" id="P01116">
    <property type="antibodies" value="18 sequenced antibodies"/>
</dbReference>
<dbReference type="Antibodypedia" id="24248">
    <property type="antibodies" value="915 antibodies from 40 providers"/>
</dbReference>
<dbReference type="CPTC" id="P01116">
    <property type="antibodies" value="6 antibodies"/>
</dbReference>
<dbReference type="DNASU" id="3845"/>
<dbReference type="Ensembl" id="ENST00000256078.10">
    <molecule id="P01116-1"/>
    <property type="protein sequence ID" value="ENSP00000256078.5"/>
    <property type="gene ID" value="ENSG00000133703.14"/>
</dbReference>
<dbReference type="Ensembl" id="ENST00000311936.8">
    <molecule id="P01116-2"/>
    <property type="protein sequence ID" value="ENSP00000308495.3"/>
    <property type="gene ID" value="ENSG00000133703.14"/>
</dbReference>
<dbReference type="Ensembl" id="ENST00000685328.1">
    <molecule id="P01116-2"/>
    <property type="protein sequence ID" value="ENSP00000508921.1"/>
    <property type="gene ID" value="ENSG00000133703.14"/>
</dbReference>
<dbReference type="Ensembl" id="ENST00000688940.1">
    <molecule id="P01116-2"/>
    <property type="protein sequence ID" value="ENSP00000509238.1"/>
    <property type="gene ID" value="ENSG00000133703.14"/>
</dbReference>
<dbReference type="GeneID" id="3845"/>
<dbReference type="KEGG" id="hsa:3845"/>
<dbReference type="MANE-Select" id="ENST00000311936.8">
    <molecule id="P01116-2"/>
    <property type="protein sequence ID" value="ENSP00000308495.3"/>
    <property type="RefSeq nucleotide sequence ID" value="NM_004985.5"/>
    <property type="RefSeq protein sequence ID" value="NP_004976.2"/>
</dbReference>
<dbReference type="UCSC" id="uc001rgp.3">
    <molecule id="P01116-1"/>
    <property type="organism name" value="human"/>
</dbReference>
<dbReference type="AGR" id="HGNC:6407"/>
<dbReference type="CTD" id="3845"/>
<dbReference type="DisGeNET" id="3845"/>
<dbReference type="GeneCards" id="KRAS"/>
<dbReference type="GeneReviews" id="KRAS"/>
<dbReference type="HGNC" id="HGNC:6407">
    <property type="gene designation" value="KRAS"/>
</dbReference>
<dbReference type="HPA" id="ENSG00000133703">
    <property type="expression patterns" value="Low tissue specificity"/>
</dbReference>
<dbReference type="MalaCards" id="KRAS"/>
<dbReference type="MIM" id="163200">
    <property type="type" value="phenotype"/>
</dbReference>
<dbReference type="MIM" id="190070">
    <property type="type" value="gene"/>
</dbReference>
<dbReference type="MIM" id="600268">
    <property type="type" value="phenotype"/>
</dbReference>
<dbReference type="MIM" id="601626">
    <property type="type" value="phenotype"/>
</dbReference>
<dbReference type="MIM" id="607785">
    <property type="type" value="phenotype"/>
</dbReference>
<dbReference type="MIM" id="609942">
    <property type="type" value="phenotype"/>
</dbReference>
<dbReference type="MIM" id="613659">
    <property type="type" value="phenotype"/>
</dbReference>
<dbReference type="MIM" id="615278">
    <property type="type" value="phenotype"/>
</dbReference>
<dbReference type="neXtProt" id="NX_P01116"/>
<dbReference type="OpenTargets" id="ENSG00000133703"/>
<dbReference type="Orphanet" id="1340">
    <property type="disease" value="Cardiofaciocutaneous syndrome"/>
</dbReference>
<dbReference type="Orphanet" id="146">
    <property type="disease" value="Differentiated thyroid carcinoma"/>
</dbReference>
<dbReference type="Orphanet" id="2396">
    <property type="disease" value="Encephalocraniocutaneous lipomatosis"/>
</dbReference>
<dbReference type="Orphanet" id="1333">
    <property type="disease" value="Familial pancreatic carcinoma"/>
</dbReference>
<dbReference type="Orphanet" id="86834">
    <property type="disease" value="Juvenile myelomonocytic leukemia"/>
</dbReference>
<dbReference type="Orphanet" id="2612">
    <property type="disease" value="Linear nevus sebaceus syndrome"/>
</dbReference>
<dbReference type="Orphanet" id="144">
    <property type="disease" value="Lynch syndrome"/>
</dbReference>
<dbReference type="Orphanet" id="648">
    <property type="disease" value="Noonan syndrome"/>
</dbReference>
<dbReference type="Orphanet" id="3339">
    <property type="disease" value="Oculoectodermal syndrome"/>
</dbReference>
<dbReference type="Orphanet" id="251615">
    <property type="disease" value="Pilomyxoid astrocytoma"/>
</dbReference>
<dbReference type="Orphanet" id="268114">
    <property type="disease" value="RAS-associated autoimmune leukoproliferative disease"/>
</dbReference>
<dbReference type="PharmGKB" id="PA30196"/>
<dbReference type="VEuPathDB" id="HostDB:ENSG00000133703"/>
<dbReference type="eggNOG" id="KOG0395">
    <property type="taxonomic scope" value="Eukaryota"/>
</dbReference>
<dbReference type="GeneTree" id="ENSGT00940000155871"/>
<dbReference type="HOGENOM" id="CLU_041217_9_8_1"/>
<dbReference type="InParanoid" id="P01116"/>
<dbReference type="OMA" id="CCGGCVI"/>
<dbReference type="OrthoDB" id="5976022at2759"/>
<dbReference type="PAN-GO" id="P01116">
    <property type="GO annotations" value="5 GO annotations based on evolutionary models"/>
</dbReference>
<dbReference type="PhylomeDB" id="P01116"/>
<dbReference type="TreeFam" id="TF312796"/>
<dbReference type="BRENDA" id="3.6.5.2">
    <property type="organism ID" value="2681"/>
</dbReference>
<dbReference type="PathwayCommons" id="P01116"/>
<dbReference type="Reactome" id="R-HSA-112412">
    <property type="pathway name" value="SOS-mediated signalling"/>
</dbReference>
<dbReference type="Reactome" id="R-HSA-1169092">
    <property type="pathway name" value="Activation of RAS in B cells"/>
</dbReference>
<dbReference type="Reactome" id="R-HSA-1236382">
    <property type="pathway name" value="Constitutive Signaling by Ligand-Responsive EGFR Cancer Variants"/>
</dbReference>
<dbReference type="Reactome" id="R-HSA-1250196">
    <property type="pathway name" value="SHC1 events in ERBB2 signaling"/>
</dbReference>
<dbReference type="Reactome" id="R-HSA-1250347">
    <property type="pathway name" value="SHC1 events in ERBB4 signaling"/>
</dbReference>
<dbReference type="Reactome" id="R-HSA-1433557">
    <property type="pathway name" value="Signaling by SCF-KIT"/>
</dbReference>
<dbReference type="Reactome" id="R-HSA-167044">
    <property type="pathway name" value="Signalling to RAS"/>
</dbReference>
<dbReference type="Reactome" id="R-HSA-171007">
    <property type="pathway name" value="p38MAPK events"/>
</dbReference>
<dbReference type="Reactome" id="R-HSA-179812">
    <property type="pathway name" value="GRB2 events in EGFR signaling"/>
</dbReference>
<dbReference type="Reactome" id="R-HSA-180336">
    <property type="pathway name" value="SHC1 events in EGFR signaling"/>
</dbReference>
<dbReference type="Reactome" id="R-HSA-186763">
    <property type="pathway name" value="Downstream signal transduction"/>
</dbReference>
<dbReference type="Reactome" id="R-HSA-1963640">
    <property type="pathway name" value="GRB2 events in ERBB2 signaling"/>
</dbReference>
<dbReference type="Reactome" id="R-HSA-210993">
    <property type="pathway name" value="Tie2 Signaling"/>
</dbReference>
<dbReference type="Reactome" id="R-HSA-2179392">
    <property type="pathway name" value="EGFR Transactivation by Gastrin"/>
</dbReference>
<dbReference type="Reactome" id="R-HSA-2424491">
    <property type="pathway name" value="DAP12 signaling"/>
</dbReference>
<dbReference type="Reactome" id="R-HSA-2428933">
    <property type="pathway name" value="SHC-related events triggered by IGF1R"/>
</dbReference>
<dbReference type="Reactome" id="R-HSA-2871796">
    <property type="pathway name" value="FCERI mediated MAPK activation"/>
</dbReference>
<dbReference type="Reactome" id="R-HSA-375165">
    <property type="pathway name" value="NCAM signaling for neurite out-growth"/>
</dbReference>
<dbReference type="Reactome" id="R-HSA-4086398">
    <molecule id="P01116-2"/>
    <property type="pathway name" value="Ca2+ pathway"/>
</dbReference>
<dbReference type="Reactome" id="R-HSA-442982">
    <property type="pathway name" value="Ras activation upon Ca2+ influx through NMDA receptor"/>
</dbReference>
<dbReference type="Reactome" id="R-HSA-5218921">
    <property type="pathway name" value="VEGFR2 mediated cell proliferation"/>
</dbReference>
<dbReference type="Reactome" id="R-HSA-5621575">
    <property type="pathway name" value="CD209 (DC-SIGN) signaling"/>
</dbReference>
<dbReference type="Reactome" id="R-HSA-5637810">
    <property type="pathway name" value="Constitutive Signaling by EGFRvIII"/>
</dbReference>
<dbReference type="Reactome" id="R-HSA-5654688">
    <property type="pathway name" value="SHC-mediated cascade:FGFR1"/>
</dbReference>
<dbReference type="Reactome" id="R-HSA-5654693">
    <property type="pathway name" value="FRS-mediated FGFR1 signaling"/>
</dbReference>
<dbReference type="Reactome" id="R-HSA-5654699">
    <property type="pathway name" value="SHC-mediated cascade:FGFR2"/>
</dbReference>
<dbReference type="Reactome" id="R-HSA-5654700">
    <property type="pathway name" value="FRS-mediated FGFR2 signaling"/>
</dbReference>
<dbReference type="Reactome" id="R-HSA-5654704">
    <property type="pathway name" value="SHC-mediated cascade:FGFR3"/>
</dbReference>
<dbReference type="Reactome" id="R-HSA-5654706">
    <property type="pathway name" value="FRS-mediated FGFR3 signaling"/>
</dbReference>
<dbReference type="Reactome" id="R-HSA-5654712">
    <property type="pathway name" value="FRS-mediated FGFR4 signaling"/>
</dbReference>
<dbReference type="Reactome" id="R-HSA-5654719">
    <property type="pathway name" value="SHC-mediated cascade:FGFR4"/>
</dbReference>
<dbReference type="Reactome" id="R-HSA-5655253">
    <property type="pathway name" value="Signaling by FGFR2 in disease"/>
</dbReference>
<dbReference type="Reactome" id="R-HSA-5655291">
    <property type="pathway name" value="Signaling by FGFR4 in disease"/>
</dbReference>
<dbReference type="Reactome" id="R-HSA-5655302">
    <property type="pathway name" value="Signaling by FGFR1 in disease"/>
</dbReference>
<dbReference type="Reactome" id="R-HSA-5655332">
    <property type="pathway name" value="Signaling by FGFR3 in disease"/>
</dbReference>
<dbReference type="Reactome" id="R-HSA-5658442">
    <property type="pathway name" value="Regulation of RAS by GAPs"/>
</dbReference>
<dbReference type="Reactome" id="R-HSA-5673000">
    <property type="pathway name" value="RAF activation"/>
</dbReference>
<dbReference type="Reactome" id="R-HSA-5673001">
    <property type="pathway name" value="RAF/MAP kinase cascade"/>
</dbReference>
<dbReference type="Reactome" id="R-HSA-5674135">
    <property type="pathway name" value="MAP2K and MAPK activation"/>
</dbReference>
<dbReference type="Reactome" id="R-HSA-5675221">
    <property type="pathway name" value="Negative regulation of MAPK pathway"/>
</dbReference>
<dbReference type="Reactome" id="R-HSA-6802946">
    <property type="pathway name" value="Signaling by moderate kinase activity BRAF mutants"/>
</dbReference>
<dbReference type="Reactome" id="R-HSA-6802948">
    <property type="pathway name" value="Signaling by high-kinase activity BRAF mutants"/>
</dbReference>
<dbReference type="Reactome" id="R-HSA-6802952">
    <property type="pathway name" value="Signaling by BRAF and RAF1 fusions"/>
</dbReference>
<dbReference type="Reactome" id="R-HSA-6802953">
    <property type="pathway name" value="RAS signaling downstream of NF1 loss-of-function variants"/>
</dbReference>
<dbReference type="Reactome" id="R-HSA-6802955">
    <property type="pathway name" value="Paradoxical activation of RAF signaling by kinase inactive BRAF"/>
</dbReference>
<dbReference type="Reactome" id="R-HSA-74751">
    <property type="pathway name" value="Insulin receptor signalling cascade"/>
</dbReference>
<dbReference type="Reactome" id="R-HSA-8849471">
    <property type="pathway name" value="PTK6 Regulates RHO GTPases, RAS GTPase and MAP kinases"/>
</dbReference>
<dbReference type="Reactome" id="R-HSA-8851805">
    <property type="pathway name" value="MET activates RAS signaling"/>
</dbReference>
<dbReference type="Reactome" id="R-HSA-8951936">
    <property type="pathway name" value="RUNX3 regulates p14-ARF"/>
</dbReference>
<dbReference type="Reactome" id="R-HSA-9026519">
    <property type="pathway name" value="Activated NTRK2 signals through RAS"/>
</dbReference>
<dbReference type="Reactome" id="R-HSA-9027284">
    <property type="pathway name" value="Erythropoietin activates RAS"/>
</dbReference>
<dbReference type="Reactome" id="R-HSA-9028731">
    <property type="pathway name" value="Activated NTRK2 signals through FRS2 and FRS3"/>
</dbReference>
<dbReference type="Reactome" id="R-HSA-9034864">
    <property type="pathway name" value="Activated NTRK3 signals through RAS"/>
</dbReference>
<dbReference type="Reactome" id="R-HSA-9607240">
    <property type="pathway name" value="FLT3 Signaling"/>
</dbReference>
<dbReference type="Reactome" id="R-HSA-9634285">
    <property type="pathway name" value="Constitutive Signaling by Overexpressed ERBB2"/>
</dbReference>
<dbReference type="Reactome" id="R-HSA-9634635">
    <property type="pathway name" value="Estrogen-stimulated signaling through PRKCZ"/>
</dbReference>
<dbReference type="Reactome" id="R-HSA-9648002">
    <property type="pathway name" value="RAS processing"/>
</dbReference>
<dbReference type="Reactome" id="R-HSA-9649948">
    <property type="pathway name" value="Signaling downstream of RAS mutants"/>
</dbReference>
<dbReference type="Reactome" id="R-HSA-9656223">
    <property type="pathway name" value="Signaling by RAF1 mutants"/>
</dbReference>
<dbReference type="Reactome" id="R-HSA-9664565">
    <property type="pathway name" value="Signaling by ERBB2 KD Mutants"/>
</dbReference>
<dbReference type="Reactome" id="R-HSA-9665348">
    <property type="pathway name" value="Signaling by ERBB2 ECD mutants"/>
</dbReference>
<dbReference type="Reactome" id="R-HSA-9665686">
    <property type="pathway name" value="Signaling by ERBB2 TMD/JMD mutants"/>
</dbReference>
<dbReference type="Reactome" id="R-HSA-9670439">
    <property type="pathway name" value="Signaling by phosphorylated juxtamembrane, extracellular and kinase domain KIT mutants"/>
</dbReference>
<dbReference type="Reactome" id="R-HSA-9673767">
    <property type="pathway name" value="Signaling by PDGFRA transmembrane, juxtamembrane and kinase domain mutants"/>
</dbReference>
<dbReference type="Reactome" id="R-HSA-9673770">
    <property type="pathway name" value="Signaling by PDGFRA extracellular domain mutants"/>
</dbReference>
<dbReference type="Reactome" id="R-HSA-9674555">
    <property type="pathway name" value="Signaling by CSF3 (G-CSF)"/>
</dbReference>
<dbReference type="Reactome" id="R-HSA-9680350">
    <property type="pathway name" value="Signaling by CSF1 (M-CSF) in myeloid cells"/>
</dbReference>
<dbReference type="Reactome" id="R-HSA-9703465">
    <property type="pathway name" value="Signaling by FLT3 fusion proteins"/>
</dbReference>
<dbReference type="Reactome" id="R-HSA-9703648">
    <property type="pathway name" value="Signaling by FLT3 ITD and TKD mutants"/>
</dbReference>
<dbReference type="Reactome" id="R-HSA-9753510">
    <property type="pathway name" value="Signaling by RAS GAP mutants"/>
</dbReference>
<dbReference type="Reactome" id="R-HSA-9753512">
    <property type="pathway name" value="Signaling by RAS GTPase mutants"/>
</dbReference>
<dbReference type="SignaLink" id="P01116"/>
<dbReference type="SIGNOR" id="P01116"/>
<dbReference type="BioGRID-ORCS" id="3845">
    <property type="hits" value="259 hits in 1133 CRISPR screens"/>
</dbReference>
<dbReference type="CD-CODE" id="D57F7ABA">
    <property type="entry name" value="Synthetic Condensate 000274"/>
</dbReference>
<dbReference type="CD-CODE" id="DEE660B4">
    <property type="entry name" value="Stress granule"/>
</dbReference>
<dbReference type="CD-CODE" id="FB4E32DD">
    <property type="entry name" value="Presynaptic clusters and postsynaptic densities"/>
</dbReference>
<dbReference type="ChiTaRS" id="KRAS">
    <property type="organism name" value="human"/>
</dbReference>
<dbReference type="EvolutionaryTrace" id="P01116"/>
<dbReference type="GeneWiki" id="KRAS"/>
<dbReference type="GenomeRNAi" id="3845"/>
<dbReference type="Pharos" id="P01116">
    <property type="development level" value="Tclin"/>
</dbReference>
<dbReference type="PRO" id="PR:P01116"/>
<dbReference type="Proteomes" id="UP000005640">
    <property type="component" value="Chromosome 12"/>
</dbReference>
<dbReference type="RNAct" id="P01116">
    <property type="molecule type" value="protein"/>
</dbReference>
<dbReference type="Bgee" id="ENSG00000133703">
    <property type="expression patterns" value="Expressed in trigeminal ganglion and 218 other cell types or tissues"/>
</dbReference>
<dbReference type="ExpressionAtlas" id="P01116">
    <property type="expression patterns" value="baseline and differential"/>
</dbReference>
<dbReference type="GO" id="GO:0005737">
    <property type="term" value="C:cytoplasm"/>
    <property type="evidence" value="ECO:0000314"/>
    <property type="project" value="UniProtKB"/>
</dbReference>
<dbReference type="GO" id="GO:0009898">
    <property type="term" value="C:cytoplasmic side of plasma membrane"/>
    <property type="evidence" value="ECO:0000314"/>
    <property type="project" value="UniProtKB"/>
</dbReference>
<dbReference type="GO" id="GO:0005829">
    <property type="term" value="C:cytosol"/>
    <property type="evidence" value="ECO:0000304"/>
    <property type="project" value="Reactome"/>
</dbReference>
<dbReference type="GO" id="GO:0005789">
    <property type="term" value="C:endoplasmic reticulum membrane"/>
    <property type="evidence" value="ECO:0000304"/>
    <property type="project" value="Reactome"/>
</dbReference>
<dbReference type="GO" id="GO:0005925">
    <property type="term" value="C:focal adhesion"/>
    <property type="evidence" value="ECO:0007005"/>
    <property type="project" value="UniProtKB"/>
</dbReference>
<dbReference type="GO" id="GO:0000139">
    <property type="term" value="C:Golgi membrane"/>
    <property type="evidence" value="ECO:0000304"/>
    <property type="project" value="Reactome"/>
</dbReference>
<dbReference type="GO" id="GO:0016020">
    <property type="term" value="C:membrane"/>
    <property type="evidence" value="ECO:0007005"/>
    <property type="project" value="UniProtKB"/>
</dbReference>
<dbReference type="GO" id="GO:0005741">
    <property type="term" value="C:mitochondrial outer membrane"/>
    <property type="evidence" value="ECO:0000304"/>
    <property type="project" value="Reactome"/>
</dbReference>
<dbReference type="GO" id="GO:0005886">
    <property type="term" value="C:plasma membrane"/>
    <property type="evidence" value="ECO:0000314"/>
    <property type="project" value="UniProtKB"/>
</dbReference>
<dbReference type="GO" id="GO:0003925">
    <property type="term" value="F:G protein activity"/>
    <property type="evidence" value="ECO:0007669"/>
    <property type="project" value="UniProtKB-EC"/>
</dbReference>
<dbReference type="GO" id="GO:0019003">
    <property type="term" value="F:GDP binding"/>
    <property type="evidence" value="ECO:0000318"/>
    <property type="project" value="GO_Central"/>
</dbReference>
<dbReference type="GO" id="GO:0019002">
    <property type="term" value="F:GMP binding"/>
    <property type="evidence" value="ECO:0007669"/>
    <property type="project" value="Ensembl"/>
</dbReference>
<dbReference type="GO" id="GO:0005525">
    <property type="term" value="F:GTP binding"/>
    <property type="evidence" value="ECO:0000318"/>
    <property type="project" value="GO_Central"/>
</dbReference>
<dbReference type="GO" id="GO:0003924">
    <property type="term" value="F:GTPase activity"/>
    <property type="evidence" value="ECO:0000315"/>
    <property type="project" value="DisProt"/>
</dbReference>
<dbReference type="GO" id="GO:0042802">
    <property type="term" value="F:identical protein binding"/>
    <property type="evidence" value="ECO:0000353"/>
    <property type="project" value="IntAct"/>
</dbReference>
<dbReference type="GO" id="GO:0030275">
    <property type="term" value="F:LRR domain binding"/>
    <property type="evidence" value="ECO:0007669"/>
    <property type="project" value="Ensembl"/>
</dbReference>
<dbReference type="GO" id="GO:0044877">
    <property type="term" value="F:protein-containing complex binding"/>
    <property type="evidence" value="ECO:0000314"/>
    <property type="project" value="MGI"/>
</dbReference>
<dbReference type="GO" id="GO:0043495">
    <property type="term" value="F:protein-membrane adaptor activity"/>
    <property type="evidence" value="ECO:0007669"/>
    <property type="project" value="Ensembl"/>
</dbReference>
<dbReference type="GO" id="GO:0030036">
    <property type="term" value="P:actin cytoskeleton organization"/>
    <property type="evidence" value="ECO:0007669"/>
    <property type="project" value="Ensembl"/>
</dbReference>
<dbReference type="GO" id="GO:0060038">
    <property type="term" value="P:cardiac muscle cell proliferation"/>
    <property type="evidence" value="ECO:0007669"/>
    <property type="project" value="Ensembl"/>
</dbReference>
<dbReference type="GO" id="GO:0019221">
    <property type="term" value="P:cytokine-mediated signaling pathway"/>
    <property type="evidence" value="ECO:0007669"/>
    <property type="project" value="Ensembl"/>
</dbReference>
<dbReference type="GO" id="GO:0060441">
    <property type="term" value="P:epithelial tube branching involved in lung morphogenesis"/>
    <property type="evidence" value="ECO:0007669"/>
    <property type="project" value="Ensembl"/>
</dbReference>
<dbReference type="GO" id="GO:0007565">
    <property type="term" value="P:female pregnancy"/>
    <property type="evidence" value="ECO:0007669"/>
    <property type="project" value="Ensembl"/>
</dbReference>
<dbReference type="GO" id="GO:0021897">
    <property type="term" value="P:forebrain astrocyte development"/>
    <property type="evidence" value="ECO:0007669"/>
    <property type="project" value="Ensembl"/>
</dbReference>
<dbReference type="GO" id="GO:0010467">
    <property type="term" value="P:gene expression"/>
    <property type="evidence" value="ECO:0007669"/>
    <property type="project" value="Ensembl"/>
</dbReference>
<dbReference type="GO" id="GO:0014009">
    <property type="term" value="P:glial cell proliferation"/>
    <property type="evidence" value="ECO:0007669"/>
    <property type="project" value="Ensembl"/>
</dbReference>
<dbReference type="GO" id="GO:0048873">
    <property type="term" value="P:homeostasis of number of cells within a tissue"/>
    <property type="evidence" value="ECO:0007669"/>
    <property type="project" value="Ensembl"/>
</dbReference>
<dbReference type="GO" id="GO:0001889">
    <property type="term" value="P:liver development"/>
    <property type="evidence" value="ECO:0007669"/>
    <property type="project" value="Ensembl"/>
</dbReference>
<dbReference type="GO" id="GO:0000165">
    <property type="term" value="P:MAPK cascade"/>
    <property type="evidence" value="ECO:0000304"/>
    <property type="project" value="Reactome"/>
</dbReference>
<dbReference type="GO" id="GO:0051450">
    <property type="term" value="P:myoblast proliferation"/>
    <property type="evidence" value="ECO:0007669"/>
    <property type="project" value="Ensembl"/>
</dbReference>
<dbReference type="GO" id="GO:0030857">
    <property type="term" value="P:negative regulation of epithelial cell differentiation"/>
    <property type="evidence" value="ECO:0007669"/>
    <property type="project" value="Ensembl"/>
</dbReference>
<dbReference type="GO" id="GO:0043524">
    <property type="term" value="P:negative regulation of neuron apoptotic process"/>
    <property type="evidence" value="ECO:0007669"/>
    <property type="project" value="Ensembl"/>
</dbReference>
<dbReference type="GO" id="GO:0051402">
    <property type="term" value="P:neuron apoptotic process"/>
    <property type="evidence" value="ECO:0007669"/>
    <property type="project" value="Ensembl"/>
</dbReference>
<dbReference type="GO" id="GO:2000774">
    <property type="term" value="P:positive regulation of cellular senescence"/>
    <property type="evidence" value="ECO:0007669"/>
    <property type="project" value="Ensembl"/>
</dbReference>
<dbReference type="GO" id="GO:0010628">
    <property type="term" value="P:positive regulation of gene expression"/>
    <property type="evidence" value="ECO:0000315"/>
    <property type="project" value="BHF-UCL"/>
</dbReference>
<dbReference type="GO" id="GO:0060252">
    <property type="term" value="P:positive regulation of glial cell proliferation"/>
    <property type="evidence" value="ECO:0007669"/>
    <property type="project" value="Ensembl"/>
</dbReference>
<dbReference type="GO" id="GO:0035022">
    <property type="term" value="P:positive regulation of Rac protein signal transduction"/>
    <property type="evidence" value="ECO:0007669"/>
    <property type="project" value="Ensembl"/>
</dbReference>
<dbReference type="GO" id="GO:0016601">
    <property type="term" value="P:Rac protein signal transduction"/>
    <property type="evidence" value="ECO:0007669"/>
    <property type="project" value="Ensembl"/>
</dbReference>
<dbReference type="GO" id="GO:0007265">
    <property type="term" value="P:Ras protein signal transduction"/>
    <property type="evidence" value="ECO:0000318"/>
    <property type="project" value="GO_Central"/>
</dbReference>
<dbReference type="GO" id="GO:0048169">
    <property type="term" value="P:regulation of long-term neuronal synaptic plasticity"/>
    <property type="evidence" value="ECO:0007669"/>
    <property type="project" value="Ensembl"/>
</dbReference>
<dbReference type="GO" id="GO:0032228">
    <property type="term" value="P:regulation of synaptic transmission, GABAergic"/>
    <property type="evidence" value="ECO:0007669"/>
    <property type="project" value="Ensembl"/>
</dbReference>
<dbReference type="GO" id="GO:0051384">
    <property type="term" value="P:response to glucocorticoid"/>
    <property type="evidence" value="ECO:0007669"/>
    <property type="project" value="Ensembl"/>
</dbReference>
<dbReference type="GO" id="GO:0009629">
    <property type="term" value="P:response to gravity"/>
    <property type="evidence" value="ECO:0007669"/>
    <property type="project" value="Ensembl"/>
</dbReference>
<dbReference type="GO" id="GO:0035900">
    <property type="term" value="P:response to isolation stress"/>
    <property type="evidence" value="ECO:0007669"/>
    <property type="project" value="Ensembl"/>
</dbReference>
<dbReference type="GO" id="GO:0051385">
    <property type="term" value="P:response to mineralocorticoid"/>
    <property type="evidence" value="ECO:0007669"/>
    <property type="project" value="Ensembl"/>
</dbReference>
<dbReference type="GO" id="GO:0035914">
    <property type="term" value="P:skeletal muscle cell differentiation"/>
    <property type="evidence" value="ECO:0007669"/>
    <property type="project" value="Ensembl"/>
</dbReference>
<dbReference type="GO" id="GO:0051146">
    <property type="term" value="P:striated muscle cell differentiation"/>
    <property type="evidence" value="ECO:0007669"/>
    <property type="project" value="Ensembl"/>
</dbReference>
<dbReference type="GO" id="GO:0060509">
    <property type="term" value="P:type I pneumocyte differentiation"/>
    <property type="evidence" value="ECO:0007669"/>
    <property type="project" value="Ensembl"/>
</dbReference>
<dbReference type="GO" id="GO:0008542">
    <property type="term" value="P:visual learning"/>
    <property type="evidence" value="ECO:0007669"/>
    <property type="project" value="Ensembl"/>
</dbReference>
<dbReference type="CDD" id="cd04138">
    <property type="entry name" value="H_N_K_Ras_like"/>
    <property type="match status" value="1"/>
</dbReference>
<dbReference type="FunFam" id="3.40.50.300:FF:000096">
    <property type="entry name" value="KRAS proto-oncogene, GTPase"/>
    <property type="match status" value="1"/>
</dbReference>
<dbReference type="Gene3D" id="3.40.50.300">
    <property type="entry name" value="P-loop containing nucleotide triphosphate hydrolases"/>
    <property type="match status" value="1"/>
</dbReference>
<dbReference type="InterPro" id="IPR027417">
    <property type="entry name" value="P-loop_NTPase"/>
</dbReference>
<dbReference type="InterPro" id="IPR005225">
    <property type="entry name" value="Small_GTP-bd"/>
</dbReference>
<dbReference type="InterPro" id="IPR001806">
    <property type="entry name" value="Small_GTPase"/>
</dbReference>
<dbReference type="InterPro" id="IPR020849">
    <property type="entry name" value="Small_GTPase_Ras-type"/>
</dbReference>
<dbReference type="NCBIfam" id="TIGR00231">
    <property type="entry name" value="small_GTP"/>
    <property type="match status" value="1"/>
</dbReference>
<dbReference type="PANTHER" id="PTHR24070">
    <property type="entry name" value="RAS, DI-RAS, AND RHEB FAMILY MEMBERS OF SMALL GTPASE SUPERFAMILY"/>
    <property type="match status" value="1"/>
</dbReference>
<dbReference type="Pfam" id="PF00071">
    <property type="entry name" value="Ras"/>
    <property type="match status" value="1"/>
</dbReference>
<dbReference type="PRINTS" id="PR00449">
    <property type="entry name" value="RASTRNSFRMNG"/>
</dbReference>
<dbReference type="SMART" id="SM00175">
    <property type="entry name" value="RAB"/>
    <property type="match status" value="1"/>
</dbReference>
<dbReference type="SMART" id="SM00176">
    <property type="entry name" value="RAN"/>
    <property type="match status" value="1"/>
</dbReference>
<dbReference type="SMART" id="SM00173">
    <property type="entry name" value="RAS"/>
    <property type="match status" value="1"/>
</dbReference>
<dbReference type="SMART" id="SM00174">
    <property type="entry name" value="RHO"/>
    <property type="match status" value="1"/>
</dbReference>
<dbReference type="SUPFAM" id="SSF52540">
    <property type="entry name" value="P-loop containing nucleoside triphosphate hydrolases"/>
    <property type="match status" value="1"/>
</dbReference>
<dbReference type="PROSITE" id="PS51421">
    <property type="entry name" value="RAS"/>
    <property type="match status" value="1"/>
</dbReference>
<protein>
    <recommendedName>
        <fullName>GTPase KRas</fullName>
        <ecNumber evidence="17 40">3.6.5.2</ecNumber>
    </recommendedName>
    <alternativeName>
        <fullName>K-Ras 2</fullName>
    </alternativeName>
    <alternativeName>
        <fullName>Ki-Ras</fullName>
    </alternativeName>
    <alternativeName>
        <fullName>c-K-ras</fullName>
    </alternativeName>
    <alternativeName>
        <fullName>c-Ki-ras</fullName>
    </alternativeName>
    <component>
        <recommendedName>
            <fullName>GTPase KRas, N-terminally processed</fullName>
        </recommendedName>
    </component>
</protein>
<evidence type="ECO:0000250" key="1">
    <source>
        <dbReference type="UniProtKB" id="P08644"/>
    </source>
</evidence>
<evidence type="ECO:0000269" key="2">
    <source>
    </source>
</evidence>
<evidence type="ECO:0000269" key="3">
    <source>
    </source>
</evidence>
<evidence type="ECO:0000269" key="4">
    <source>
    </source>
</evidence>
<evidence type="ECO:0000269" key="5">
    <source>
    </source>
</evidence>
<evidence type="ECO:0000269" key="6">
    <source>
    </source>
</evidence>
<evidence type="ECO:0000269" key="7">
    <source>
    </source>
</evidence>
<evidence type="ECO:0000269" key="8">
    <source>
    </source>
</evidence>
<evidence type="ECO:0000269" key="9">
    <source>
    </source>
</evidence>
<evidence type="ECO:0000269" key="10">
    <source>
    </source>
</evidence>
<evidence type="ECO:0000269" key="11">
    <source>
    </source>
</evidence>
<evidence type="ECO:0000269" key="12">
    <source>
    </source>
</evidence>
<evidence type="ECO:0000269" key="13">
    <source>
    </source>
</evidence>
<evidence type="ECO:0000269" key="14">
    <source>
    </source>
</evidence>
<evidence type="ECO:0000269" key="15">
    <source>
    </source>
</evidence>
<evidence type="ECO:0000269" key="16">
    <source>
    </source>
</evidence>
<evidence type="ECO:0000269" key="17">
    <source>
    </source>
</evidence>
<evidence type="ECO:0000269" key="18">
    <source>
    </source>
</evidence>
<evidence type="ECO:0000269" key="19">
    <source>
    </source>
</evidence>
<evidence type="ECO:0000269" key="20">
    <source>
    </source>
</evidence>
<evidence type="ECO:0000269" key="21">
    <source>
    </source>
</evidence>
<evidence type="ECO:0000269" key="22">
    <source>
    </source>
</evidence>
<evidence type="ECO:0000269" key="23">
    <source>
    </source>
</evidence>
<evidence type="ECO:0000269" key="24">
    <source>
    </source>
</evidence>
<evidence type="ECO:0000269" key="25">
    <source>
    </source>
</evidence>
<evidence type="ECO:0000269" key="26">
    <source>
    </source>
</evidence>
<evidence type="ECO:0000269" key="27">
    <source>
    </source>
</evidence>
<evidence type="ECO:0000269" key="28">
    <source>
    </source>
</evidence>
<evidence type="ECO:0000269" key="29">
    <source>
    </source>
</evidence>
<evidence type="ECO:0000269" key="30">
    <source>
    </source>
</evidence>
<evidence type="ECO:0000269" key="31">
    <source>
    </source>
</evidence>
<evidence type="ECO:0000269" key="32">
    <source>
    </source>
</evidence>
<evidence type="ECO:0000269" key="33">
    <source>
    </source>
</evidence>
<evidence type="ECO:0000269" key="34">
    <source>
    </source>
</evidence>
<evidence type="ECO:0000269" key="35">
    <source>
    </source>
</evidence>
<evidence type="ECO:0000269" key="36">
    <source>
    </source>
</evidence>
<evidence type="ECO:0000269" key="37">
    <source>
    </source>
</evidence>
<evidence type="ECO:0000269" key="38">
    <source>
    </source>
</evidence>
<evidence type="ECO:0000269" key="39">
    <source>
    </source>
</evidence>
<evidence type="ECO:0000269" key="40">
    <source>
    </source>
</evidence>
<evidence type="ECO:0000269" key="41">
    <source>
    </source>
</evidence>
<evidence type="ECO:0000269" key="42">
    <source>
    </source>
</evidence>
<evidence type="ECO:0000269" key="43">
    <source>
    </source>
</evidence>
<evidence type="ECO:0000269" key="44">
    <source>
    </source>
</evidence>
<evidence type="ECO:0000269" key="45">
    <source>
    </source>
</evidence>
<evidence type="ECO:0000269" key="46">
    <source>
    </source>
</evidence>
<evidence type="ECO:0000269" key="47">
    <source ref="17"/>
</evidence>
<evidence type="ECO:0000269" key="48">
    <source ref="7"/>
</evidence>
<evidence type="ECO:0000303" key="49">
    <source>
    </source>
</evidence>
<evidence type="ECO:0000303" key="50">
    <source>
    </source>
</evidence>
<evidence type="ECO:0000303" key="51">
    <source>
    </source>
</evidence>
<evidence type="ECO:0000303" key="52">
    <source>
    </source>
</evidence>
<evidence type="ECO:0000303" key="53">
    <source ref="6"/>
</evidence>
<evidence type="ECO:0000303" key="54">
    <source ref="7"/>
</evidence>
<evidence type="ECO:0000305" key="55"/>
<evidence type="ECO:0000305" key="56">
    <source>
    </source>
</evidence>
<evidence type="ECO:0000305" key="57">
    <source>
    </source>
</evidence>
<evidence type="ECO:0000305" key="58">
    <source>
    </source>
</evidence>
<evidence type="ECO:0000305" key="59">
    <source>
    </source>
</evidence>
<evidence type="ECO:0000305" key="60">
    <source>
    </source>
</evidence>
<evidence type="ECO:0000305" key="61">
    <source>
    </source>
</evidence>
<evidence type="ECO:0000305" key="62">
    <source>
    </source>
</evidence>
<evidence type="ECO:0000305" key="63">
    <source>
    </source>
</evidence>
<evidence type="ECO:0000305" key="64">
    <source>
    </source>
</evidence>
<evidence type="ECO:0007744" key="65">
    <source>
        <dbReference type="PDB" id="5TAR"/>
    </source>
</evidence>
<evidence type="ECO:0007744" key="66">
    <source>
        <dbReference type="PDB" id="5TB5"/>
    </source>
</evidence>
<evidence type="ECO:0007744" key="67">
    <source>
        <dbReference type="PDB" id="7LC1"/>
    </source>
</evidence>
<evidence type="ECO:0007744" key="68">
    <source>
        <dbReference type="PDB" id="7LC2"/>
    </source>
</evidence>
<evidence type="ECO:0007744" key="69">
    <source>
        <dbReference type="PDB" id="7VVB"/>
    </source>
</evidence>
<evidence type="ECO:0007829" key="70">
    <source>
        <dbReference type="PDB" id="4DSN"/>
    </source>
</evidence>
<evidence type="ECO:0007829" key="71">
    <source>
        <dbReference type="PDB" id="4OBE"/>
    </source>
</evidence>
<evidence type="ECO:0007829" key="72">
    <source>
        <dbReference type="PDB" id="4Q01"/>
    </source>
</evidence>
<evidence type="ECO:0007829" key="73">
    <source>
        <dbReference type="PDB" id="5OCG"/>
    </source>
</evidence>
<evidence type="ECO:0007829" key="74">
    <source>
        <dbReference type="PDB" id="5TB5"/>
    </source>
</evidence>
<evidence type="ECO:0007829" key="75">
    <source>
        <dbReference type="PDB" id="5VBM"/>
    </source>
</evidence>
<evidence type="ECO:0007829" key="76">
    <source>
        <dbReference type="PDB" id="6EPO"/>
    </source>
</evidence>
<evidence type="ECO:0007829" key="77">
    <source>
        <dbReference type="PDB" id="6H46"/>
    </source>
</evidence>
<evidence type="ECO:0007829" key="78">
    <source>
        <dbReference type="PDB" id="7F0W"/>
    </source>
</evidence>
<evidence type="ECO:0007829" key="79">
    <source>
        <dbReference type="PDB" id="8ONV"/>
    </source>
</evidence>
<name>RASK_HUMAN</name>
<keyword id="KW-0002">3D-structure</keyword>
<keyword id="KW-0007">Acetylation</keyword>
<keyword id="KW-0025">Alternative splicing</keyword>
<keyword id="KW-0122">Cardiomyopathy</keyword>
<keyword id="KW-1003">Cell membrane</keyword>
<keyword id="KW-0963">Cytoplasm</keyword>
<keyword id="KW-0209">Deafness</keyword>
<keyword id="KW-0903">Direct protein sequencing</keyword>
<keyword id="KW-0225">Disease variant</keyword>
<keyword id="KW-0038">Ectodermal dysplasia</keyword>
<keyword id="KW-0325">Glycoprotein</keyword>
<keyword id="KW-0342">GTP-binding</keyword>
<keyword id="KW-0378">Hydrolase</keyword>
<keyword id="KW-0991">Intellectual disability</keyword>
<keyword id="KW-1017">Isopeptide bond</keyword>
<keyword id="KW-0449">Lipoprotein</keyword>
<keyword id="KW-0472">Membrane</keyword>
<keyword id="KW-0488">Methylation</keyword>
<keyword id="KW-0547">Nucleotide-binding</keyword>
<keyword id="KW-0564">Palmitate</keyword>
<keyword id="KW-0636">Prenylation</keyword>
<keyword id="KW-1267">Proteomics identification</keyword>
<keyword id="KW-0656">Proto-oncogene</keyword>
<keyword id="KW-1185">Reference proteome</keyword>
<keyword id="KW-0832">Ubl conjugation</keyword>
<reference key="1">
    <citation type="journal article" date="1983" name="Nature">
        <title>Structure and organization of the human Ki-ras proto-oncogene and a related processed pseudogene.</title>
        <authorList>
            <person name="McGrath J.P."/>
            <person name="Capon D.J."/>
            <person name="Smith D.H."/>
            <person name="Chen E.Y."/>
            <person name="Seeburg P.H."/>
            <person name="Goeddel D.V."/>
            <person name="Levinson A.D."/>
        </authorList>
    </citation>
    <scope>NUCLEOTIDE SEQUENCE [GENOMIC DNA] (ISOFORMS 2A AND 2B)</scope>
</reference>
<reference key="2">
    <citation type="journal article" date="1983" name="Nature">
        <title>Structure of the Ki-ras gene of the human lung carcinoma cell line Calu-1.</title>
        <authorList>
            <person name="Shimizu K."/>
            <person name="Birnbaum D."/>
            <person name="Ruley M.A."/>
            <person name="Fasano O."/>
            <person name="Suard Y."/>
            <person name="Edlund L."/>
            <person name="Taparowsky E."/>
            <person name="Goldfarb M."/>
            <person name="Wigler M."/>
        </authorList>
    </citation>
    <scope>NUCLEOTIDE SEQUENCE [GENOMIC DNA] (ISOFORMS 2A AND 2B)</scope>
    <source>
        <tissue>Lung carcinoma</tissue>
    </source>
</reference>
<reference key="3">
    <citation type="journal article" date="1983" name="Nature">
        <title>Activation of Ki-ras2 gene in human colon and lung carcinomas by two different point mutations.</title>
        <authorList>
            <person name="Capon D.J."/>
            <person name="Seeburg P.H."/>
            <person name="McGrath J.P."/>
            <person name="Hayflick J.S."/>
            <person name="Edman U."/>
            <person name="Levinson A.D."/>
            <person name="Goeddel D.V."/>
        </authorList>
    </citation>
    <scope>NUCLEOTIDE SEQUENCE [GENOMIC DNA] (ISOFORMS 2A AND 2B)</scope>
    <source>
        <tissue>Colon carcinoma</tissue>
        <tissue>Lung</tissue>
    </source>
</reference>
<reference key="4">
    <citation type="journal article" date="1984" name="Mol. Cell. Biol.">
        <title>Human colon carcinoma Ki-ras2 oncogene and its corresponding proto-oncogene.</title>
        <authorList>
            <person name="McCoy M.S."/>
            <person name="Bargmann C.I."/>
            <person name="Weinberg R.A."/>
        </authorList>
    </citation>
    <scope>NUCLEOTIDE SEQUENCE [GENOMIC DNA] (ISOFORMS 2A AND 2B)</scope>
    <scope>VARIANT COLON CANCER VAL-12</scope>
    <source>
        <tissue>Colon carcinoma</tissue>
    </source>
</reference>
<reference key="5">
    <citation type="journal article" date="1987" name="Anticancer Res.">
        <title>The c-K-ras gene and human cancer (review).</title>
        <authorList>
            <person name="Kahn S."/>
            <person name="Yamamoto F."/>
            <person name="Almoguera C."/>
            <person name="Winter E."/>
            <person name="Forrester K."/>
            <person name="Jordano J."/>
            <person name="Perucho M."/>
        </authorList>
    </citation>
    <scope>NUCLEOTIDE SEQUENCE [MRNA] (ISOFORM 2B)</scope>
</reference>
<reference key="6">
    <citation type="submission" date="2002-03" db="EMBL/GenBank/DDBJ databases">
        <title>cDNA clones of human proteins involved in signal transduction sequenced by the Guthrie cDNA resource center (www.cdna.org).</title>
        <authorList>
            <person name="Puhl H.L. III"/>
            <person name="Ikeda S.R."/>
            <person name="Aronstam R.S."/>
        </authorList>
    </citation>
    <scope>NUCLEOTIDE SEQUENCE [LARGE SCALE MRNA] (ISOFORM 2B)</scope>
    <source>
        <tissue>Brain</tissue>
    </source>
</reference>
<reference key="7">
    <citation type="submission" date="2003-05" db="EMBL/GenBank/DDBJ databases">
        <title>Cloning of human full-length CDSs in BD Creator(TM) system donor vector.</title>
        <authorList>
            <person name="Kalnine N."/>
            <person name="Chen X."/>
            <person name="Rolfs A."/>
            <person name="Halleck A."/>
            <person name="Hines L."/>
            <person name="Eisenstein S."/>
            <person name="Koundinya M."/>
            <person name="Raphael J."/>
            <person name="Moreira D."/>
            <person name="Kelley T."/>
            <person name="LaBaer J."/>
            <person name="Lin Y."/>
            <person name="Phelan M."/>
            <person name="Farmer A."/>
        </authorList>
    </citation>
    <scope>NUCLEOTIDE SEQUENCE [LARGE SCALE MRNA] (ISOFORM 2B)</scope>
    <scope>VARIANT LUNG CARCINOMA HIS-61</scope>
</reference>
<reference key="8">
    <citation type="journal article" date="2004" name="Nat. Genet.">
        <title>Complete sequencing and characterization of 21,243 full-length human cDNAs.</title>
        <authorList>
            <person name="Ota T."/>
            <person name="Suzuki Y."/>
            <person name="Nishikawa T."/>
            <person name="Otsuki T."/>
            <person name="Sugiyama T."/>
            <person name="Irie R."/>
            <person name="Wakamatsu A."/>
            <person name="Hayashi K."/>
            <person name="Sato H."/>
            <person name="Nagai K."/>
            <person name="Kimura K."/>
            <person name="Makita H."/>
            <person name="Sekine M."/>
            <person name="Obayashi M."/>
            <person name="Nishi T."/>
            <person name="Shibahara T."/>
            <person name="Tanaka T."/>
            <person name="Ishii S."/>
            <person name="Yamamoto J."/>
            <person name="Saito K."/>
            <person name="Kawai Y."/>
            <person name="Isono Y."/>
            <person name="Nakamura Y."/>
            <person name="Nagahari K."/>
            <person name="Murakami K."/>
            <person name="Yasuda T."/>
            <person name="Iwayanagi T."/>
            <person name="Wagatsuma M."/>
            <person name="Shiratori A."/>
            <person name="Sudo H."/>
            <person name="Hosoiri T."/>
            <person name="Kaku Y."/>
            <person name="Kodaira H."/>
            <person name="Kondo H."/>
            <person name="Sugawara M."/>
            <person name="Takahashi M."/>
            <person name="Kanda K."/>
            <person name="Yokoi T."/>
            <person name="Furuya T."/>
            <person name="Kikkawa E."/>
            <person name="Omura Y."/>
            <person name="Abe K."/>
            <person name="Kamihara K."/>
            <person name="Katsuta N."/>
            <person name="Sato K."/>
            <person name="Tanikawa M."/>
            <person name="Yamazaki M."/>
            <person name="Ninomiya K."/>
            <person name="Ishibashi T."/>
            <person name="Yamashita H."/>
            <person name="Murakawa K."/>
            <person name="Fujimori K."/>
            <person name="Tanai H."/>
            <person name="Kimata M."/>
            <person name="Watanabe M."/>
            <person name="Hiraoka S."/>
            <person name="Chiba Y."/>
            <person name="Ishida S."/>
            <person name="Ono Y."/>
            <person name="Takiguchi S."/>
            <person name="Watanabe S."/>
            <person name="Yosida M."/>
            <person name="Hotuta T."/>
            <person name="Kusano J."/>
            <person name="Kanehori K."/>
            <person name="Takahashi-Fujii A."/>
            <person name="Hara H."/>
            <person name="Tanase T.-O."/>
            <person name="Nomura Y."/>
            <person name="Togiya S."/>
            <person name="Komai F."/>
            <person name="Hara R."/>
            <person name="Takeuchi K."/>
            <person name="Arita M."/>
            <person name="Imose N."/>
            <person name="Musashino K."/>
            <person name="Yuuki H."/>
            <person name="Oshima A."/>
            <person name="Sasaki N."/>
            <person name="Aotsuka S."/>
            <person name="Yoshikawa Y."/>
            <person name="Matsunawa H."/>
            <person name="Ichihara T."/>
            <person name="Shiohata N."/>
            <person name="Sano S."/>
            <person name="Moriya S."/>
            <person name="Momiyama H."/>
            <person name="Satoh N."/>
            <person name="Takami S."/>
            <person name="Terashima Y."/>
            <person name="Suzuki O."/>
            <person name="Nakagawa S."/>
            <person name="Senoh A."/>
            <person name="Mizoguchi H."/>
            <person name="Goto Y."/>
            <person name="Shimizu F."/>
            <person name="Wakebe H."/>
            <person name="Hishigaki H."/>
            <person name="Watanabe T."/>
            <person name="Sugiyama A."/>
            <person name="Takemoto M."/>
            <person name="Kawakami B."/>
            <person name="Yamazaki M."/>
            <person name="Watanabe K."/>
            <person name="Kumagai A."/>
            <person name="Itakura S."/>
            <person name="Fukuzumi Y."/>
            <person name="Fujimori Y."/>
            <person name="Komiyama M."/>
            <person name="Tashiro H."/>
            <person name="Tanigami A."/>
            <person name="Fujiwara T."/>
            <person name="Ono T."/>
            <person name="Yamada K."/>
            <person name="Fujii Y."/>
            <person name="Ozaki K."/>
            <person name="Hirao M."/>
            <person name="Ohmori Y."/>
            <person name="Kawabata A."/>
            <person name="Hikiji T."/>
            <person name="Kobatake N."/>
            <person name="Inagaki H."/>
            <person name="Ikema Y."/>
            <person name="Okamoto S."/>
            <person name="Okitani R."/>
            <person name="Kawakami T."/>
            <person name="Noguchi S."/>
            <person name="Itoh T."/>
            <person name="Shigeta K."/>
            <person name="Senba T."/>
            <person name="Matsumura K."/>
            <person name="Nakajima Y."/>
            <person name="Mizuno T."/>
            <person name="Morinaga M."/>
            <person name="Sasaki M."/>
            <person name="Togashi T."/>
            <person name="Oyama M."/>
            <person name="Hata H."/>
            <person name="Watanabe M."/>
            <person name="Komatsu T."/>
            <person name="Mizushima-Sugano J."/>
            <person name="Satoh T."/>
            <person name="Shirai Y."/>
            <person name="Takahashi Y."/>
            <person name="Nakagawa K."/>
            <person name="Okumura K."/>
            <person name="Nagase T."/>
            <person name="Nomura N."/>
            <person name="Kikuchi H."/>
            <person name="Masuho Y."/>
            <person name="Yamashita R."/>
            <person name="Nakai K."/>
            <person name="Yada T."/>
            <person name="Nakamura Y."/>
            <person name="Ohara O."/>
            <person name="Isogai T."/>
            <person name="Sugano S."/>
        </authorList>
    </citation>
    <scope>NUCLEOTIDE SEQUENCE [LARGE SCALE MRNA] (ISOFORM 2B)</scope>
    <source>
        <tissue>Testis</tissue>
    </source>
</reference>
<reference key="9">
    <citation type="submission" date="2007-12" db="EMBL/GenBank/DDBJ databases">
        <authorList>
            <consortium name="SeattleSNPs variation discovery resource"/>
        </authorList>
    </citation>
    <scope>NUCLEOTIDE SEQUENCE [GENOMIC DNA]</scope>
</reference>
<reference key="10">
    <citation type="submission" date="2005-07" db="EMBL/GenBank/DDBJ databases">
        <authorList>
            <person name="Mural R.J."/>
            <person name="Istrail S."/>
            <person name="Sutton G.G."/>
            <person name="Florea L."/>
            <person name="Halpern A.L."/>
            <person name="Mobarry C.M."/>
            <person name="Lippert R."/>
            <person name="Walenz B."/>
            <person name="Shatkay H."/>
            <person name="Dew I."/>
            <person name="Miller J.R."/>
            <person name="Flanigan M.J."/>
            <person name="Edwards N.J."/>
            <person name="Bolanos R."/>
            <person name="Fasulo D."/>
            <person name="Halldorsson B.V."/>
            <person name="Hannenhalli S."/>
            <person name="Turner R."/>
            <person name="Yooseph S."/>
            <person name="Lu F."/>
            <person name="Nusskern D.R."/>
            <person name="Shue B.C."/>
            <person name="Zheng X.H."/>
            <person name="Zhong F."/>
            <person name="Delcher A.L."/>
            <person name="Huson D.H."/>
            <person name="Kravitz S.A."/>
            <person name="Mouchard L."/>
            <person name="Reinert K."/>
            <person name="Remington K.A."/>
            <person name="Clark A.G."/>
            <person name="Waterman M.S."/>
            <person name="Eichler E.E."/>
            <person name="Adams M.D."/>
            <person name="Hunkapiller M.W."/>
            <person name="Myers E.W."/>
            <person name="Venter J.C."/>
        </authorList>
    </citation>
    <scope>NUCLEOTIDE SEQUENCE [LARGE SCALE GENOMIC DNA]</scope>
</reference>
<reference key="11">
    <citation type="journal article" date="2004" name="Genome Res.">
        <title>The status, quality, and expansion of the NIH full-length cDNA project: the Mammalian Gene Collection (MGC).</title>
        <authorList>
            <consortium name="The MGC Project Team"/>
        </authorList>
    </citation>
    <scope>NUCLEOTIDE SEQUENCE [LARGE SCALE MRNA] (ISOFORM 2B)</scope>
    <scope>VARIANT LUNG CARCINOMA HIS-61</scope>
    <source>
        <tissue>Lung carcinoma</tissue>
    </source>
</reference>
<reference key="12">
    <citation type="journal article" date="1984" name="Proc. Natl. Acad. Sci. U.S.A.">
        <title>Isolation of transforming sequences of two human lung carcinomas: structural and functional analysis of the activated c-K-ras oncogenes.</title>
        <authorList>
            <person name="Nakano H."/>
            <person name="Yamamoto F."/>
            <person name="Neville C."/>
            <person name="Evans D."/>
            <person name="Mizuno T."/>
            <person name="Perucho M."/>
        </authorList>
    </citation>
    <scope>NUCLEOTIDE SEQUENCE [GENOMIC DNA] OF 1-37</scope>
    <scope>VARIANT LUNG CARCINOMA CYS-12</scope>
    <source>
        <tissue>Lung carcinoma</tissue>
    </source>
</reference>
<reference key="13">
    <citation type="journal article" date="1985" name="Biochem. Biophys. Res. Commun.">
        <title>Activation of the c-K-ras oncogene in a human pancreas carcinoma.</title>
        <authorList>
            <person name="Hirai H."/>
            <person name="Okabe T."/>
            <person name="Anraku Y."/>
            <person name="Fujisawa M."/>
            <person name="Urabe A."/>
            <person name="Takaku F."/>
        </authorList>
    </citation>
    <scope>NUCLEOTIDE SEQUENCE [GENOMIC DNA] OF 1-96</scope>
    <source>
        <tissue>Pancreatic carcinoma</tissue>
    </source>
</reference>
<reference key="14">
    <citation type="journal article" date="1987" name="Cancer Res.">
        <title>Activated c-Ha-ras oncogene with a guanine to thymine transversion at the twelfth codon in a human stomach cancer cell line.</title>
        <authorList>
            <person name="Deng G."/>
            <person name="Lu Y."/>
            <person name="Chen S."/>
            <person name="Miao J."/>
            <person name="Lu G."/>
            <person name="Li H."/>
            <person name="Cai H."/>
            <person name="Xu X."/>
            <person name="Zheng E."/>
            <person name="Liu P."/>
        </authorList>
    </citation>
    <scope>NUCLEOTIDE SEQUENCE [GENOMIC DNA] OF 1-37</scope>
    <scope>VARIANT GASC VAL-12</scope>
</reference>
<reference key="15">
    <citation type="journal article" date="1984" name="Science">
        <title>Malignant activation of a K-ras oncogene in lung carcinoma but not in normal tissue of the same patient.</title>
        <authorList>
            <person name="Santos E."/>
            <person name="Martin-Zanca D."/>
            <person name="Reddy P.E."/>
            <person name="Pierotti M.A."/>
            <person name="Porta G."/>
            <person name="Barbacid M."/>
        </authorList>
    </citation>
    <scope>NUCLEOTIDE SEQUENCE [GENOMIC DNA] OF 1-36</scope>
    <scope>VARIANT BLADDER/LUNG CANCER ARG-12</scope>
    <source>
        <tissue>Lung carcinoma</tissue>
    </source>
</reference>
<reference key="16">
    <citation type="journal article" date="1985" name="Jpn. J. Cancer Res.">
        <title>Essential region for transforming activity of human c-Ha-ras-1.</title>
        <authorList>
            <person name="Sekiya T."/>
            <person name="Tokunaga A."/>
            <person name="Fushimi M."/>
        </authorList>
    </citation>
    <scope>NUCLEOTIDE SEQUENCE [GENOMIC DNA] OF 1-37</scope>
</reference>
<reference key="17">
    <citation type="submission" date="2008-02" db="UniProtKB">
        <authorList>
            <person name="Bienvenut W.V."/>
            <person name="Calvo F."/>
            <person name="Kolch W."/>
        </authorList>
    </citation>
    <scope>PROTEIN SEQUENCE OF 1-41; 43-147 AND 150-161</scope>
    <scope>CLEAVAGE OF INITIATOR METHIONINE</scope>
    <scope>ACETYLATION AT MET-1 AND THR-2</scope>
    <scope>IDENTIFICATION BY MASS SPECTROMETRY</scope>
    <source>
        <tissue>Cervix carcinoma</tissue>
    </source>
</reference>
<reference key="18">
    <citation type="journal article" date="1984" name="Nucleic Acids Res.">
        <title>Activation of a human c-K-ras oncogene.</title>
        <authorList>
            <person name="Yamamoto F."/>
            <person name="Perucho M."/>
        </authorList>
    </citation>
    <scope>NUCLEOTIDE SEQUENCE [GENOMIC DNA] OF 38-96</scope>
    <source>
        <tissue>Lung carcinoma</tissue>
    </source>
</reference>
<reference key="19">
    <citation type="journal article" date="2009" name="FEBS Lett.">
        <title>Distinct kinetics of (H/K/N)Ras glucosylation and Rac1 glucosylation catalysed by Clostridium sordellii lethal toxin.</title>
        <authorList>
            <person name="Huelsenbeck S.C."/>
            <person name="Klose I."/>
            <person name="Reichenbach M."/>
            <person name="Huelsenbeck J."/>
            <person name="Genth H."/>
        </authorList>
    </citation>
    <scope>GLYCOSYLATION AT THR-35 (MICROBIAL INFECTION)</scope>
</reference>
<reference key="20">
    <citation type="journal article" date="2010" name="J. Biol. Chem.">
        <title>Splice variants of SmgGDS control small GTPase prenylation and membrane localization.</title>
        <authorList>
            <person name="Berg T.J."/>
            <person name="Gastonguay A.J."/>
            <person name="Lorimer E.L."/>
            <person name="Kuhnmuench J.R."/>
            <person name="Li R."/>
            <person name="Fields A.P."/>
            <person name="Williams C.L."/>
        </authorList>
    </citation>
    <scope>INTERACTION WITH RAP1GDS1</scope>
</reference>
<reference key="21">
    <citation type="journal article" date="2011" name="BMC Syst. Biol.">
        <title>Initial characterization of the human central proteome.</title>
        <authorList>
            <person name="Burkard T.R."/>
            <person name="Planyavsky M."/>
            <person name="Kaupe I."/>
            <person name="Breitwieser F.P."/>
            <person name="Buerckstuemmer T."/>
            <person name="Bennett K.L."/>
            <person name="Superti-Furga G."/>
            <person name="Colinge J."/>
        </authorList>
    </citation>
    <scope>IDENTIFICATION BY MASS SPECTROMETRY [LARGE SCALE ANALYSIS]</scope>
</reference>
<reference key="22">
    <citation type="journal article" date="2012" name="Proc. Natl. Acad. Sci. U.S.A.">
        <title>Regulation of RAS oncogenicity by acetylation.</title>
        <authorList>
            <person name="Yang M.H."/>
            <person name="Nickerson S."/>
            <person name="Kim E.T."/>
            <person name="Liot C."/>
            <person name="Laurent G."/>
            <person name="Spang R."/>
            <person name="Philips M.R."/>
            <person name="Shan Y."/>
            <person name="Shaw D.E."/>
            <person name="Bar-Sagi D."/>
            <person name="Haigis M.C."/>
            <person name="Haigis K.M."/>
        </authorList>
    </citation>
    <scope>ACETYLATION AT LYS-104</scope>
    <scope>VARIANT VAL-12</scope>
    <scope>FUNCTION</scope>
    <scope>ACTIVITY REGULATION</scope>
</reference>
<reference key="23">
    <citation type="journal article" date="2013" name="Nature">
        <title>Small molecule inhibition of the KRAS-PDE? interaction impairs oncogenic KRAS signalling.</title>
        <authorList>
            <person name="Zimmermann G."/>
            <person name="Papke B."/>
            <person name="Ismail S."/>
            <person name="Vartak N."/>
            <person name="Chandra A."/>
            <person name="Hoffmann M."/>
            <person name="Hahn S.A."/>
            <person name="Triola G."/>
            <person name="Wittinghofer A."/>
            <person name="Bastiaens P.I."/>
            <person name="Waldmann H."/>
        </authorList>
    </citation>
    <scope>FUNCTION</scope>
    <scope>SUBCELLULAR LOCATION</scope>
    <scope>INTERACTION WITH PDE6D</scope>
</reference>
<reference key="24">
    <citation type="journal article" date="2014" name="Elife">
        <title>A KRAS-directed transcriptional silencing pathway that mediates the CpG island methylator phenotype.</title>
        <authorList>
            <person name="Serra R.W."/>
            <person name="Fang M."/>
            <person name="Park S.M."/>
            <person name="Hutchinson L."/>
            <person name="Green M.R."/>
        </authorList>
    </citation>
    <scope>FUNCTION</scope>
    <scope>CHARACTERIZATION OF VARIANT COLON CANCER VAL-12</scope>
</reference>
<reference key="25">
    <citation type="journal article" date="2014" name="J. Biol. Chem.">
        <title>The chaperone protein SmgGDS interacts with small GTPases entering the prenylation pathway by recognizing the last amino acid in the CAAX motif.</title>
        <authorList>
            <person name="Schuld N.J."/>
            <person name="Vervacke J.S."/>
            <person name="Lorimer E.L."/>
            <person name="Simon N.C."/>
            <person name="Hauser A.D."/>
            <person name="Barbieri J.T."/>
            <person name="Distefano M.D."/>
            <person name="Williams C.L."/>
        </authorList>
    </citation>
    <scope>INTERACTION WITH RAP1GDS1</scope>
    <scope>ISOPRENYLATION AT CYS-186</scope>
</reference>
<reference key="26">
    <citation type="journal article" date="2015" name="Proteomics">
        <title>N-terminome analysis of the human mitochondrial proteome.</title>
        <authorList>
            <person name="Vaca Jacome A.S."/>
            <person name="Rabilloud T."/>
            <person name="Schaeffer-Reiss C."/>
            <person name="Rompais M."/>
            <person name="Ayoub D."/>
            <person name="Lane L."/>
            <person name="Bairoch A."/>
            <person name="Van Dorsselaer A."/>
            <person name="Carapito C."/>
        </authorList>
    </citation>
    <scope>IDENTIFICATION BY MASS SPECTROMETRY [LARGE SCALE ANALYSIS]</scope>
</reference>
<reference key="27">
    <citation type="journal article" date="2017" name="Elife">
        <title>SIRT2 and lysine fatty acylation regulate the transforming activity of K-Ras4a.</title>
        <authorList>
            <person name="Jing H."/>
            <person name="Zhang X."/>
            <person name="Wisner S.A."/>
            <person name="Chen X."/>
            <person name="Spiegelman N.A."/>
            <person name="Linder M.E."/>
            <person name="Lin H."/>
        </authorList>
    </citation>
    <scope>PALMITOYLATION AT CYS-180; LYS-182; LYS-184 AND LYS-185</scope>
    <scope>DEPALMITOYLATION BY SIRT2</scope>
    <scope>SUBCELLULAR LOCATION</scope>
    <scope>MUTAGENESIS OF CYS-180 AND 182-LYS--LYS-185</scope>
</reference>
<reference key="28">
    <citation type="journal article" date="2017" name="J. Cell Biol.">
        <title>The G protein-coupled receptor GPR31 promotes membrane association of KRAS.</title>
        <authorList>
            <person name="Fehrenbacher N."/>
            <person name="Tojal da Silva I."/>
            <person name="Ramirez C."/>
            <person name="Zhou Y."/>
            <person name="Cho K.J."/>
            <person name="Kuchay S."/>
            <person name="Shi J."/>
            <person name="Thomas S."/>
            <person name="Pagano M."/>
            <person name="Hancock J.F."/>
            <person name="Bar-Sagi D."/>
            <person name="Philips M.R."/>
        </authorList>
    </citation>
    <scope>INTERACTION WITH GPR31</scope>
</reference>
<reference key="29">
    <citation type="journal article" date="2018" name="Science">
        <title>Mutations in LZTR1 drive human disease by dysregulating RAS ubiquitination.</title>
        <authorList>
            <person name="Steklov M."/>
            <person name="Pandolfi S."/>
            <person name="Baietti M.F."/>
            <person name="Batiuk A."/>
            <person name="Carai P."/>
            <person name="Najm P."/>
            <person name="Zhang M."/>
            <person name="Jang H."/>
            <person name="Renzi F."/>
            <person name="Cai Y."/>
            <person name="Abbasi Asbagh L."/>
            <person name="Pastor T."/>
            <person name="De Troyer M."/>
            <person name="Simicek M."/>
            <person name="Radaelli E."/>
            <person name="Brems H."/>
            <person name="Legius E."/>
            <person name="Tavernier J."/>
            <person name="Gevaert K."/>
            <person name="Impens F."/>
            <person name="Messiaen L."/>
            <person name="Nussinov R."/>
            <person name="Heymans S."/>
            <person name="Eyckerman S."/>
            <person name="Sablina A.A."/>
        </authorList>
    </citation>
    <scope>UBIQUITINATION AT LYS-170</scope>
</reference>
<reference key="30">
    <citation type="journal article" date="2018" name="Science">
        <title>LZTR1 is a regulator of RAS ubiquitination and signaling.</title>
        <authorList>
            <person name="Bigenzahn J.W."/>
            <person name="Collu G.M."/>
            <person name="Kartnig F."/>
            <person name="Pieraks M."/>
            <person name="Vladimer G.I."/>
            <person name="Heinz L.X."/>
            <person name="Sedlyarov V."/>
            <person name="Schischlik F."/>
            <person name="Fauster A."/>
            <person name="Rebsamen M."/>
            <person name="Parapatics K."/>
            <person name="Blomen V.A."/>
            <person name="Mueller A.C."/>
            <person name="Winter G.E."/>
            <person name="Kralovics R."/>
            <person name="Brummelkamp T.R."/>
            <person name="Mlodzik M."/>
            <person name="Superti-Furga G."/>
        </authorList>
    </citation>
    <scope>UBIQUITINATION</scope>
</reference>
<reference key="31">
    <citation type="journal article" date="2022" name="Nat. Struct. Mol. Biol.">
        <title>Structure of the SHOC2-MRAS-PP1c complex provides insights into RAF activation and Noonan syndrome.</title>
        <authorList>
            <person name="Bonsor D.A."/>
            <person name="Alexander P."/>
            <person name="Snead K."/>
            <person name="Hartig N."/>
            <person name="Drew M."/>
            <person name="Messing S."/>
            <person name="Finci L.I."/>
            <person name="Nissley D.V."/>
            <person name="McCormick F."/>
            <person name="Esposito D."/>
            <person name="Rodriguez-Viciana P."/>
            <person name="Stephen A.G."/>
            <person name="Simanshu D.K."/>
        </authorList>
    </citation>
    <scope>INTERACTION WITH PPP1CA; PPP1CB AND SHOC2</scope>
</reference>
<reference key="32">
    <citation type="journal article" date="2022" name="Nature">
        <title>Structural basis for SHOC2 modulation of RAS signalling.</title>
        <authorList>
            <person name="Liau N.P.D."/>
            <person name="Johnson M.C."/>
            <person name="Izadi S."/>
            <person name="Gerosa L."/>
            <person name="Hammel M."/>
            <person name="Bruning J.M."/>
            <person name="Wendorff T.J."/>
            <person name="Phung W."/>
            <person name="Hymowitz S.G."/>
            <person name="Sudhamsu J."/>
        </authorList>
    </citation>
    <scope>INTERACTION WITH PPP1CA; PPP1CB; PPP1CC AND SHOC2</scope>
</reference>
<reference key="33">
    <citation type="journal article" date="2022" name="Nature">
        <title>Structure-function analysis of the SHOC2-MRAS-PP1c holophosphatase complex.</title>
        <authorList>
            <person name="Kwon J.J."/>
            <person name="Hajian B."/>
            <person name="Bian Y."/>
            <person name="Young L.C."/>
            <person name="Amor A.J."/>
            <person name="Fuller J.R."/>
            <person name="Fraley C.V."/>
            <person name="Sykes A.M."/>
            <person name="So J."/>
            <person name="Pan J."/>
            <person name="Baker L."/>
            <person name="Lee S.J."/>
            <person name="Wheeler D.B."/>
            <person name="Mayhew D.L."/>
            <person name="Persky N.S."/>
            <person name="Yang X."/>
            <person name="Root D.E."/>
            <person name="Barsotti A.M."/>
            <person name="Stamford A.W."/>
            <person name="Perry C.K."/>
            <person name="Burgin A."/>
            <person name="McCormick F."/>
            <person name="Lemke C.T."/>
            <person name="Hahn W.C."/>
            <person name="Aguirre A.J."/>
        </authorList>
    </citation>
    <scope>INTERACTION WITH PPP1CA; PPP1CB; PPP1CC AND SHOC2</scope>
    <scope>CHARACTERIZATION OF VARIANT GLN-61</scope>
</reference>
<reference key="34">
    <citation type="journal article" date="2022" name="Nature">
        <title>Structure of the MRAS-SHOC2-PP1C phosphatase complex.</title>
        <authorList>
            <person name="Hauseman Z.J."/>
            <person name="Fodor M."/>
            <person name="Dhembi A."/>
            <person name="Viscomi J."/>
            <person name="Egli D."/>
            <person name="Bleu M."/>
            <person name="Katz S."/>
            <person name="Park E."/>
            <person name="Jang D.M."/>
            <person name="Porter K.A."/>
            <person name="Meili F."/>
            <person name="Guo H."/>
            <person name="Kerr G."/>
            <person name="Molle S."/>
            <person name="Velez-Vega C."/>
            <person name="Beyer K.S."/>
            <person name="Galli G.G."/>
            <person name="Maira S.M."/>
            <person name="Stams T."/>
            <person name="Clark K."/>
            <person name="Eck M.J."/>
            <person name="Tordella L."/>
            <person name="Thoma C.R."/>
            <person name="King D.A."/>
        </authorList>
    </citation>
    <scope>INTERACTION WITH PPP1CA AND SHOC2</scope>
    <scope>CHARACTERIZATION OF VARIANT GLN-61</scope>
</reference>
<reference key="35">
    <citation type="journal article" date="2012" name="Angew. Chem. Int. Ed. Engl.">
        <title>Discovery of small molecules that bind to K-Ras and inhibit Sos-mediated activation.</title>
        <authorList>
            <person name="Sun Q."/>
            <person name="Burke J.P."/>
            <person name="Phan J."/>
            <person name="Burns M.C."/>
            <person name="Olejniczak E.T."/>
            <person name="Waterson A.G."/>
            <person name="Lee T."/>
            <person name="Rossanese O.W."/>
            <person name="Fesik S.W."/>
        </authorList>
    </citation>
    <scope>X-RAY CRYSTALLOGRAPHY (1.35 ANGSTROMS) OF 1-164 IN COMPLEX WITH THE GTP ANALOG GUANOSINE-5'-DIPHOSPHATE</scope>
    <scope>ACTIVITY REGULATION</scope>
</reference>
<reference key="36">
    <citation type="journal article" date="2012" name="Proc. Natl. Acad. Sci. U.S.A.">
        <title>Small-molecule ligands bind to a distinct pocket in Ras and inhibit SOS-mediated nucleotide exchange activity.</title>
        <authorList>
            <person name="Maurer T."/>
            <person name="Garrenton L.S."/>
            <person name="Oh A."/>
            <person name="Pitts K."/>
            <person name="Anderson D.J."/>
            <person name="Skelton N.J."/>
            <person name="Fauber B.P."/>
            <person name="Pan B."/>
            <person name="Malek S."/>
            <person name="Stokoe D."/>
            <person name="Ludlam M.J."/>
            <person name="Bowman K.K."/>
            <person name="Wu J."/>
            <person name="Giannetti A.M."/>
            <person name="Starovasnik M.A."/>
            <person name="Mellman I."/>
            <person name="Jackson P.K."/>
            <person name="Rudolph J."/>
            <person name="Wang W."/>
            <person name="Fang G."/>
        </authorList>
    </citation>
    <scope>X-RAY CRYSTALLOGRAPHY (1.70 ANGSTROMS) OF 2-164 IN COMPLEX WITH GTP ANALOGS AND MAGNESIUM</scope>
    <scope>FUNCTION</scope>
    <scope>ACTIVITY REGULATION</scope>
    <scope>INTERACTION WITH SOS1</scope>
    <scope>SUBCELLULAR LOCATION</scope>
</reference>
<reference evidence="65 66" key="37">
    <citation type="journal article" date="2016" name="Proc. Natl. Acad. Sci. U.S.A.">
        <title>Structural basis of recognition of farnesylated and methylated KRAS4b by PDEdelta.</title>
        <authorList>
            <person name="Dharmaiah S."/>
            <person name="Bindu L."/>
            <person name="Tran T.H."/>
            <person name="Gillette W.K."/>
            <person name="Frank P.H."/>
            <person name="Ghirlando R."/>
            <person name="Nissley D.V."/>
            <person name="Esposito D."/>
            <person name="McCormick F."/>
            <person name="Stephen A.G."/>
            <person name="Simanshu D.K."/>
        </authorList>
    </citation>
    <scope>X-RAY CRYSTALLOGRAPHY (1.90 ANGSTROMS) OF 2-164</scope>
    <scope>ISOPRENYLATION AT CYS-186</scope>
    <scope>METHYLATION AT CYS-186</scope>
</reference>
<reference evidence="67 68" key="38">
    <citation type="journal article" date="2021" name="Proc. Natl. Acad. Sci. U.S.A.">
        <title>RAS interaction with Sin1 is dispensable for mTORC2 assembly and activity.</title>
        <authorList>
            <person name="Castel P."/>
            <person name="Dharmaiah S."/>
            <person name="Sale M.J."/>
            <person name="Messing S."/>
            <person name="Rizzuto G."/>
            <person name="Cuevas-Navarro A."/>
            <person name="Cheng A."/>
            <person name="Trnka M.J."/>
            <person name="Urisman A."/>
            <person name="Esposito D."/>
            <person name="Simanshu D.K."/>
            <person name="McCormick F."/>
        </authorList>
    </citation>
    <scope>X-RAY CRYSTALLOGRAPHY (2.35 ANGSTROMS) IN COMPLEX WITH MAPKAP1</scope>
    <scope>INTERACTION WITH MAPKAP1</scope>
    <scope>MUTAGENESIS OF ASP-38 AND TYR-40</scope>
</reference>
<reference evidence="69" key="39">
    <citation type="journal article" date="2022" name="Proc. Natl. Acad. Sci. U.S.A.">
        <title>Structural insights into Ras regulation by SIN1.</title>
        <authorList>
            <person name="Zheng Y."/>
            <person name="Ding L."/>
            <person name="Meng X."/>
            <person name="Potter M."/>
            <person name="Kearney A.L."/>
            <person name="Zhang J."/>
            <person name="Sun J."/>
            <person name="James D.E."/>
            <person name="Yang G."/>
            <person name="Zhou C."/>
        </authorList>
    </citation>
    <scope>X-RAY CRYSTALLOGRAPHY (1.60 ANGSTROMS) IN COMPLEX WITH MAPKAP1</scope>
    <scope>INTERACTION WITH MAPKAP1</scope>
</reference>
<reference key="40">
    <citation type="journal article" date="1987" name="Nucleic Acids Res.">
        <title>The human c-Kirsten ras gene is activated by a novel mutation in codon 13 in the breast carcinoma cell line MDA-MB231.</title>
        <authorList>
            <person name="Kozma S.C."/>
            <person name="Bogaard M.E."/>
            <person name="Buser K."/>
            <person name="Saurer S.M."/>
            <person name="Bos J.L."/>
            <person name="Groner B."/>
            <person name="Hynes N.E."/>
        </authorList>
    </citation>
    <scope>VARIANT BREAST CANCER ASP-13</scope>
</reference>
<reference key="41">
    <citation type="journal article" date="1992" name="Urol. Res.">
        <title>Detection of a rare point mutation in Ki-ras of a human bladder cancer xenograft by polymerase chain reaction and direct sequencing.</title>
        <authorList>
            <person name="Grimmond S.M."/>
            <person name="Raghavan D."/>
            <person name="Russell P.J."/>
        </authorList>
    </citation>
    <scope>VARIANT BLADDER CANCER THR-59</scope>
</reference>
<reference key="42">
    <citation type="journal article" date="1993" name="Ann. Surg.">
        <title>Detection of point mutations in the Kirsten-ras oncogene provides evidence for the multicentricity of pancreatic carcinoma.</title>
        <authorList>
            <person name="Motojima K."/>
            <person name="Urano T."/>
            <person name="Nagata Y."/>
            <person name="Shiku H."/>
            <person name="Tsurifune T."/>
            <person name="Kanematsu T."/>
        </authorList>
    </citation>
    <scope>VARIANTS PANCREATIC CARCINOMA ASP-12 AND VAL-12</scope>
</reference>
<reference key="43">
    <citation type="journal article" date="1995" name="Cancer">
        <title>Clinicopathologic significance of the K-ras gene codon 12 point mutation in stomach cancer. An analysis of 140 cases.</title>
        <authorList>
            <person name="Lee K.H."/>
            <person name="Lee J.S."/>
            <person name="Suh C."/>
            <person name="Kim S.W."/>
            <person name="Kim S.B."/>
            <person name="Lee J.H."/>
            <person name="Lee M.S."/>
            <person name="Park M.Y."/>
            <person name="Sun H.S."/>
            <person name="Kim S.H."/>
        </authorList>
    </citation>
    <scope>VARIANTS GASC SER-12 AND ASP-12</scope>
</reference>
<reference key="44">
    <citation type="journal article" date="1996" name="J. Biol. Chem.">
        <title>Biochemical characterization of a novel KRAS insertion mutation from a human leukemia.</title>
        <authorList>
            <person name="Bollag G."/>
            <person name="Adler F."/>
            <person name="elMasry N."/>
            <person name="McCabe P.C."/>
            <person name="Conner E. Jr."/>
            <person name="Thompson P."/>
            <person name="McCormick F."/>
            <person name="Shannon K."/>
        </authorList>
    </citation>
    <scope>INVOLVEMENT IN AML</scope>
    <scope>VARIANT GLY-10 INS</scope>
    <scope>CHARACTERIZATION OF VARIANT GLY-10 INS</scope>
</reference>
<reference key="45">
    <citation type="journal article" date="2003" name="Oncogene">
        <title>BRAF and KRAS mutations in stomach cancer.</title>
        <authorList>
            <person name="Lee S.H."/>
            <person name="Lee J.W."/>
            <person name="Soung Y.H."/>
            <person name="Kim H.S."/>
            <person name="Park W.S."/>
            <person name="Kim S.Y."/>
            <person name="Lee J.H."/>
            <person name="Park J.Y."/>
            <person name="Cho Y.G."/>
            <person name="Kim C.J."/>
            <person name="Nam S.W."/>
            <person name="Kim S.H."/>
            <person name="Lee J.Y."/>
            <person name="Yoo N.J."/>
        </authorList>
    </citation>
    <scope>VARIANTS GASC ASN-5; VAL-12; ASP-13 AND THR-59</scope>
</reference>
<reference key="46">
    <citation type="journal article" date="2005" name="Neurology">
        <title>RAS pathway activation and an oncogenic RAS mutation in sporadic pilocytic astrocytoma.</title>
        <authorList>
            <person name="Sharma M.K."/>
            <person name="Zehnbauer B.A."/>
            <person name="Watson M.A."/>
            <person name="Gutmann D.H."/>
        </authorList>
    </citation>
    <scope>VARIANT PYLOCYTIC ASTROCYTOMA ARG-13</scope>
</reference>
<reference key="47">
    <citation type="journal article" date="2006" name="Am. J. Hum. Genet.">
        <title>Germline missense mutations affecting KRAS Isoform B are associated with a severe Noonan syndrome phenotype.</title>
        <authorList>
            <person name="Carta C."/>
            <person name="Pantaleoni F."/>
            <person name="Bocchinfuso G."/>
            <person name="Stella L."/>
            <person name="Vasta I."/>
            <person name="Sarkozy A."/>
            <person name="Digilio C."/>
            <person name="Palleschi A."/>
            <person name="Pizzuti A."/>
            <person name="Grammatico P."/>
            <person name="Zampino G."/>
            <person name="Dallapiccola B."/>
            <person name="Gelb B.D."/>
            <person name="Tartaglia M."/>
        </authorList>
    </citation>
    <scope>VARIANTS NS3 GLY-152 AND VAL-153 (ISOFORM 2)</scope>
</reference>
<reference key="48">
    <citation type="journal article" date="2006" name="Clin. Cancer Res.">
        <title>Distinct epidermal growth factor receptor and KRAS mutation patterns in non-small cell lung cancer patients with different tobacco exposure and clinicopathologic features.</title>
        <authorList>
            <person name="Tam I.Y.S."/>
            <person name="Chung L.P."/>
            <person name="Suen W.S."/>
            <person name="Wang E."/>
            <person name="Wong M.C.M."/>
            <person name="Ho K.K."/>
            <person name="Lam W.K."/>
            <person name="Chiu S.W."/>
            <person name="Girard L."/>
            <person name="Minna J.D."/>
            <person name="Gazdar A.F."/>
            <person name="Wong M.P."/>
        </authorList>
    </citation>
    <scope>VARIANTS LUNG CARCINOMA CYS-12; ASP-12; SER-12; VAL-12 AND HIS-61</scope>
</reference>
<reference key="49">
    <citation type="journal article" date="2006" name="Nat. Genet.">
        <title>Germline KRAS and BRAF mutations in cardio-facio-cutaneous syndrome.</title>
        <authorList>
            <person name="Niihori T."/>
            <person name="Aoki Y."/>
            <person name="Narumi Y."/>
            <person name="Neri G."/>
            <person name="Cave H."/>
            <person name="Verloes A."/>
            <person name="Okamoto N."/>
            <person name="Hennekam R.C.M."/>
            <person name="Gillessen-Kaesbach G."/>
            <person name="Wieczorek D."/>
            <person name="Kavamura M.I."/>
            <person name="Kurosawa K."/>
            <person name="Ohashi H."/>
            <person name="Wilson L."/>
            <person name="Heron D."/>
            <person name="Bonneau D."/>
            <person name="Corona G."/>
            <person name="Kaname T."/>
            <person name="Naritomi K."/>
            <person name="Baumann C."/>
            <person name="Matsumoto N."/>
            <person name="Kato K."/>
            <person name="Kure S."/>
            <person name="Matsubara Y."/>
        </authorList>
    </citation>
    <scope>VARIANT CFC2 ARG-60</scope>
</reference>
<reference key="50">
    <citation type="journal article" date="2006" name="Nat. Genet.">
        <title>Germline KRAS mutations cause Noonan syndrome.</title>
        <authorList>
            <person name="Schubbert S."/>
            <person name="Zenker M."/>
            <person name="Rowe S.L."/>
            <person name="Boell S."/>
            <person name="Klein C."/>
            <person name="Bollag G."/>
            <person name="van der Burgt I."/>
            <person name="Musante L."/>
            <person name="Kalscheuer V."/>
            <person name="Wehner L.-E."/>
            <person name="Nguyen H."/>
            <person name="West B."/>
            <person name="Zhang K.Y.J."/>
            <person name="Sistermans E."/>
            <person name="Rauch A."/>
            <person name="Niemeyer C.M."/>
            <person name="Shannon K."/>
            <person name="Kratz C.P."/>
        </authorList>
    </citation>
    <scope>VARIANTS NS3 ILE-14 AND ILE-58</scope>
    <scope>VARIANT CFC2 ARG-34</scope>
    <scope>CHARACTERIZATION OF VARIANTS NS3 ILE-14 AND ILE-58</scope>
</reference>
<reference key="51">
    <citation type="journal article" date="2006" name="Science">
        <title>The consensus coding sequences of human breast and colorectal cancers.</title>
        <authorList>
            <person name="Sjoeblom T."/>
            <person name="Jones S."/>
            <person name="Wood L.D."/>
            <person name="Parsons D.W."/>
            <person name="Lin J."/>
            <person name="Barber T.D."/>
            <person name="Mandelker D."/>
            <person name="Leary R.J."/>
            <person name="Ptak J."/>
            <person name="Silliman N."/>
            <person name="Szabo S."/>
            <person name="Buckhaults P."/>
            <person name="Farrell C."/>
            <person name="Meeh P."/>
            <person name="Markowitz S.D."/>
            <person name="Willis J."/>
            <person name="Dawson D."/>
            <person name="Willson J.K.V."/>
            <person name="Gazdar A.F."/>
            <person name="Hartigan J."/>
            <person name="Wu L."/>
            <person name="Liu C."/>
            <person name="Parmigiani G."/>
            <person name="Park B.H."/>
            <person name="Bachman K.E."/>
            <person name="Papadopoulos N."/>
            <person name="Vogelstein B."/>
            <person name="Kinzler K.W."/>
            <person name="Velculescu V.E."/>
        </authorList>
    </citation>
    <scope>VARIANTS [LARGE SCALE ANALYSIS] ALA-12; ASP-12; SER-12; VAL-12; ASP-13; ARG-61; ASN-117 AND THR-146</scope>
</reference>
<reference key="52">
    <citation type="journal article" date="2007" name="Blood">
        <title>Spontaneous improvement of hematologic abnormalities in patients having juvenile myelomonocytic leukemia with specific RAS mutations.</title>
        <authorList>
            <person name="Matsuda K."/>
            <person name="Shimada A."/>
            <person name="Yoshida N."/>
            <person name="Ogawa A."/>
            <person name="Watanabe A."/>
            <person name="Yajima S."/>
            <person name="Iizuka S."/>
            <person name="Koike K."/>
            <person name="Yanai F."/>
            <person name="Kawasaki K."/>
            <person name="Yanagimachi M."/>
            <person name="Kikuchi A."/>
            <person name="Ohtsuka Y."/>
            <person name="Hidaka E."/>
            <person name="Yamauchi K."/>
            <person name="Tanaka M."/>
            <person name="Yanagisawa R."/>
            <person name="Nakazawa Y."/>
            <person name="Shiohara M."/>
            <person name="Manabe A."/>
            <person name="Kojima S."/>
            <person name="Koike K."/>
        </authorList>
    </citation>
    <scope>VARIANTS JMML ASP-12; SER-12 AND ASP-13</scope>
</reference>
<reference key="53">
    <citation type="journal article" date="2007" name="J. Hum. Genet.">
        <title>Further evidence of genetic heterogeneity in Costello syndrome: involvement of the KRAS gene.</title>
        <authorList>
            <person name="Bertola D.R."/>
            <person name="Pereira A.C."/>
            <person name="Brasil A.S."/>
            <person name="Albano L.M."/>
            <person name="Kim C.A."/>
            <person name="Krieger J.E."/>
        </authorList>
    </citation>
    <scope>VARIANT NS3 GLU-5</scope>
</reference>
<reference key="54">
    <citation type="journal article" date="2007" name="J. Med. Genet.">
        <title>Expansion of the genotypic and phenotypic spectrum in patients with KRAS germline mutations.</title>
        <authorList>
            <person name="Zenker M."/>
            <person name="Lehmann K."/>
            <person name="Schulz A.L."/>
            <person name="Barth H."/>
            <person name="Hansmann D."/>
            <person name="Koenig R."/>
            <person name="Korinthenberg R."/>
            <person name="Kreiss-Nachtsheim M."/>
            <person name="Meinecke P."/>
            <person name="Morlot S."/>
            <person name="Mundlos S."/>
            <person name="Quante A.S."/>
            <person name="Raskin S."/>
            <person name="Schnabel D."/>
            <person name="Wehner L.E."/>
            <person name="Kratz C.P."/>
            <person name="Horn D."/>
            <person name="Kutsche K."/>
        </authorList>
    </citation>
    <scope>VARIANTS NS3 ILE-14; ARG-22; LEU-34; GLN-34; MET-36; VAL-153 AND ILE-156 (ISOFORM 2)</scope>
    <scope>VARIANT CFC2 GLU-22</scope>
    <scope>VARIANTS ASN-5 AND LEU-156 (ISOFORM 2)</scope>
</reference>
<reference key="55">
    <citation type="journal article" date="2009" name="Am. J. Med. Genet. A">
        <title>Craniosynostosis in patients with Noonan syndrome caused by germline KRAS mutations.</title>
        <authorList>
            <person name="Kratz C.P."/>
            <person name="Zampino G."/>
            <person name="Kriek M."/>
            <person name="Kant S.G."/>
            <person name="Leoni C."/>
            <person name="Pantaleoni F."/>
            <person name="Oudesluys-Murphy A.M."/>
            <person name="Di Rocco C."/>
            <person name="Kloska S.P."/>
            <person name="Tartaglia M."/>
            <person name="Zenker M."/>
        </authorList>
    </citation>
    <scope>VARIANTS NS3 ILE-58 AND SER-60</scope>
</reference>
<reference key="56">
    <citation type="journal article" date="2011" name="Hum. Mutat.">
        <title>Germline KRAS mutations cause aberrant biochemical and physical properties leading to developmental disorders.</title>
        <authorList>
            <person name="Gremer L."/>
            <person name="Merbitz-Zahradnik T."/>
            <person name="Dvorsky R."/>
            <person name="Cirstea I.C."/>
            <person name="Kratz C.P."/>
            <person name="Zenker M."/>
            <person name="Wittinghofer A."/>
            <person name="Ahmadian M.R."/>
        </authorList>
    </citation>
    <scope>CHARACTERIZATION OF VARIANTS NS3 ILE-14; ARG-22; LEU-34; ILE-58 AND VAL-153 (ISOFORM 2)</scope>
    <scope>CHARACTERIZATION OF VARIANTS CFC2 GLU-22; ARG-34 AND ARG-60</scope>
    <scope>CHARACTERIZATION OF VARIANTS ASN-5 AND LEU-156 (ISOFORM 2)</scope>
    <scope>FUNCTION</scope>
    <scope>CATALYTIC ACTIVITY</scope>
</reference>
<reference key="57">
    <citation type="journal article" date="2025" name="Nat. Commun.">
        <title>The small GTPase MRAS is a broken switch.</title>
        <authorList>
            <person name="Bernal Astrain G."/>
            <person name="Strakhova R."/>
            <person name="Jo C.H."/>
            <person name="Teszner E."/>
            <person name="Killoran R.C."/>
            <person name="Smith M.J."/>
        </authorList>
    </citation>
    <scope>FUNCTION</scope>
    <scope>CATALYTIC ACTIVITY</scope>
    <scope>ACTIVITY REGULATION</scope>
    <scope>CHARACTERIZATION OF VARIANT VAL-12</scope>
    <scope>MUTAGENESIS OF GLN-61</scope>
</reference>
<reference key="58">
    <citation type="journal article" date="2012" name="Clin. Genet.">
        <title>Two novel germline KRAS mutations: expanding the molecular and clinical phenotype.</title>
        <authorList>
            <person name="Stark Z."/>
            <person name="Gillessen-Kaesbach G."/>
            <person name="Ryan M.M."/>
            <person name="Cirstea I.C."/>
            <person name="Gremer L."/>
            <person name="Ahmadian M.R."/>
            <person name="Savarirayan R."/>
            <person name="Zenker M."/>
        </authorList>
    </citation>
    <scope>VARIANTS CFC2 HIS-71 AND GLU-147</scope>
</reference>
<reference key="59">
    <citation type="journal article" date="2015" name="Am. J. Med. Genet. A">
        <title>Oculoectodermal syndrome is a mosaic RASopathy associated with KRAS alterations.</title>
        <authorList>
            <person name="Peacock J.D."/>
            <person name="Dykema K.J."/>
            <person name="Toriello H.V."/>
            <person name="Mooney M.R."/>
            <person name="Scholten D.J. II"/>
            <person name="Winn M.E."/>
            <person name="Borgman A."/>
            <person name="Duesbery N.S."/>
            <person name="Hiemenga J.A."/>
            <person name="Liu C."/>
            <person name="Campbell S."/>
            <person name="Nickoloff B.P."/>
            <person name="Williams B.O."/>
            <person name="Steensma M."/>
        </authorList>
    </citation>
    <scope>VARIANTS OES ASP-13 AND PHE-19</scope>
    <scope>INVOLVEMENT IN OES</scope>
</reference>
<reference key="60">
    <citation type="journal article" date="2016" name="Clin. Genet.">
        <title>Specific mosaic KRAS mutations affecting codon 146 cause oculoectodermal syndrome and encephalocraniocutaneous lipomatosis.</title>
        <authorList>
            <person name="Boppudi S."/>
            <person name="Boegershausen N."/>
            <person name="Hove H.B."/>
            <person name="Percin E.F."/>
            <person name="Aslan D."/>
            <person name="Dvorsky R."/>
            <person name="Kayhan G."/>
            <person name="Li Y."/>
            <person name="Cursiefen C."/>
            <person name="Tantcheva-Poor I."/>
            <person name="Toft P.B."/>
            <person name="Bartsch O."/>
            <person name="Lissewski C."/>
            <person name="Wieland I."/>
            <person name="Jakubiczka S."/>
            <person name="Wollnik B."/>
            <person name="Ahmadian M.R."/>
            <person name="Heindl L.M."/>
            <person name="Zenker M."/>
        </authorList>
    </citation>
    <scope>VARIANTS OES THR-146 AND VAL-146</scope>
    <scope>INVOLVEMENT IN OES</scope>
</reference>
<reference key="61">
    <citation type="journal article" date="2019" name="Mol. Genet. Genomic Med.">
        <title>Expansion of the phenotypic spectrum and description of molecular findings in a cohort of patients with oculocutaneous mosaic RASopathies.</title>
        <authorList>
            <person name="Chacon-Camacho O.F."/>
            <person name="Lopez-Moreno D."/>
            <person name="Morales-Sanchez M.A."/>
            <person name="Hofmann E."/>
            <person name="Pacheco-Quito M."/>
            <person name="Wieland I."/>
            <person name="Cortes-Gonzalez V."/>
            <person name="Villanueva-Mendoza C."/>
            <person name="Zenker M."/>
            <person name="Zenteno J.C."/>
        </authorList>
    </citation>
    <scope>VARIANT SFM ASP-12</scope>
    <scope>VARIANTS OES THR-146 AND VAL-146</scope>
    <scope>INVOLVEMENT IN SFM</scope>
    <scope>INVOLVEMENT IN OES</scope>
</reference>
<reference key="62">
    <citation type="journal article" date="2021" name="JCO Precis. Oncol.">
        <title>KRAS A146 mutations are associated with distinct clinical behavior in patients with colorectal liver metastases.</title>
        <authorList>
            <person name="van 't Erve I."/>
            <person name="Wesdorp N.J."/>
            <person name="Medina J.E."/>
            <person name="Ferreira L."/>
            <person name="Leal A."/>
            <person name="Huiskens J."/>
            <person name="Bolhuis K."/>
            <person name="van Waesberghe J.T.M."/>
            <person name="Swijnenburg R.J."/>
            <person name="van den Broek D."/>
            <person name="Velculescu V.E."/>
            <person name="Kazemier G."/>
            <person name="Punt C.J.A."/>
            <person name="Meijer G.A."/>
            <person name="Fijneman R.J.A."/>
        </authorList>
    </citation>
    <scope>VARIANTS ALA-12; ASP-12; CYS-12; VAL-12; ASN-117 AND THR-146</scope>
</reference>
<comment type="function">
    <text evidence="17 21 22 24 40">Ras proteins bind GDP/GTP and possess intrinsic GTPase activity (PubMed:20949621, PubMed:39809765). Plays an important role in the regulation of cell proliferation (PubMed:22711838, PubMed:23698361). Plays a role in promoting oncogenic events by inducing transcriptional silencing of tumor suppressor genes (TSGs) in colorectal cancer (CRC) cells in a ZNF304-dependent manner (PubMed:24623306).</text>
</comment>
<comment type="catalytic activity">
    <reaction evidence="17 40">
        <text>GTP + H2O = GDP + phosphate + H(+)</text>
        <dbReference type="Rhea" id="RHEA:19669"/>
        <dbReference type="ChEBI" id="CHEBI:15377"/>
        <dbReference type="ChEBI" id="CHEBI:15378"/>
        <dbReference type="ChEBI" id="CHEBI:37565"/>
        <dbReference type="ChEBI" id="CHEBI:43474"/>
        <dbReference type="ChEBI" id="CHEBI:58189"/>
        <dbReference type="EC" id="3.6.5.2"/>
    </reaction>
</comment>
<comment type="activity regulation">
    <text evidence="19 20 21 40">Alternates between an inactive form bound to GDP and an active form bound to GTP (PubMed:22566140, PubMed:22431598, PubMed:39809765). Activated by a guanine nucleotide-exchange factor (GEF) and inactivated by a GTPase-activating protein (GAP) (PubMed:22711838). Interaction with SOS1 promotes exchange of bound GDP to GTP (PubMed:22566140, PubMed:22431598, PubMed:39809765).</text>
</comment>
<comment type="subunit">
    <text evidence="1 16 19 22 23 28 32 34 35 36 37 38">Interacts with PHLPP (By similarity). Interacts (active GTP-bound form preferentially) with RGS14 (By similarity). Interacts (when farnesylated) with PDE6D; this promotes dissociation from the cell membrane (PubMed:23698361). Interacts with SOS1 (PubMed:22431598). Interacts (when farnesylated) with GPR31 (PubMed:28619714). Interacts with RAP1GDS1 (PubMed:20709748, PubMed:24415755). Interacts (active GTP-bound form) with both SHOC2 and PP1c (all isoforms) to form a tertiary complex; SHOC2 and PP1c preferably bind M-Ras/MRAS, but they also bind K-Ras/KRAS, N-Ras/NRAS and H-Ras/HRAS (PubMed:35768504, PubMed:35830882, PubMed:35831509, PubMed:36175670). Interacts (GTP-bound form) with MAPKAP1/SIN1; inhibiting K-Ras/KRAS activity (PubMed:34380736, PubMed:35522713).</text>
</comment>
<comment type="subunit">
    <molecule>Isoform 2B</molecule>
    <text evidence="28">Interacts with GPR31; in a farnelysation-dependent manner.</text>
</comment>
<comment type="interaction">
    <interactant intactId="EBI-367415">
        <id>P01116</id>
    </interactant>
    <interactant intactId="EBI-9383168">
        <id>Q96II5</id>
        <label>ARAF</label>
    </interactant>
    <organismsDiffer>false</organismsDiffer>
    <experiments>3</experiments>
</comment>
<comment type="interaction">
    <interactant intactId="EBI-367415">
        <id>P01116</id>
    </interactant>
    <interactant intactId="EBI-726414">
        <id>Q99755</id>
        <label>PIP5K1A</label>
    </interactant>
    <organismsDiffer>false</organismsDiffer>
    <experiments>9</experiments>
</comment>
<comment type="interaction">
    <interactant intactId="EBI-367415">
        <id>P01116</id>
    </interactant>
    <interactant intactId="EBI-365996">
        <id>P04049</id>
        <label>RAF1</label>
    </interactant>
    <organismsDiffer>false</organismsDiffer>
    <experiments>6</experiments>
</comment>
<comment type="interaction">
    <interactant intactId="EBI-367415">
        <id>P01116</id>
    </interactant>
    <interactant intactId="EBI-960081">
        <id>P50749</id>
        <label>RASSF2</label>
    </interactant>
    <organismsDiffer>false</organismsDiffer>
    <experiments>2</experiments>
</comment>
<comment type="interaction">
    <interactant intactId="EBI-367427">
        <id>P01116-2</id>
    </interactant>
    <interactant intactId="EBI-77613">
        <id>P05067</id>
        <label>APP</label>
    </interactant>
    <organismsDiffer>false</organismsDiffer>
    <experiments>3</experiments>
</comment>
<comment type="interaction">
    <interactant intactId="EBI-367427">
        <id>P01116-2</id>
    </interactant>
    <interactant intactId="EBI-34583813">
        <id>O00270</id>
        <label>GPR31</label>
    </interactant>
    <organismsDiffer>false</organismsDiffer>
    <experiments>4</experiments>
</comment>
<comment type="interaction">
    <interactant intactId="EBI-367427">
        <id>P01116-2</id>
    </interactant>
    <interactant intactId="EBI-367427">
        <id>P01116-2</id>
        <label>KRAS</label>
    </interactant>
    <organismsDiffer>false</organismsDiffer>
    <experiments>6</experiments>
</comment>
<comment type="interaction">
    <interactant intactId="EBI-367427">
        <id>P01116-2</id>
    </interactant>
    <interactant intactId="EBI-365996">
        <id>P04049</id>
        <label>RAF1</label>
    </interactant>
    <organismsDiffer>false</organismsDiffer>
    <experiments>3</experiments>
</comment>
<comment type="interaction">
    <interactant intactId="EBI-367427">
        <id>P01116-2</id>
    </interactant>
    <interactant intactId="EBI-602447">
        <id>Q04631</id>
        <label>Fnta</label>
    </interactant>
    <organismsDiffer>true</organismsDiffer>
    <experiments>3</experiments>
</comment>
<comment type="subcellular location">
    <subcellularLocation>
        <location evidence="19 22 29">Cell membrane</location>
        <topology evidence="29 56">Lipid-anchor</topology>
        <orientation evidence="56">Cytoplasmic side</orientation>
    </subcellularLocation>
    <subcellularLocation>
        <location evidence="29">Endomembrane system</location>
    </subcellularLocation>
    <subcellularLocation>
        <location evidence="22">Cytoplasm</location>
        <location evidence="22">Cytosol</location>
    </subcellularLocation>
</comment>
<comment type="subcellular location">
    <molecule>Isoform 2B</molecule>
    <subcellularLocation>
        <location evidence="28">Cell membrane</location>
        <topology evidence="59">Lipid-anchor</topology>
    </subcellularLocation>
</comment>
<comment type="alternative products">
    <event type="alternative splicing"/>
    <isoform>
        <id>P01116-1</id>
        <name>2A</name>
        <name evidence="51">K-Ras4A</name>
        <sequence type="displayed"/>
    </isoform>
    <isoform>
        <id>P01116-2</id>
        <id>P01118-1</id>
        <name>2B</name>
        <name>K-Ras4B</name>
        <sequence type="described" ref="VSP_011140 VSP_011141"/>
    </isoform>
    <text>Isoforms differ in the C-terminal region which is encoded by two alternative exons (IVA and IVB).</text>
</comment>
<comment type="PTM">
    <text evidence="21 47">Acetylation at Lys-104 prevents interaction with guanine nucleotide exchange factors (GEFs).</text>
</comment>
<comment type="PTM">
    <text evidence="29">Palmitoylated at Lys-182, Lys-184 and Lys-185 (PubMed:29239724). Palmitoylation on lysine residues is promoted by palmitoylation at Cys-180 (PubMed:29239724). Lysine-depalmitoylation by SIRT2 promotes its localization to endomembranes in endocytic pathways (PubMed:29239724).</text>
</comment>
<comment type="PTM">
    <text evidence="61 62">Ubiquitinated by the BCR(LZTR1) E3 ubiquitin ligase complex at Lys-170 in a non-degradative manner, leading to inhibit Ras signaling by decreasing Ras association with membranes.</text>
</comment>
<comment type="PTM">
    <text evidence="15">(Microbial infection) Glucosylated at Thr-35 by P.sordellii toxin TcsL.</text>
</comment>
<comment type="disease" evidence="46">
    <disease id="DI-01171">
        <name>Leukemia, acute myelogenous</name>
        <acronym>AML</acronym>
        <description>A subtype of acute leukemia, a cancer of the white blood cells. AML is a malignant disease of bone marrow characterized by maturational arrest of hematopoietic precursors at an early stage of development. Clonal expansion of myeloid blasts occurs in bone marrow, blood, and other tissue. Myelogenous leukemias develop from changes in cells that normally produce neutrophils, basophils, eosinophils and monocytes.</description>
        <dbReference type="MIM" id="601626"/>
    </disease>
    <text>The disease is caused by variants affecting the gene represented in this entry.</text>
</comment>
<comment type="disease" evidence="12">
    <disease id="DI-01851">
        <name>Leukemia, juvenile myelomonocytic</name>
        <acronym>JMML</acronym>
        <description>An aggressive pediatric myelodysplastic syndrome/myeloproliferative disorder characterized by malignant transformation in the hematopoietic stem cell compartment with proliferation of differentiated progeny. Patients have splenomegaly, enlarged lymph nodes, rashes, and hemorrhages.</description>
        <dbReference type="MIM" id="607785"/>
    </disease>
    <text>The disease is caused by variants affecting the gene represented in this entry.</text>
</comment>
<comment type="disease" evidence="7 9 11 13 14 17">
    <disease id="DI-02073">
        <name>Noonan syndrome 3</name>
        <acronym>NS3</acronym>
        <description>A form of Noonan syndrome, a disease characterized by short stature, facial dysmorphic features such as hypertelorism, a downward eyeslant and low-set posteriorly rotated ears, and a high incidence of congenital heart defects and hypertrophic cardiomyopathy. Other features can include a short neck with webbing or redundancy of skin, deafness, motor delay, variable intellectual deficits, multiple skeletal defects, cryptorchidism, and bleeding diathesis. Individuals with Noonan syndrome are at risk of juvenile myelomonocytic leukemia, a myeloproliferative disorder characterized by excessive production of myelomonocytic cells.</description>
        <dbReference type="MIM" id="609942"/>
    </disease>
    <text>The disease is caused by variants affecting the gene represented in this entry.</text>
</comment>
<comment type="disease" evidence="2 30 44">
    <disease id="DI-02971">
        <name>Gastric cancer</name>
        <acronym>GASC</acronym>
        <description>A malignant disease which starts in the stomach, can spread to the esophagus or the small intestine, and can extend through the stomach wall to nearby lymph nodes and organs. It also can metastasize to other parts of the body. The term gastric cancer or gastric carcinoma refers to adenocarcinoma of the stomach that accounts for most of all gastric malignant tumors. Two main histologic types are recognized, diffuse type and intestinal type carcinomas. Diffuse tumors are poorly differentiated infiltrating lesions, resulting in thickening of the stomach. In contrast, intestinal tumors are usually exophytic, often ulcerating, and associated with intestinal metaplasia of the stomach, most often observed in sporadic disease.</description>
        <dbReference type="MIM" id="613659"/>
    </disease>
    <text>The disease is caused by variants affecting the gene represented in this entry.</text>
</comment>
<comment type="disease">
    <text evidence="5">Defects in KRAS are a cause of pylocytic astrocytoma (PA). Pylocytic astrocytomas are neoplasms of the brain and spinal cord derived from glial cells which vary from histologically benign forms to highly anaplastic and malignant tumors.</text>
</comment>
<comment type="disease" evidence="6 7 11 17 18">
    <disease id="DI-03779">
        <name>Cardiofaciocutaneous syndrome 2</name>
        <acronym>CFC2</acronym>
        <description>A form of cardiofaciocutaneous syndrome, a multiple congenital anomaly disorder characterized by a distinctive facial appearance, heart defects and intellectual disability. Heart defects include pulmonic stenosis, atrial septal defects and hypertrophic cardiomyopathy. Some affected individuals present with ectodermal abnormalities such as sparse, friable hair, hyperkeratotic skin lesions and a generalized ichthyosis-like condition. Typical facial features are similar to Noonan syndrome. They include high forehead with bitemporal constriction, hypoplastic supraorbital ridges, downslanting palpebral fissures, a depressed nasal bridge, and posteriorly angulated ears with prominent helices. CFC2 patients often do not have the skin abnormalities, such as ichthyosis, hyperkeratosis, and hemangioma observed in CFC1.</description>
        <dbReference type="MIM" id="615278"/>
    </disease>
    <text>The disease is caused by variants affecting the gene represented in this entry.</text>
</comment>
<comment type="disease">
    <text evidence="2 4 8 24 30 39 41 43 44">KRAS mutations are involved in cancer development.</text>
</comment>
<comment type="disease" evidence="25 26 31">
    <disease id="DI-05645">
        <name>Oculoectodermal syndrome</name>
        <acronym>OES</acronym>
        <description>A syndrome characterized by the association of epibulbar dermoids and aplasia cutis congenita. Affected individuals show multiple, asymmetric, atrophic, non-scarring and hairless regions that may be associated with hamartomas. Ectodermal changes include linear hyperpigmentation that may follow the lines of Blaschko and rarely epidermal nevus-like lesions. Epibulbar dermoids may be uni-or bilateral. Additional ocular anomalies such as skin tags of the upper eyelid, rarely optic nerve or retinal changes, and microphthalmia can be present. The phenotypic expression is highly variable, and various other abnormalities have occasionally been reported including growth failure, lymphedema, cardiovascular defects, as well as neurodevelopmental symptoms like developmental delay, epilepsy, learning difficulties, and behavioral abnormalities. Benign tumor-like lesions such as nonossifying fibromas of the long bones and giant cell granulomas of the jaws have repeatedly been observed and appear to be age-dependent, becoming a common manifestation in individuals aged 5 years or older.</description>
        <dbReference type="MIM" id="600268"/>
    </disease>
    <text>The disease is caused by variants affecting the gene represented in this entry.</text>
</comment>
<comment type="disease" evidence="31">
    <disease id="DI-03512">
        <name>Schimmelpenning-Feuerstein-Mims syndrome</name>
        <acronym>SFM</acronym>
        <description>A disease characterized by sebaceous nevi, often on the face, associated with variable ipsilateral abnormalities of the central nervous system, ocular anomalies, and skeletal defects. Many oral manifestations have been reported, not only including hypoplastic and malformed teeth, and mucosal papillomatosis, but also ankyloglossia, hemihyperplastic tongue, intraoral nevus, giant cell granuloma, ameloblastoma, bone cysts, follicular cysts, oligodontia, and odontodysplasia. Sebaceous nevi follow the lines of Blaschko and these can continue as linear intraoral lesions, as in mucosal papillomatosis.</description>
        <dbReference type="MIM" id="163200"/>
    </disease>
    <text>The disease is caused by variants affecting the gene represented in this entry.</text>
</comment>
<comment type="similarity">
    <text evidence="55">Belongs to the small GTPase superfamily. Ras family.</text>
</comment>
<comment type="online information" name="Atlas of Genetics and Cytogenetics in Oncology and Haematology">
    <link uri="https://atlasgeneticsoncology.org/gene/91/KRAS"/>
</comment>
<organism>
    <name type="scientific">Homo sapiens</name>
    <name type="common">Human</name>
    <dbReference type="NCBI Taxonomy" id="9606"/>
    <lineage>
        <taxon>Eukaryota</taxon>
        <taxon>Metazoa</taxon>
        <taxon>Chordata</taxon>
        <taxon>Craniata</taxon>
        <taxon>Vertebrata</taxon>
        <taxon>Euteleostomi</taxon>
        <taxon>Mammalia</taxon>
        <taxon>Eutheria</taxon>
        <taxon>Euarchontoglires</taxon>
        <taxon>Primates</taxon>
        <taxon>Haplorrhini</taxon>
        <taxon>Catarrhini</taxon>
        <taxon>Hominidae</taxon>
        <taxon>Homo</taxon>
    </lineage>
</organism>
<sequence>MTEYKLVVVGAGGVGKSALTIQLIQNHFVDEYDPTIEDSYRKQVVIDGETCLLDILDTAGQEEYSAMRDQYMRTGEGFLCVFAINNTKSFEDIHHYREQIKRVKDSEDVPMVLVGNKCDLPSRTVDTKQAQDLARSYGIPFIETSAKTRQRVEDAFYTLVREIRQYRLKKISKEEKTPGCVKIKKCIIM</sequence>
<proteinExistence type="evidence at protein level"/>
<gene>
    <name type="primary">KRAS</name>
    <name type="synonym">KRAS2</name>
    <name type="synonym">RASK2</name>
</gene>
<feature type="chain" id="PRO_0000082641" description="GTPase KRas">
    <location>
        <begin position="1"/>
        <end position="186"/>
    </location>
</feature>
<feature type="initiator methionine" description="Removed; alternate" evidence="47">
    <location>
        <position position="1"/>
    </location>
</feature>
<feature type="chain" id="PRO_0000326480" description="GTPase KRas, N-terminally processed">
    <location>
        <begin position="2"/>
        <end position="186"/>
    </location>
</feature>
<feature type="propeptide" id="PRO_0000281291" description="Removed in mature form" evidence="58">
    <location>
        <begin position="187"/>
        <end position="189"/>
    </location>
</feature>
<feature type="region of interest" description="Hypervariable region">
    <location>
        <begin position="166"/>
        <end position="185"/>
    </location>
</feature>
<feature type="short sequence motif" description="Effector region">
    <location>
        <begin position="32"/>
        <end position="40"/>
    </location>
</feature>
<feature type="binding site" evidence="19 20 63 64">
    <location>
        <begin position="10"/>
        <end position="18"/>
    </location>
    <ligand>
        <name>GTP</name>
        <dbReference type="ChEBI" id="CHEBI:37565"/>
    </ligand>
</feature>
<feature type="binding site" evidence="19 20 63 64">
    <location>
        <begin position="29"/>
        <end position="35"/>
    </location>
    <ligand>
        <name>GTP</name>
        <dbReference type="ChEBI" id="CHEBI:37565"/>
    </ligand>
</feature>
<feature type="binding site" evidence="19 20 63 64">
    <location>
        <begin position="59"/>
        <end position="60"/>
    </location>
    <ligand>
        <name>GTP</name>
        <dbReference type="ChEBI" id="CHEBI:37565"/>
    </ligand>
</feature>
<feature type="binding site" evidence="19 20 63 64">
    <location>
        <begin position="116"/>
        <end position="119"/>
    </location>
    <ligand>
        <name>GTP</name>
        <dbReference type="ChEBI" id="CHEBI:37565"/>
    </ligand>
</feature>
<feature type="modified residue" description="N-acetylmethionine; in GTPase KRas; alternate" evidence="47">
    <location>
        <position position="1"/>
    </location>
</feature>
<feature type="modified residue" description="N-acetylthreonine; in GTPase KRas, N-terminally processed" evidence="47">
    <location>
        <position position="2"/>
    </location>
</feature>
<feature type="modified residue" description="N6-acetyllysine" evidence="21">
    <location>
        <position position="104"/>
    </location>
</feature>
<feature type="modified residue" description="Cysteine methyl ester" evidence="27 65 66">
    <location>
        <position position="186"/>
    </location>
</feature>
<feature type="lipid moiety-binding region" description="S-palmitoyl cysteine" evidence="60">
    <location>
        <position position="180"/>
    </location>
</feature>
<feature type="lipid moiety-binding region" description="N6-palmitoyl lysine" evidence="29">
    <location>
        <position position="182"/>
    </location>
</feature>
<feature type="lipid moiety-binding region" description="N6-palmitoyl lysine" evidence="60">
    <location>
        <position position="184"/>
    </location>
</feature>
<feature type="lipid moiety-binding region" description="N6-palmitoyl lysine" evidence="60">
    <location>
        <position position="185"/>
    </location>
</feature>
<feature type="lipid moiety-binding region" description="S-farnesyl cysteine" evidence="27 57 65 66">
    <location>
        <position position="186"/>
    </location>
</feature>
<feature type="glycosylation site" description="(Microbial infection) O-linked (Glc) threonine; by P.sordellii toxin TcsL" evidence="15">
    <location>
        <position position="35"/>
    </location>
</feature>
<feature type="cross-link" description="Glycyl lysine isopeptide (Lys-Gly) (interchain with G-Cter in ubiquitin)" evidence="61">
    <location>
        <position position="170"/>
    </location>
</feature>
<feature type="splice variant" id="VSP_011140" description="In isoform 2B." evidence="49 50 52 53 54">
    <original>RVE</original>
    <variation>GVD</variation>
    <location>
        <begin position="151"/>
        <end position="153"/>
    </location>
</feature>
<feature type="splice variant" id="VSP_011141" description="In isoform 2B." evidence="49 50 52 53 54">
    <original>QYRLKKISKEEKTPGCVKIKKCIIM</original>
    <variation>KHKEKMSKDGKKKKKKSKTKCVIM</variation>
    <location>
        <begin position="165"/>
        <end position="189"/>
    </location>
</feature>
<feature type="sequence variant" id="VAR_065144" description="In NS3; dbSNP:rs193929331." evidence="13">
    <original>K</original>
    <variation>E</variation>
    <location>
        <position position="5"/>
    </location>
</feature>
<feature type="sequence variant" id="VAR_064849" description="In GASC; found also in a patient with Costello syndrome; exhibits only minor alterations in its in vitro biochemical behavior compared to wild-type protein; dbSNP:rs104894361." evidence="2">
    <original>K</original>
    <variation>N</variation>
    <location>
        <position position="5"/>
    </location>
</feature>
<feature type="sequence variant" id="VAR_034601" description="In AML; expression in 3T3 cell causes cellular transformation; expression in COS cells activates the Ras-MAPK signaling pathway; lower GTPase activity; faster GDP dissociation rate." evidence="46">
    <original>G</original>
    <variation>GG</variation>
    <location>
        <position position="10"/>
    </location>
</feature>
<feature type="sequence variant" id="VAR_036305" description="In colorectal cancer samples; somatic mutation; dbSNP:rs121913529." evidence="10 33">
    <original>G</original>
    <variation>A</variation>
    <location>
        <position position="12"/>
    </location>
</feature>
<feature type="sequence variant" id="VAR_006839" description="In lung carcinoma; somatic mutation; also found in metastatic colorectal cancer; dbSNP:rs121913530." evidence="8 33 42">
    <original>G</original>
    <variation>C</variation>
    <location>
        <position position="12"/>
    </location>
</feature>
<feature type="sequence variant" id="VAR_016026" description="In GASC, JMML and SFM; somatic mutation; also found in pancreatic carcinoma and lung carcinoma; also found in metastatic colorectal cancer; dbSNP:rs121913529." evidence="8 10 12 31 33 44 45">
    <original>G</original>
    <variation>D</variation>
    <location>
        <position position="12"/>
    </location>
</feature>
<feature type="sequence variant" id="VAR_016027" description="In lung cancer and bladder cancer; somatic mutation; dbSNP:rs121913530." evidence="43">
    <original>G</original>
    <variation>R</variation>
    <location>
        <position position="12"/>
    </location>
</feature>
<feature type="sequence variant" id="VAR_016028" description="In GASC and JMML; also found in lung carcinoma; somatic mutation; dbSNP:rs121913530." evidence="8 10 12 44">
    <original>G</original>
    <variation>S</variation>
    <location>
        <position position="12"/>
    </location>
</feature>
<feature type="sequence variant" id="VAR_006840" description="In GASC; also found in lung carcinoma, pancreatic carcinoma and colon cancer; also found in metastatic colorectal cancer; somatic mutation; it is constitutively activated and stimulates transcription activation of tumor suppressor genes in non-transformed fibroblasts; promotes GTP binding; dbSNP:rs121913529." evidence="2 8 10 21 24 30 33 40 41 45">
    <original>G</original>
    <variation>V</variation>
    <location>
        <position position="12"/>
    </location>
</feature>
<feature type="sequence variant" id="VAR_016029" description="In GASC, JMML and OES; also found in a breast carcinoma cell line; somatic mutation; dbSNP:rs112445441." evidence="2 10 12 25 39">
    <original>G</original>
    <variation>D</variation>
    <location>
        <position position="13"/>
    </location>
</feature>
<feature type="sequence variant" id="VAR_065145" description="In pylocytic astrocytoma; somatic mutation; increase activation of the Ras pathway; dbSNP:rs121913535." evidence="5">
    <original>G</original>
    <variation>R</variation>
    <location>
        <position position="13"/>
    </location>
</feature>
<feature type="sequence variant" id="VAR_026109" description="In NS3; affects activity and impairs responsiveness to GTPase activating proteins; characterized by a strong increase of both intrinsic and guanine nucleotide exchanged factor-catalyzed nucleotide exchange leading to an increased level of the activated state; dbSNP:rs104894365." evidence="7">
    <original>V</original>
    <variation>I</variation>
    <location>
        <position position="14"/>
    </location>
</feature>
<feature type="sequence variant" id="VAR_083261" description="In OES; somatic mutation; dbSNP:rs121913538." evidence="25">
    <original>L</original>
    <variation>F</variation>
    <location>
        <position position="19"/>
    </location>
</feature>
<feature type="sequence variant" id="VAR_064850" description="In CFC2; exhibits an increase in intrinsic and guanine nucleotide exchange factor catalyzed nucleotide exchange in combination with an impaired GTPase-activating protein-stimulated GTP hydrolysis but functional in interaction with effectors; dbSNP:rs121913236." evidence="11 17">
    <original>Q</original>
    <variation>E</variation>
    <location>
        <position position="22"/>
    </location>
</feature>
<feature type="sequence variant" id="VAR_064851" description="In NS3; impairs GTPase-activating protein stimulated GTP hydrolysis with unaffected intrinsic functions and a virtually functional effector interaction; dbSNP:rs727503110." evidence="11">
    <original>Q</original>
    <variation>R</variation>
    <location>
        <position position="22"/>
    </location>
</feature>
<feature type="sequence variant" id="VAR_064852" description="In NS3; characterized by a defective GTPase-activating protein sensitivity and a strongly reduced interaction with effectors; dbSNP:rs104894366." evidence="11">
    <original>P</original>
    <variation>L</variation>
    <location>
        <position position="34"/>
    </location>
</feature>
<feature type="sequence variant" id="VAR_064853" description="In NS3; dbSNP:rs104894366." evidence="11">
    <original>P</original>
    <variation>Q</variation>
    <location>
        <position position="34"/>
    </location>
</feature>
<feature type="sequence variant" id="VAR_026110" description="In CFC2; characterized by a defective GTPase-activating protein sensitivity and a strongly reduced interaction with effectors; dbSNP:rs104894366." evidence="7 17">
    <original>P</original>
    <variation>R</variation>
    <location>
        <position position="34"/>
    </location>
</feature>
<feature type="sequence variant" id="VAR_064854" description="In NS3; dbSNP:rs727503109." evidence="11">
    <original>I</original>
    <variation>M</variation>
    <location>
        <position position="36"/>
    </location>
</feature>
<feature type="sequence variant" id="VAR_026111" description="In NS3; affects activity and impairs responsiveness to GTPase activating proteins; exhibits only minor alterations in its in vitro biochemical behavior compared to wild-type protein; dbSNP:rs104894364." evidence="7 14">
    <original>T</original>
    <variation>I</variation>
    <location>
        <position position="58"/>
    </location>
</feature>
<feature type="sequence variant" id="VAR_016030" description="In GASC; also found in bladder cancer; somatic mutation; dbSNP:rs121913528." evidence="2 4">
    <original>A</original>
    <variation>T</variation>
    <location>
        <position position="59"/>
    </location>
</feature>
<feature type="sequence variant" id="VAR_026112" description="In CFC2; characterized by a defective GTPase-activating protein sensitivity and a strongly reduced interaction with effectors; dbSNP:rs104894359." evidence="6 17">
    <original>G</original>
    <variation>R</variation>
    <location>
        <position position="60"/>
    </location>
</feature>
<feature type="sequence variant" id="VAR_065146" description="In NS3; dbSNP:rs104894359." evidence="14">
    <original>G</original>
    <variation>S</variation>
    <location>
        <position position="60"/>
    </location>
</feature>
<feature type="sequence variant" id="VAR_006841" description="In lung carcinoma; dbSNP:rs17851045." evidence="3 8 48">
    <original>Q</original>
    <variation>H</variation>
    <location>
        <position position="61"/>
    </location>
</feature>
<feature type="sequence variant" id="VAR_036306" description="In a colorectal cancer sample; somatic mutation; promotes interaction with SHOC2 and PP1C; dbSNP:rs121913240." evidence="10 36 37">
    <original>Q</original>
    <variation>R</variation>
    <location>
        <position position="61"/>
    </location>
</feature>
<feature type="sequence variant" id="VAR_069784" description="In CFC2; dbSNP:rs387907205." evidence="18">
    <original>Y</original>
    <variation>H</variation>
    <location>
        <position position="71"/>
    </location>
</feature>
<feature type="sequence variant" id="VAR_036307" description="In colorectal cancer samples; somatic mutation; dbSNP:rs770248150." evidence="10 33">
    <original>K</original>
    <variation>N</variation>
    <location>
        <position position="117"/>
    </location>
</feature>
<feature type="sequence variant" id="VAR_036308" description="In OES; somatic mutation; also found in colorectal cancer samples; dbSNP:rs121913527." evidence="10 26 31 33">
    <original>A</original>
    <variation>T</variation>
    <location>
        <position position="146"/>
    </location>
</feature>
<feature type="sequence variant" id="VAR_083262" description="In OES; somatic mutation; dbSNP:rs1057519725." evidence="26 31">
    <original>A</original>
    <variation>V</variation>
    <location>
        <position position="146"/>
    </location>
</feature>
<feature type="sequence variant" id="VAR_069785" description="In CFC2; dbSNP:rs387907206." evidence="18">
    <original>K</original>
    <variation>E</variation>
    <location>
        <position position="147"/>
    </location>
</feature>
<feature type="mutagenesis site" description="Decreased interaction with MAPKAP1/SIN1." evidence="32">
    <original>D</original>
    <variation>A</variation>
    <location>
        <position position="38"/>
    </location>
</feature>
<feature type="mutagenesis site" description="Decreased interaction with MAPKAP1/SIN1." evidence="32">
    <original>Y</original>
    <variation>A</variation>
    <location>
        <position position="40"/>
    </location>
</feature>
<feature type="mutagenesis site" description="Promotes GTP binding." evidence="40">
    <original>Q</original>
    <variation>L</variation>
    <location>
        <position position="61"/>
    </location>
</feature>
<feature type="mutagenesis site" description="Abolished palmitoylation on Cys; reduced palmitoylation on Lys residues." evidence="29">
    <original>C</original>
    <variation>S</variation>
    <location>
        <position position="180"/>
    </location>
</feature>
<feature type="mutagenesis site" description="In K-Ras-3KR; abolished lysine-palmitoylation." evidence="29">
    <original>KIKK</original>
    <variation>RIRR</variation>
    <location>
        <begin position="182"/>
        <end position="185"/>
    </location>
</feature>
<feature type="strand" evidence="79">
    <location>
        <begin position="3"/>
        <end position="9"/>
    </location>
</feature>
<feature type="strand" evidence="76">
    <location>
        <begin position="12"/>
        <end position="14"/>
    </location>
</feature>
<feature type="helix" evidence="79">
    <location>
        <begin position="16"/>
        <end position="25"/>
    </location>
</feature>
<feature type="strand" evidence="78">
    <location>
        <begin position="28"/>
        <end position="32"/>
    </location>
</feature>
<feature type="turn" evidence="77">
    <location>
        <begin position="34"/>
        <end position="36"/>
    </location>
</feature>
<feature type="strand" evidence="79">
    <location>
        <begin position="38"/>
        <end position="46"/>
    </location>
</feature>
<feature type="strand" evidence="79">
    <location>
        <begin position="49"/>
        <end position="57"/>
    </location>
</feature>
<feature type="helix" evidence="72">
    <location>
        <begin position="60"/>
        <end position="62"/>
    </location>
</feature>
<feature type="helix" evidence="79">
    <location>
        <begin position="66"/>
        <end position="73"/>
    </location>
</feature>
<feature type="strand" evidence="79">
    <location>
        <begin position="76"/>
        <end position="83"/>
    </location>
</feature>
<feature type="helix" evidence="79">
    <location>
        <begin position="87"/>
        <end position="91"/>
    </location>
</feature>
<feature type="helix" evidence="79">
    <location>
        <begin position="93"/>
        <end position="104"/>
    </location>
</feature>
<feature type="strand" evidence="75">
    <location>
        <begin position="105"/>
        <end position="107"/>
    </location>
</feature>
<feature type="strand" evidence="79">
    <location>
        <begin position="111"/>
        <end position="116"/>
    </location>
</feature>
<feature type="strand" evidence="71">
    <location>
        <begin position="120"/>
        <end position="122"/>
    </location>
</feature>
<feature type="helix" evidence="79">
    <location>
        <begin position="127"/>
        <end position="137"/>
    </location>
</feature>
<feature type="strand" evidence="79">
    <location>
        <begin position="141"/>
        <end position="143"/>
    </location>
</feature>
<feature type="turn" evidence="79">
    <location>
        <begin position="146"/>
        <end position="148"/>
    </location>
</feature>
<feature type="helix" evidence="79">
    <location>
        <begin position="152"/>
        <end position="164"/>
    </location>
</feature>
<feature type="helix" evidence="73">
    <location>
        <begin position="169"/>
        <end position="172"/>
    </location>
</feature>
<feature type="strand" evidence="70">
    <location>
        <begin position="175"/>
        <end position="177"/>
    </location>
</feature>
<feature type="strand" evidence="74">
    <location>
        <begin position="182"/>
        <end position="184"/>
    </location>
</feature>
<feature type="sequence variant" id="VAR_082908" description="In NS3; dbSNP:rs104894367." evidence="55">
    <original>V</original>
    <variation>G</variation>
    <location sequence="P01116-2">
        <position position="152"/>
    </location>
</feature>
<feature type="sequence variant" id="VAR_082909" description="In CFC2 and NS3; exhibits only minor alterations in its in vitro biochemical behavior compared to wild-type protein; dbSNP:rs104894360." evidence="55">
    <original>D</original>
    <variation>V</variation>
    <location sequence="P01116-2">
        <position position="153"/>
    </location>
</feature>
<feature type="sequence variant" id="VAR_082910" description="In NS3; the patient also has features of cardiofaciocutaneous syndrome; dbSNP:rs397517042." evidence="55">
    <original>F</original>
    <variation>I</variation>
    <location sequence="P01116-2">
        <position position="156"/>
    </location>
</feature>
<feature type="sequence variant" id="VAR_082911" description="Found in a patient with Costello syndrome; exhibits an increase in intrinsic and guanine nucleotide exchange factor catalyzed nucleotide exchange in combination with an impaired GTPase-activating protein-stimulated GTP hydrolysis but functional in interaction with effectors; dbSNP:rs104894362." evidence="55">
    <original>F</original>
    <variation>L</variation>
    <location sequence="P01116-2">
        <position position="156"/>
    </location>
</feature>
<feature type="mutagenesis site" description="Abolished interaction with GPR131." evidence="28">
    <original>C</original>
    <variation>S</variation>
    <location sequence="P01116-2">
        <position position="185"/>
    </location>
</feature>
<accession>P01116</accession>
<accession>A8K8Z5</accession>
<accession>B0LPF9</accession>
<accession>P01118</accession>
<accession>Q96D10</accession>